<organism>
    <name type="scientific">Homo sapiens</name>
    <name type="common">Human</name>
    <dbReference type="NCBI Taxonomy" id="9606"/>
    <lineage>
        <taxon>Eukaryota</taxon>
        <taxon>Metazoa</taxon>
        <taxon>Chordata</taxon>
        <taxon>Craniata</taxon>
        <taxon>Vertebrata</taxon>
        <taxon>Euteleostomi</taxon>
        <taxon>Mammalia</taxon>
        <taxon>Eutheria</taxon>
        <taxon>Euarchontoglires</taxon>
        <taxon>Primates</taxon>
        <taxon>Haplorrhini</taxon>
        <taxon>Catarrhini</taxon>
        <taxon>Hominidae</taxon>
        <taxon>Homo</taxon>
    </lineage>
</organism>
<comment type="function">
    <text evidence="8 9 17 19 26 27 32 40 42 44 48 53 55 57 58">E3 ubiquitin-protein ligase that specifically mediates the formation of 'Lys-6'-linked polyubiquitin chains and plays a central role in DNA repair by facilitating cellular responses to DNA damage (PubMed:10500182, PubMed:12887909, PubMed:12890688, PubMed:14976165, PubMed:16818604, PubMed:17525340, PubMed:19261748). It is unclear whether it also mediates the formation of other types of polyubiquitin chains (PubMed:12890688). The BRCA1-BARD1 heterodimer coordinates a diverse range of cellular pathways such as DNA damage repair, ubiquitination and transcriptional regulation to maintain genomic stability (PubMed:12890688, PubMed:14976165, PubMed:20351172). Regulates centrosomal microtubule nucleation (PubMed:18056443). Required for appropriate cell cycle arrests after ionizing irradiation in both the S-phase and the G2 phase of the cell cycle (PubMed:10724175, PubMed:11836499, PubMed:12183412, PubMed:19261748). Required for FANCD2 targeting to sites of DNA damage (PubMed:12887909). Inhibits lipid synthesis by binding to inactive phosphorylated ACACA and preventing its dephosphorylation (PubMed:16326698). Contributes to homologous recombination repair (HRR) via its direct interaction with PALB2, fine-tunes recombinational repair partly through its modulatory role in the PALB2-dependent loading of BRCA2-RAD51 repair machinery at DNA breaks (PubMed:19369211). Component of the BRCA1-RBBP8 complex which regulates CHEK1 activation and controls cell cycle G2/M checkpoints on DNA damage via BRCA1-mediated ubiquitination of RBBP8 (PubMed:16818604). Acts as a transcriptional activator (PubMed:20160719).</text>
</comment>
<comment type="catalytic activity">
    <reaction evidence="8 26 27 42 48 58">
        <text>S-ubiquitinyl-[E2 ubiquitin-conjugating enzyme]-L-cysteine + [acceptor protein]-L-lysine = [E2 ubiquitin-conjugating enzyme]-L-cysteine + N(6)-ubiquitinyl-[acceptor protein]-L-lysine.</text>
        <dbReference type="EC" id="2.3.2.27"/>
    </reaction>
</comment>
<comment type="activity regulation">
    <text evidence="48">The E3 ubiquitin-protein ligase activity is inhibited by phosphorylation by AURKA. Activity is increased by phosphatase treatment.</text>
</comment>
<comment type="pathway">
    <text>Protein modification; protein ubiquitination.</text>
</comment>
<comment type="subunit">
    <text evidence="9 10 12 13 14 15 16 17 18 21 22 27 29 32 34 35 37 39 40 41 42 44 45 46 50 52 53 54 55 56 57 58 62 63 64 66 68 69 70 73 85 87 89">Heterodimer with BARD1 (PubMed:11573085, PubMed:12890688, PubMed:14976165). Part of the BRCA1-associated genome surveillance complex (BASC), which contains BRCA1, MSH2, MSH6, MLH1, ATM, BLM, PMS2 and the MRE11-RAD50-NBN protein (MRN) complex (PubMed:10783165). This association could be a dynamic process changing throughout the cell cycle and within subnuclear domains (PubMed:10783165). Component of the BRCA1-A complex, at least composed of BRCA1, BARD1, UIMC1/RAP80, ABRAXAS1, BRCC3/BRCC36, BABAM2 and BABAM1/NBA1 (PubMed:19261746, PubMed:19261748, PubMed:19261749, PubMed:20351172). Interacts (via the BRCT domains) with ABRAXAS1 (phosphorylated form); this is important for recruitment to sites of DNA damage (PubMed:17525340, PubMed:17643121, PubMed:17643122, PubMed:23269703, PubMed:24316840, PubMed:26778126). Can form a heterotetramer with two molecules of ABRAXAS1 (phosphorylated form) (PubMed:26778126). Component of the BRCA1-RBBP8 complex (PubMed:16101277). Interacts (via the BRCT domains) with RBBP8 ('Ser-327' phosphorylated form); the interaction ubiquitinates RBBP8, regulates CHEK1 activation, and involves RBBP8 in BRCA1-dependent G2/M checkpoint control on DNA damage (PubMed:16818604, PubMed:9811458). Associates with RNA polymerase II holoenzyme (PubMed:9662397). Interacts with SMC1A, NELFB, DCLRE1C, CLSPN (PubMed:11739404, PubMed:11877377, PubMed:15096610, PubMed:15456891). Interacts with CHEK1, CHEK2, BAP1, BRCC3, UBXN1 and PCLAF (PubMed:10724175, PubMed:11836499, PubMed:14636569, PubMed:20351172, PubMed:21673012). Interacts (via BRCT domains) with BRIP1 (phosphorylated form) (PubMed:11301010, PubMed:15133502, PubMed:21473589). Interacts with FANCD2 (ubiquitinated form) (PubMed:11239454). Interacts with H2AX (phosphorylated on 'Ser-140') (PubMed:12419185). Interacts (via the BRCT domains) with ACACA (phosphorylated form); the interaction prevents dephosphorylation of ACACA (PubMed:12360400, PubMed:16326698, PubMed:16698035, PubMed:18452305). Part of a BRCA complex containing BRCA1, BRCA2 and PALB2 (PubMed:19369211). Interacts directly with PALB2; the interaction is essential for its function in HRR (PubMed:19369211, PubMed:28319063). Interacts directly with BRCA2; the interaction occurs only in the presence of PALB2 which serves as the bridging protein (PubMed:19369211). Interacts (via the BRCT domains) with LMO4; the interaction represses the transcriptional activity of BRCA1 (PubMed:11751867). Interacts (via the BRCT domains) with CCAR2 (via N-terminus); the interaction represses the transcriptional activator activity of BRCA1 (PubMed:20160719). Interacts with EXD2 (PubMed:26807646). Interacts (via C-terminus) with DHX9; this interaction is direct and links BRCA1 to the RNA polymerase II holoenzyme (PubMed:9662397). Interacts with DNA helicase ZGRF1; the interaction is increased following DNA damage induction (PubMed:34552057).</text>
</comment>
<comment type="interaction">
    <interactant intactId="EBI-349905">
        <id>P38398</id>
    </interactant>
    <interactant intactId="EBI-1263451">
        <id>Q6UWZ7</id>
        <label>ABRAXAS1</label>
    </interactant>
    <organismsDiffer>false</organismsDiffer>
    <experiments>16</experiments>
</comment>
<comment type="interaction">
    <interactant intactId="EBI-349905">
        <id>P38398</id>
    </interactant>
    <interactant intactId="EBI-717681">
        <id>Q13085</id>
        <label>ACACA</label>
    </interactant>
    <organismsDiffer>false</organismsDiffer>
    <experiments>2</experiments>
</comment>
<comment type="interaction">
    <interactant intactId="EBI-349905">
        <id>P38398</id>
    </interactant>
    <interactant intactId="EBI-1791447">
        <id>Q92560</id>
        <label>BAP1</label>
    </interactant>
    <organismsDiffer>false</organismsDiffer>
    <experiments>3</experiments>
</comment>
<comment type="interaction">
    <interactant intactId="EBI-349905">
        <id>P38398</id>
    </interactant>
    <interactant intactId="EBI-473181">
        <id>Q99728</id>
        <label>BARD1</label>
    </interactant>
    <organismsDiffer>false</organismsDiffer>
    <experiments>19</experiments>
</comment>
<comment type="interaction">
    <interactant intactId="EBI-349905">
        <id>P38398</id>
    </interactant>
    <interactant intactId="EBI-349900">
        <id>Q7Z569</id>
        <label>BRAP</label>
    </interactant>
    <organismsDiffer>false</organismsDiffer>
    <experiments>3</experiments>
</comment>
<comment type="interaction">
    <interactant intactId="EBI-349905">
        <id>P38398</id>
    </interactant>
    <interactant intactId="EBI-10826195">
        <id>Q6PJG6</id>
        <label>BRAT1</label>
    </interactant>
    <organismsDiffer>false</organismsDiffer>
    <experiments>6</experiments>
</comment>
<comment type="interaction">
    <interactant intactId="EBI-349905">
        <id>P38398</id>
    </interactant>
    <interactant intactId="EBI-349905">
        <id>P38398</id>
        <label>BRCA1</label>
    </interactant>
    <organismsDiffer>false</organismsDiffer>
    <experiments>4</experiments>
</comment>
<comment type="interaction">
    <interactant intactId="EBI-349905">
        <id>P38398</id>
    </interactant>
    <interactant intactId="EBI-3509650">
        <id>Q9BX63</id>
        <label>BRIP1</label>
    </interactant>
    <organismsDiffer>false</organismsDiffer>
    <experiments>29</experiments>
</comment>
<comment type="interaction">
    <interactant intactId="EBI-349905">
        <id>P38398</id>
    </interactant>
    <interactant intactId="EBI-375001">
        <id>P24385</id>
        <label>CCND1</label>
    </interactant>
    <organismsDiffer>false</organismsDiffer>
    <experiments>3</experiments>
</comment>
<comment type="interaction">
    <interactant intactId="EBI-349905">
        <id>P38398</id>
    </interactant>
    <interactant intactId="EBI-519526">
        <id>P24864</id>
        <label>CCNE1</label>
    </interactant>
    <organismsDiffer>false</organismsDiffer>
    <experiments>2</experiments>
</comment>
<comment type="interaction">
    <interactant intactId="EBI-349905">
        <id>P38398</id>
    </interactant>
    <interactant intactId="EBI-974488">
        <id>O14757</id>
        <label>CHEK1</label>
    </interactant>
    <organismsDiffer>false</organismsDiffer>
    <experiments>3</experiments>
</comment>
<comment type="interaction">
    <interactant intactId="EBI-349905">
        <id>P38398</id>
    </interactant>
    <interactant intactId="EBI-78473">
        <id>P03372</id>
        <label>ESR1</label>
    </interactant>
    <organismsDiffer>false</organismsDiffer>
    <experiments>14</experiments>
</comment>
<comment type="interaction">
    <interactant intactId="EBI-349905">
        <id>P38398</id>
    </interactant>
    <interactant intactId="EBI-78505">
        <id>Q92731</id>
        <label>ESR2</label>
    </interactant>
    <organismsDiffer>false</organismsDiffer>
    <experiments>4</experiments>
</comment>
<comment type="interaction">
    <interactant intactId="EBI-349905">
        <id>P38398</id>
    </interactant>
    <interactant intactId="EBI-701903">
        <id>Q14192</id>
        <label>FHL2</label>
    </interactant>
    <organismsDiffer>false</organismsDiffer>
    <experiments>6</experiments>
</comment>
<comment type="interaction">
    <interactant intactId="EBI-349905">
        <id>P38398</id>
    </interactant>
    <interactant intactId="EBI-359622">
        <id>P78347</id>
        <label>GTF2I</label>
    </interactant>
    <organismsDiffer>false</organismsDiffer>
    <experiments>5</experiments>
</comment>
<comment type="interaction">
    <interactant intactId="EBI-349905">
        <id>P38398</id>
    </interactant>
    <interactant intactId="EBI-494830">
        <id>P16104</id>
        <label>H2AX</label>
    </interactant>
    <organismsDiffer>false</organismsDiffer>
    <experiments>4</experiments>
</comment>
<comment type="interaction">
    <interactant intactId="EBI-349905">
        <id>P38398</id>
    </interactant>
    <interactant intactId="EBI-2556203">
        <id>O75330</id>
        <label>HMMR</label>
    </interactant>
    <organismsDiffer>false</organismsDiffer>
    <experiments>4</experiments>
</comment>
<comment type="interaction">
    <interactant intactId="EBI-349905">
        <id>P38398</id>
    </interactant>
    <interactant intactId="EBI-352528">
        <id>P10809</id>
        <label>HSPD1</label>
    </interactant>
    <organismsDiffer>false</organismsDiffer>
    <experiments>2</experiments>
</comment>
<comment type="interaction">
    <interactant intactId="EBI-349905">
        <id>P38398</id>
    </interactant>
    <interactant intactId="EBI-2867186">
        <id>Q16666</id>
        <label>IFI16</label>
    </interactant>
    <organismsDiffer>false</organismsDiffer>
    <experiments>9</experiments>
</comment>
<comment type="interaction">
    <interactant intactId="EBI-349905">
        <id>P38398</id>
    </interactant>
    <interactant intactId="EBI-349938">
        <id>P52292</id>
        <label>KPNA2</label>
    </interactant>
    <organismsDiffer>false</organismsDiffer>
    <experiments>3</experiments>
</comment>
<comment type="interaction">
    <interactant intactId="EBI-349905">
        <id>P38398</id>
    </interactant>
    <interactant intactId="EBI-495644">
        <id>Q14676</id>
        <label>MDC1</label>
    </interactant>
    <organismsDiffer>false</organismsDiffer>
    <experiments>4</experiments>
</comment>
<comment type="interaction">
    <interactant intactId="EBI-349905">
        <id>P38398</id>
    </interactant>
    <interactant intactId="EBI-347721">
        <id>Q8WX92</id>
        <label>NELFB</label>
    </interactant>
    <organismsDiffer>false</organismsDiffer>
    <experiments>5</experiments>
</comment>
<comment type="interaction">
    <interactant intactId="EBI-349905">
        <id>P38398</id>
    </interactant>
    <interactant intactId="EBI-1222653">
        <id>Q86YC2</id>
        <label>PALB2</label>
    </interactant>
    <organismsDiffer>false</organismsDiffer>
    <experiments>27</experiments>
</comment>
<comment type="interaction">
    <interactant intactId="EBI-349905">
        <id>P38398</id>
    </interactant>
    <interactant intactId="EBI-357253">
        <id>P62136</id>
        <label>PPP1CA</label>
    </interactant>
    <organismsDiffer>false</organismsDiffer>
    <experiments>2</experiments>
</comment>
<comment type="interaction">
    <interactant intactId="EBI-349905">
        <id>P38398</id>
    </interactant>
    <interactant intactId="EBI-352350">
        <id>P62140</id>
        <label>PPP1CB</label>
    </interactant>
    <organismsDiffer>false</organismsDiffer>
    <experiments>3</experiments>
</comment>
<comment type="interaction">
    <interactant intactId="EBI-349905">
        <id>P38398</id>
    </interactant>
    <interactant intactId="EBI-356283">
        <id>P36873</id>
        <label>PPP1CC</label>
    </interactant>
    <organismsDiffer>false</organismsDiffer>
    <experiments>2</experiments>
</comment>
<comment type="interaction">
    <interactant intactId="EBI-349905">
        <id>P38398</id>
    </interactant>
    <interactant intactId="EBI-351275">
        <id>Q96SB3</id>
        <label>PPP1R9B</label>
    </interactant>
    <organismsDiffer>false</organismsDiffer>
    <experiments>4</experiments>
</comment>
<comment type="interaction">
    <interactant intactId="EBI-349905">
        <id>P38398</id>
    </interactant>
    <interactant intactId="EBI-745715">
        <id>Q99708</id>
        <label>RBBP8</label>
    </interactant>
    <organismsDiffer>false</organismsDiffer>
    <experiments>15</experiments>
</comment>
<comment type="interaction">
    <interactant intactId="EBI-349905">
        <id>P38398</id>
    </interactant>
    <interactant intactId="EBI-80140">
        <id>P63165</id>
        <label>SUMO1</label>
    </interactant>
    <organismsDiffer>false</organismsDiffer>
    <experiments>3</experiments>
</comment>
<comment type="interaction">
    <interactant intactId="EBI-349905">
        <id>P38398</id>
    </interactant>
    <interactant intactId="EBI-473220">
        <id>P61956</id>
        <label>SUMO2</label>
    </interactant>
    <organismsDiffer>false</organismsDiffer>
    <experiments>2</experiments>
</comment>
<comment type="interaction">
    <interactant intactId="EBI-349905">
        <id>P38398</id>
    </interactant>
    <interactant intactId="EBI-539628">
        <id>P11388</id>
        <label>TOP2A</label>
    </interactant>
    <organismsDiffer>false</organismsDiffer>
    <experiments>3</experiments>
</comment>
<comment type="interaction">
    <interactant intactId="EBI-349905">
        <id>P38398</id>
    </interactant>
    <interactant intactId="EBI-396540">
        <id>Q12888</id>
        <label>TP53BP1</label>
    </interactant>
    <organismsDiffer>false</organismsDiffer>
    <experiments>5</experiments>
</comment>
<comment type="interaction">
    <interactant intactId="EBI-349905">
        <id>P38398</id>
    </interactant>
    <interactant intactId="EBI-725300">
        <id>Q96RL1</id>
        <label>UIMC1</label>
    </interactant>
    <organismsDiffer>false</organismsDiffer>
    <experiments>13</experiments>
</comment>
<comment type="interaction">
    <interactant intactId="EBI-349905">
        <id>P38398</id>
    </interactant>
    <interactant intactId="EBI-9640371">
        <id>Q96RL1-1</id>
        <label>UIMC1</label>
    </interactant>
    <organismsDiffer>false</organismsDiffer>
    <experiments>2</experiments>
</comment>
<comment type="interaction">
    <interactant intactId="EBI-349905">
        <id>P38398</id>
    </interactant>
    <interactant intactId="EBI-1263058">
        <id>Q6NZY4</id>
        <label>ZCCHC8</label>
    </interactant>
    <organismsDiffer>false</organismsDiffer>
    <experiments>2</experiments>
</comment>
<comment type="interaction">
    <interactant intactId="EBI-349905">
        <id>P38398</id>
    </interactant>
    <interactant intactId="EBI-10962579">
        <id>Q86YA3</id>
        <label>ZGRF1</label>
    </interactant>
    <organismsDiffer>false</organismsDiffer>
    <experiments>4</experiments>
</comment>
<comment type="interaction">
    <interactant intactId="EBI-349905">
        <id>P38398</id>
    </interactant>
    <interactant intactId="EBI-396421">
        <id>Q9GZX5</id>
        <label>ZNF350</label>
    </interactant>
    <organismsDiffer>false</organismsDiffer>
    <experiments>3</experiments>
</comment>
<comment type="interaction">
    <interactant intactId="EBI-349905">
        <id>P38398</id>
    </interactant>
    <interactant intactId="EBI-904311">
        <id>Q61188</id>
        <label>Ezh2</label>
    </interactant>
    <organismsDiffer>true</organismsDiffer>
    <experiments>5</experiments>
</comment>
<comment type="interaction">
    <interactant intactId="EBI-21498346">
        <id>P38398-1</id>
    </interactant>
    <interactant intactId="EBI-473181">
        <id>Q99728</id>
        <label>BARD1</label>
    </interactant>
    <organismsDiffer>false</organismsDiffer>
    <experiments>3</experiments>
</comment>
<comment type="interaction">
    <interactant intactId="EBI-21498346">
        <id>P38398-1</id>
    </interactant>
    <interactant intactId="EBI-714158">
        <id>Q13526</id>
        <label>PIN1</label>
    </interactant>
    <organismsDiffer>false</organismsDiffer>
    <experiments>4</experiments>
</comment>
<comment type="interaction">
    <interactant intactId="EBI-2015072">
        <id>P38398-5</id>
    </interactant>
    <interactant intactId="EBI-1791447">
        <id>Q92560</id>
        <label>BAP1</label>
    </interactant>
    <organismsDiffer>false</organismsDiffer>
    <experiments>2</experiments>
</comment>
<comment type="interaction">
    <interactant intactId="EBI-25833510">
        <id>P38398-6</id>
    </interactant>
    <interactant intactId="EBI-949378">
        <id>Q14457</id>
        <label>BECN1</label>
    </interactant>
    <organismsDiffer>false</organismsDiffer>
    <experiments>3</experiments>
</comment>
<comment type="interaction">
    <interactant intactId="EBI-25833510">
        <id>P38398-6</id>
    </interactant>
    <interactant intactId="EBI-466029">
        <id>P42858</id>
        <label>HTT</label>
    </interactant>
    <organismsDiffer>false</organismsDiffer>
    <experiments>3</experiments>
</comment>
<comment type="subcellular location">
    <subcellularLocation>
        <location evidence="35 44 57 61 68 85">Nucleus</location>
    </subcellularLocation>
    <subcellularLocation>
        <location evidence="64 67 68">Chromosome</location>
    </subcellularLocation>
    <subcellularLocation>
        <location evidence="57">Cytoplasm</location>
    </subcellularLocation>
    <text evidence="57 68">Localizes at sites of DNA damage at double-strand breaks (DSBs); recruitment to DNA damage sites is mediated by ABRAXAS1 and the BRCA1-A complex (PubMed:26778126). Translocated to the cytoplasm during UV-induced apoptosis (PubMed:20160719).</text>
</comment>
<comment type="subcellular location">
    <molecule>Isoform 3</molecule>
    <subcellularLocation>
        <location>Cytoplasm</location>
    </subcellularLocation>
</comment>
<comment type="subcellular location">
    <molecule>Isoform 5</molecule>
    <subcellularLocation>
        <location evidence="82">Cytoplasm</location>
    </subcellularLocation>
</comment>
<comment type="alternative products">
    <event type="alternative splicing"/>
    <event type="alternative initiation"/>
    <isoform>
        <id>P38398-1</id>
        <name>1</name>
        <sequence type="displayed"/>
    </isoform>
    <isoform>
        <id>P38398-2</id>
        <name>2</name>
        <sequence type="described" ref="VSP_047891"/>
    </isoform>
    <isoform>
        <id>P38398-3</id>
        <name>3</name>
        <name>Delta11b</name>
        <sequence type="described" ref="VSP_035399 VSP_043797"/>
    </isoform>
    <isoform>
        <id>P38398-4</id>
        <name>4</name>
        <name>DeltaBRCA1(17aa)</name>
        <sequence type="described" ref="VSP_035396"/>
    </isoform>
    <isoform>
        <id>P38398-5</id>
        <name>5</name>
        <name>Delta11</name>
        <name>Delta772-3095</name>
        <sequence type="described" ref="VSP_035398"/>
    </isoform>
    <isoform>
        <id>P38398-6</id>
        <name>6</name>
        <sequence type="described" ref="VSP_035399 VSP_043797 VSP_043798"/>
    </isoform>
    <isoform>
        <id>P38398-7</id>
        <name>7</name>
        <sequence type="described" ref="VSP_055404"/>
    </isoform>
    <isoform>
        <id>P38398-8</id>
        <name>8</name>
        <sequence type="described" ref="VSP_057569"/>
    </isoform>
</comment>
<comment type="tissue specificity">
    <text>Isoform 1 and isoform 3 are widely expressed. Isoform 3 is reduced or absent in several breast and ovarian cancer cell lines.</text>
</comment>
<comment type="domain">
    <text evidence="56">The BRCT domains recognize and bind phosphorylated pSXXF motif on proteins. The interaction with the phosphorylated pSXXF motif of ABRAXAS1, recruits BRCA1 at DNA damage sites.</text>
</comment>
<comment type="domain">
    <text evidence="56">The RING-type zinc finger domain interacts with BAP1.</text>
</comment>
<comment type="PTM">
    <text evidence="9 11 19 48 59 61">Phosphorylated in response to IR, UV, and various stimuli that cause checkpoint activation, probably by ATM or ATR (PubMed:11114888, PubMed:12183412, PubMed:21144835). Phosphorylation at Ser-988 by CHEK2 regulates mitotic spindle assembly (PubMed:10724175, PubMed:20364141). Phosphorylation by AURKA regulates centrosomal microtubule nucleation (PubMed:18056443).</text>
</comment>
<comment type="PTM">
    <text evidence="27 58">Autoubiquitinated, undergoes 'Lys-6'-linked polyubiquitination. 'Lys-6'-linked polyubiquitination does not promote degradation.</text>
</comment>
<comment type="polymorphism">
    <text>There is evidence that the presence of the rare form of Gln-356-Arg and Leu-871-Pro polymorphisms may be associated with an increased risk for developing ovarian cancer.</text>
</comment>
<comment type="disease" evidence="6 11 13 23 25 28 30 35 49 62 65 71 74 75 76 77 78 79 80 84 86 88">
    <disease id="DI-02602">
        <name>Breast cancer</name>
        <acronym>BC</acronym>
        <description>A common malignancy originating from breast epithelial tissue. Breast neoplasms can be distinguished by their histologic pattern. Invasive ductal carcinoma is by far the most common type. Breast cancer is etiologically and genetically heterogeneous. Important genetic factors have been indicated by familial occurrence and bilateral involvement. Mutations at more than one locus can be involved in different families or even in the same case.</description>
        <dbReference type="MIM" id="114480"/>
    </disease>
    <text>Disease susceptibility is associated with variants affecting the gene represented in this entry. Mutations in BRCA1 are thought to be responsible for 45% of inherited breast cancer. Moreover, BRCA1 carriers have a 4-fold increased risk of colon cancer, whereas male carriers face a 3-fold increased risk of prostate cancer. Cells lacking BRCA1 show defects in DNA repair by homologous recombination.</text>
</comment>
<comment type="disease" evidence="28 30 47 60 71 81">
    <disease id="DI-01559">
        <name>Breast-ovarian cancer, familial, 1</name>
        <acronym>BROVCA1</acronym>
        <description>A condition associated with familial predisposition to cancer of the breast and ovaries. Characteristic features in affected families are an early age of onset of breast cancer (often before age 50), increased chance of bilateral cancers (cancer that develop in both breasts, or both ovaries, independently), frequent occurrence of breast cancer among men, increased incidence of tumors of other specific organs, such as the prostate.</description>
        <dbReference type="MIM" id="604370"/>
    </disease>
    <text>Disease susceptibility is associated with variants affecting the gene represented in this entry. Mutations in BRCA1 are thought to be responsible for more than 80% of inherited breast-ovarian cancer.</text>
</comment>
<comment type="disease" evidence="5 7 31 71">
    <disease id="DI-01655">
        <name>Ovarian cancer</name>
        <acronym>OC</acronym>
        <description>The term ovarian cancer defines malignancies originating from ovarian tissue. Although many histologic types of ovarian tumors have been described, epithelial ovarian carcinoma is the most common form. Ovarian cancers are often asymptomatic and the recognized signs and symptoms, even of late-stage disease, are vague. Consequently, most patients are diagnosed with advanced disease.</description>
        <dbReference type="MIM" id="167000"/>
    </disease>
    <text>Disease susceptibility is associated with variants affecting the gene represented in this entry.</text>
</comment>
<comment type="disease" evidence="51">
    <disease id="DI-03281">
        <name>Pancreatic cancer 4</name>
        <acronym>PNCA4</acronym>
        <description>A malignant neoplasm of the pancreas. Tumors can arise from both the exocrine and endocrine portions of the pancreas, but 95% of them develop from the exocrine portion, including the ductal epithelium, acinar cells, connective tissue, and lymphatic tissue.</description>
        <dbReference type="MIM" id="614320"/>
    </disease>
    <text>Disease susceptibility is associated with variants affecting the gene represented in this entry.</text>
</comment>
<comment type="disease" evidence="64 67 72">
    <disease id="DI-05209">
        <name>Fanconi anemia, complementation group S</name>
        <acronym>FANCS</acronym>
        <description>A form of Fanconi anemia, a disorder affecting all bone marrow elements and resulting in anemia, leukopenia and thrombopenia. It is associated with cardiac, renal and limb malformations, dermal pigmentary changes, and a predisposition to the development of malignancies. At the cellular level it is associated with hypersensitivity to DNA-damaging agents, chromosomal instability (increased chromosome breakage) and defective DNA repair.</description>
        <dbReference type="MIM" id="617883"/>
    </disease>
    <text>Disease susceptibility is associated with variants affecting the gene represented in this entry.</text>
</comment>
<comment type="miscellaneous">
    <molecule>Isoform 2</molecule>
    <text evidence="95">May be produced at very low levels due to a premature stop codon in the mRNA, leading to nonsense-mediated mRNA decay.</text>
</comment>
<comment type="miscellaneous">
    <molecule>Isoform 4</molecule>
    <text evidence="95">Produced by alternative initiation at Met-18 of isoform 1.</text>
</comment>
<comment type="miscellaneous">
    <molecule>Isoform 8</molecule>
    <text evidence="95">The N-terminus is confirmed by several cDNAs.</text>
</comment>
<comment type="caution">
    <text evidence="96 97">An article that concluded that AURKA-mediated phosphorylation of BRCA1 Ser-308 plays a role in the normal cell cycle G2/M transition was withdrawn due to data manipulation of flow cytometry data.</text>
</comment>
<comment type="sequence caution" evidence="95">
    <conflict type="erroneous translation">
        <sequence resource="EMBL-CDS" id="AAB61673"/>
    </conflict>
    <text>Wrong choice of CDS.</text>
</comment>
<comment type="sequence caution" evidence="95">
    <conflict type="erroneous initiation">
        <sequence resource="EMBL-CDS" id="AAI15038"/>
    </conflict>
    <text>Truncated N-terminus.</text>
</comment>
<comment type="sequence caution" evidence="95">
    <conflict type="erroneous termination">
        <sequence resource="EMBL-CDS" id="AAI15038"/>
    </conflict>
    <text>Truncated C-terminus.</text>
</comment>
<comment type="online information" name="Atlas of Genetics and Cytogenetics in Oncology and Haematology">
    <link uri="https://atlasgeneticsoncology.org/gene/163/BRCA1"/>
</comment>
<comment type="online information" name="Wikipedia">
    <link uri="https://en.wikipedia.org/wiki/BRCA1"/>
    <text>BRCA1 entry</text>
</comment>
<proteinExistence type="evidence at protein level"/>
<keyword id="KW-0002">3D-structure</keyword>
<keyword id="KW-0007">Acetylation</keyword>
<keyword id="KW-0010">Activator</keyword>
<keyword id="KW-0024">Alternative initiation</keyword>
<keyword id="KW-0025">Alternative splicing</keyword>
<keyword id="KW-0131">Cell cycle</keyword>
<keyword id="KW-0158">Chromosome</keyword>
<keyword id="KW-0963">Cytoplasm</keyword>
<keyword id="KW-0903">Direct protein sequencing</keyword>
<keyword id="KW-0225">Disease variant</keyword>
<keyword id="KW-0227">DNA damage</keyword>
<keyword id="KW-0233">DNA recombination</keyword>
<keyword id="KW-0234">DNA repair</keyword>
<keyword id="KW-0238">DNA-binding</keyword>
<keyword id="KW-0923">Fanconi anemia</keyword>
<keyword id="KW-0275">Fatty acid biosynthesis</keyword>
<keyword id="KW-0276">Fatty acid metabolism</keyword>
<keyword id="KW-1017">Isopeptide bond</keyword>
<keyword id="KW-0444">Lipid biosynthesis</keyword>
<keyword id="KW-0443">Lipid metabolism</keyword>
<keyword id="KW-0479">Metal-binding</keyword>
<keyword id="KW-0539">Nucleus</keyword>
<keyword id="KW-0597">Phosphoprotein</keyword>
<keyword id="KW-1267">Proteomics identification</keyword>
<keyword id="KW-1185">Reference proteome</keyword>
<keyword id="KW-0677">Repeat</keyword>
<keyword id="KW-0804">Transcription</keyword>
<keyword id="KW-0805">Transcription regulation</keyword>
<keyword id="KW-0808">Transferase</keyword>
<keyword id="KW-0043">Tumor suppressor</keyword>
<keyword id="KW-0832">Ubl conjugation</keyword>
<keyword id="KW-0833">Ubl conjugation pathway</keyword>
<keyword id="KW-0862">Zinc</keyword>
<keyword id="KW-0863">Zinc-finger</keyword>
<sequence>MDLSALRVEEVQNVINAMQKILECPICLELIKEPVSTKCDHIFCKFCMLKLLNQKKGPSQCPLCKNDITKRSLQESTRFSQLVEELLKIICAFQLDTGLEYANSYNFAKKENNSPEHLKDEVSIIQSMGYRNRAKRLLQSEPENPSLQETSLSVQLSNLGTVRTLRTKQRIQPQKTSVYIELGSDSSEDTVNKATYCSVGDQELLQITPQGTRDEISLDSAKKAACEFSETDVTNTEHHQPSNNDLNTTEKRAAERHPEKYQGSSVSNLHVEPCGTNTHASSLQHENSSLLLTKDRMNVEKAEFCNKSKQPGLARSQHNRWAGSKETCNDRRTPSTEKKVDLNADPLCERKEWNKQKLPCSENPRDTEDVPWITLNSSIQKVNEWFSRSDELLGSDDSHDGESESNAKVADVLDVLNEVDEYSGSSEKIDLLASDPHEALICKSERVHSKSVESNIEDKIFGKTYRKKASLPNLSHVTENLIIGAFVTEPQIIQERPLTNKLKRKRRPTSGLHPEDFIKKADLAVQKTPEMINQGTNQTEQNGQVMNITNSGHENKTKGDSIQNEKNPNPIESLEKESAFKTKAEPISSSISNMELELNIHNSKAPKKNRLRRKSSTRHIHALELVVSRNLSPPNCTELQIDSCSSSEEIKKKKYNQMPVRHSRNLQLMEGKEPATGAKKSNKPNEQTSKRHDSDTFPELKLTNAPGSFTKCSNTSELKEFVNPSLPREEKEEKLETVKVSNNAEDPKDLMLSGERVLQTERSVESSSISLVPGTDYGTQESISLLEVSTLGKAKTEPNKCVSQCAAFENPKGLIHGCSKDNRNDTEGFKYPLGHEVNHSRETSIEMEESELDAQYLQNTFKVSKRQSFAPFSNPGNAEEECATFSAHSGSLKKQSPKVTFECEQKEENQGKNESNIKPVQTVNITAGFPVVGQKDKPVDNAKCSIKGGSRFCLSSQFRGNETGLITPNKHGLLQNPYRIPPLFPIKSFVKTKCKKNLLEENFEEHSMSPEREMGNENIPSTVSTISRNNIRENVFKEASSSNINEVGSSTNEVGSSINEIGSSDENIQAELGRNRGPKLNAMLRLGVLQPEVYKQSLPGSNCKHPEIKKQEYEEVVQTVNTDFSPYLISDNLEQPMGSSHASQVCSETPDDLLDDGEIKEDTSFAENDIKESSAVFSKSVQKGELSRSPSPFTHTHLAQGYRRGAKKLESSEENLSSEDEELPCFQHLLFGKVNNIPSQSTRHSTVATECLSKNTEENLLSLKNSLNDCSNQVILAKASQEHHLSEETKCSASLFSSQCSELEDLTANTNTQDPFLIGSSKQMRHQSESQGVGLSDKELVSDDEERGTGLEENNQEEQSMDSNLGEAASGCESETSVSEDCSGLSSQSDILTTQQRDTMQHNLIKLQQEMAELEAVLEQHGSQPSNSYPSIISDSSALEDLRNPEQSTSEKAVLTSQKSSEYPISQNPEGLSADKFEVSADSSTSKNKEPGVERSSPSKCPSLDDRWYMHSCSGSLQNRNYPSQEELIKVVDVEEQQLEESGPHDLTETSYLPRQDLEGTPYLESGISLFSDDPESDPSEDRAPESARVGNIPSSTSALKVPQLKVAESAQSPAAAHTTDTAGYNAMEESVSREKPELTASTERVNKRMSMVVSGLTPEEFMLVYKFARKHHITLTNLITEETTHVVMKTDAEFVCERTLKYFLGIAGGKWVVSYFWVTQSIKERKMLNEHDFEVRGDVVNGRNHQGPKRARESQDRKIFRGLEICCYGPFTNMPTDQLEWMVQLCGASVVKELSSFTLGTGVHPIVVVQPDAWTEDNGFHAIGQMCEAPVVTREWVLDSVALYQCQELDTYLIPQIPHSHY</sequence>
<accession>P38398</accession>
<accession>E9PFZ0</accession>
<accession>O15129</accession>
<accession>Q1RMC1</accession>
<accession>Q3LRJ0</accession>
<accession>Q3LRJ6</accession>
<accession>Q6IN79</accession>
<accession>Q7KYU9</accession>
<dbReference type="EC" id="2.3.2.27" evidence="8 26 27 42 48 58"/>
<dbReference type="EMBL" id="U14680">
    <property type="protein sequence ID" value="AAA73985.1"/>
    <property type="molecule type" value="mRNA"/>
</dbReference>
<dbReference type="EMBL" id="L78833">
    <property type="protein sequence ID" value="AAC37594.1"/>
    <property type="molecule type" value="Genomic_DNA"/>
</dbReference>
<dbReference type="EMBL" id="U64805">
    <property type="protein sequence ID" value="AAC00049.1"/>
    <property type="molecule type" value="mRNA"/>
</dbReference>
<dbReference type="EMBL" id="AF005068">
    <property type="protein sequence ID" value="AAB61673.1"/>
    <property type="status" value="ALT_SEQ"/>
    <property type="molecule type" value="mRNA"/>
</dbReference>
<dbReference type="EMBL" id="DQ190450">
    <property type="protein sequence ID" value="ABA29208.1"/>
    <property type="molecule type" value="Genomic_DNA"/>
</dbReference>
<dbReference type="EMBL" id="DQ190451">
    <property type="protein sequence ID" value="ABA29211.1"/>
    <property type="molecule type" value="Genomic_DNA"/>
</dbReference>
<dbReference type="EMBL" id="DQ190452">
    <property type="protein sequence ID" value="ABA29214.1"/>
    <property type="molecule type" value="Genomic_DNA"/>
</dbReference>
<dbReference type="EMBL" id="DQ190453">
    <property type="protein sequence ID" value="ABA29217.1"/>
    <property type="molecule type" value="Genomic_DNA"/>
</dbReference>
<dbReference type="EMBL" id="DQ190454">
    <property type="protein sequence ID" value="ABA29220.1"/>
    <property type="molecule type" value="Genomic_DNA"/>
</dbReference>
<dbReference type="EMBL" id="DQ190455">
    <property type="protein sequence ID" value="ABA29223.1"/>
    <property type="molecule type" value="Genomic_DNA"/>
</dbReference>
<dbReference type="EMBL" id="DQ190456">
    <property type="protein sequence ID" value="ABA29226.1"/>
    <property type="molecule type" value="Genomic_DNA"/>
</dbReference>
<dbReference type="EMBL" id="AY273801">
    <property type="protein sequence ID" value="AAP12647.1"/>
    <property type="molecule type" value="Genomic_DNA"/>
</dbReference>
<dbReference type="EMBL" id="AC060780">
    <property type="status" value="NOT_ANNOTATED_CDS"/>
    <property type="molecule type" value="Genomic_DNA"/>
</dbReference>
<dbReference type="EMBL" id="AC135721">
    <property type="status" value="NOT_ANNOTATED_CDS"/>
    <property type="molecule type" value="Genomic_DNA"/>
</dbReference>
<dbReference type="EMBL" id="BC072418">
    <property type="protein sequence ID" value="AAH72418.1"/>
    <property type="molecule type" value="mRNA"/>
</dbReference>
<dbReference type="EMBL" id="BC115037">
    <property type="protein sequence ID" value="AAI15038.1"/>
    <property type="status" value="ALT_SEQ"/>
    <property type="molecule type" value="mRNA"/>
</dbReference>
<dbReference type="CCDS" id="CCDS11453.1">
    <molecule id="P38398-1"/>
</dbReference>
<dbReference type="CCDS" id="CCDS11454.2">
    <molecule id="P38398-3"/>
</dbReference>
<dbReference type="CCDS" id="CCDS11455.2">
    <molecule id="P38398-6"/>
</dbReference>
<dbReference type="CCDS" id="CCDS11456.2">
    <molecule id="P38398-7"/>
</dbReference>
<dbReference type="CCDS" id="CCDS11459.2">
    <molecule id="P38398-8"/>
</dbReference>
<dbReference type="PIR" id="A58881">
    <property type="entry name" value="A58881"/>
</dbReference>
<dbReference type="RefSeq" id="NP_001394512.1">
    <molecule id="P38398-7"/>
    <property type="nucleotide sequence ID" value="NM_001407583.1"/>
</dbReference>
<dbReference type="RefSeq" id="NP_001394514.1">
    <molecule id="P38398-7"/>
    <property type="nucleotide sequence ID" value="NM_001407585.1"/>
</dbReference>
<dbReference type="RefSeq" id="NP_001394522.1">
    <molecule id="P38398-1"/>
    <property type="nucleotide sequence ID" value="NM_001407593.1"/>
</dbReference>
<dbReference type="RefSeq" id="NP_001394523.1">
    <molecule id="P38398-1"/>
    <property type="nucleotide sequence ID" value="NM_001407594.1"/>
</dbReference>
<dbReference type="RefSeq" id="NP_001394525.1">
    <molecule id="P38398-1"/>
    <property type="nucleotide sequence ID" value="NM_001407596.1"/>
</dbReference>
<dbReference type="RefSeq" id="NP_001394526.1">
    <molecule id="P38398-1"/>
    <property type="nucleotide sequence ID" value="NM_001407597.1"/>
</dbReference>
<dbReference type="RefSeq" id="NP_001394527.1">
    <molecule id="P38398-1"/>
    <property type="nucleotide sequence ID" value="NM_001407598.1"/>
</dbReference>
<dbReference type="RefSeq" id="NP_001394531.1">
    <molecule id="P38398-1"/>
    <property type="nucleotide sequence ID" value="NM_001407602.1"/>
</dbReference>
<dbReference type="RefSeq" id="NP_001394532.1">
    <molecule id="P38398-1"/>
    <property type="nucleotide sequence ID" value="NM_001407603.1"/>
</dbReference>
<dbReference type="RefSeq" id="NP_001394534.1">
    <molecule id="P38398-1"/>
    <property type="nucleotide sequence ID" value="NM_001407605.1"/>
</dbReference>
<dbReference type="RefSeq" id="NP_001394621.1">
    <molecule id="P38398-8"/>
    <property type="nucleotide sequence ID" value="NM_001407692.1"/>
</dbReference>
<dbReference type="RefSeq" id="NP_001394623.1">
    <molecule id="P38398-8"/>
    <property type="nucleotide sequence ID" value="NM_001407694.1"/>
</dbReference>
<dbReference type="RefSeq" id="NP_001394624.1">
    <molecule id="P38398-8"/>
    <property type="nucleotide sequence ID" value="NM_001407695.1"/>
</dbReference>
<dbReference type="RefSeq" id="NP_001394625.1">
    <molecule id="P38398-8"/>
    <property type="nucleotide sequence ID" value="NM_001407696.1"/>
</dbReference>
<dbReference type="RefSeq" id="NP_001394626.1">
    <molecule id="P38398-8"/>
    <property type="nucleotide sequence ID" value="NM_001407697.1"/>
</dbReference>
<dbReference type="RefSeq" id="NP_001394627.1">
    <molecule id="P38398-8"/>
    <property type="nucleotide sequence ID" value="NM_001407698.1"/>
</dbReference>
<dbReference type="RefSeq" id="NP_001394653.1">
    <molecule id="P38398-8"/>
    <property type="nucleotide sequence ID" value="NM_001407724.1"/>
</dbReference>
<dbReference type="RefSeq" id="NP_001394654.1">
    <molecule id="P38398-8"/>
    <property type="nucleotide sequence ID" value="NM_001407725.1"/>
</dbReference>
<dbReference type="RefSeq" id="NP_001394655.1">
    <molecule id="P38398-8"/>
    <property type="nucleotide sequence ID" value="NM_001407726.1"/>
</dbReference>
<dbReference type="RefSeq" id="NP_001394656.1">
    <molecule id="P38398-8"/>
    <property type="nucleotide sequence ID" value="NM_001407727.1"/>
</dbReference>
<dbReference type="RefSeq" id="NP_001394657.1">
    <molecule id="P38398-8"/>
    <property type="nucleotide sequence ID" value="NM_001407728.1"/>
</dbReference>
<dbReference type="RefSeq" id="NP_001394658.1">
    <molecule id="P38398-8"/>
    <property type="nucleotide sequence ID" value="NM_001407729.1"/>
</dbReference>
<dbReference type="RefSeq" id="NP_001394659.1">
    <molecule id="P38398-8"/>
    <property type="nucleotide sequence ID" value="NM_001407730.1"/>
</dbReference>
<dbReference type="RefSeq" id="NP_001394660.1">
    <molecule id="P38398-8"/>
    <property type="nucleotide sequence ID" value="NM_001407731.1"/>
</dbReference>
<dbReference type="RefSeq" id="NP_001394922.1">
    <molecule id="P38398-3"/>
    <property type="nucleotide sequence ID" value="NM_001407993.1"/>
</dbReference>
<dbReference type="RefSeq" id="NP_001395347.1">
    <molecule id="P38398-5"/>
    <property type="nucleotide sequence ID" value="NM_001408418.1"/>
</dbReference>
<dbReference type="RefSeq" id="NP_001395348.1">
    <molecule id="P38398-5"/>
    <property type="nucleotide sequence ID" value="NM_001408419.1"/>
</dbReference>
<dbReference type="RefSeq" id="NP_001395349.1">
    <molecule id="P38398-5"/>
    <property type="nucleotide sequence ID" value="NM_001408420.1"/>
</dbReference>
<dbReference type="RefSeq" id="NP_009225.1">
    <molecule id="P38398-1"/>
    <property type="nucleotide sequence ID" value="NM_007294.4"/>
</dbReference>
<dbReference type="RefSeq" id="NP_009228.2">
    <molecule id="P38398-8"/>
    <property type="nucleotide sequence ID" value="NM_007297.4"/>
</dbReference>
<dbReference type="RefSeq" id="NP_009229.2">
    <molecule id="P38398-3"/>
    <property type="nucleotide sequence ID" value="NM_007298.4"/>
</dbReference>
<dbReference type="RefSeq" id="NP_009230.2">
    <molecule id="P38398-6"/>
    <property type="nucleotide sequence ID" value="NM_007299.4"/>
</dbReference>
<dbReference type="RefSeq" id="NP_009231.2">
    <molecule id="P38398-7"/>
    <property type="nucleotide sequence ID" value="NM_007300.4"/>
</dbReference>
<dbReference type="PDB" id="1JM7">
    <property type="method" value="NMR"/>
    <property type="chains" value="A=1-110"/>
</dbReference>
<dbReference type="PDB" id="1JNX">
    <property type="method" value="X-ray"/>
    <property type="resolution" value="2.50 A"/>
    <property type="chains" value="X=1646-1859"/>
</dbReference>
<dbReference type="PDB" id="1N5O">
    <property type="method" value="X-ray"/>
    <property type="resolution" value="2.80 A"/>
    <property type="chains" value="X=1646-1859"/>
</dbReference>
<dbReference type="PDB" id="1OQA">
    <property type="method" value="NMR"/>
    <property type="chains" value="A=1755-1863"/>
</dbReference>
<dbReference type="PDB" id="1T15">
    <property type="method" value="X-ray"/>
    <property type="resolution" value="1.85 A"/>
    <property type="chains" value="A=1646-1859"/>
</dbReference>
<dbReference type="PDB" id="1T29">
    <property type="method" value="X-ray"/>
    <property type="resolution" value="2.30 A"/>
    <property type="chains" value="A=1646-1859"/>
</dbReference>
<dbReference type="PDB" id="1T2U">
    <property type="method" value="X-ray"/>
    <property type="resolution" value="2.80 A"/>
    <property type="chains" value="A=1646-1859"/>
</dbReference>
<dbReference type="PDB" id="1T2V">
    <property type="method" value="X-ray"/>
    <property type="resolution" value="3.30 A"/>
    <property type="chains" value="A/B/C/D/E=1646-1859"/>
</dbReference>
<dbReference type="PDB" id="1Y98">
    <property type="method" value="X-ray"/>
    <property type="resolution" value="2.50 A"/>
    <property type="chains" value="A=1646-1859"/>
</dbReference>
<dbReference type="PDB" id="2ING">
    <property type="method" value="X-ray"/>
    <property type="resolution" value="3.60 A"/>
    <property type="chains" value="X=1649-1859"/>
</dbReference>
<dbReference type="PDB" id="3COJ">
    <property type="method" value="X-ray"/>
    <property type="resolution" value="3.21 A"/>
    <property type="chains" value="A/B/C/D/E/F/G/X=1646-1859"/>
</dbReference>
<dbReference type="PDB" id="3K0H">
    <property type="method" value="X-ray"/>
    <property type="resolution" value="2.70 A"/>
    <property type="chains" value="A=1646-1859"/>
</dbReference>
<dbReference type="PDB" id="3K0K">
    <property type="method" value="X-ray"/>
    <property type="resolution" value="2.70 A"/>
    <property type="chains" value="A=1646-1859"/>
</dbReference>
<dbReference type="PDB" id="3K15">
    <property type="method" value="X-ray"/>
    <property type="resolution" value="2.80 A"/>
    <property type="chains" value="A=1646-1859"/>
</dbReference>
<dbReference type="PDB" id="3K16">
    <property type="method" value="X-ray"/>
    <property type="resolution" value="3.00 A"/>
    <property type="chains" value="A=1646-1859"/>
</dbReference>
<dbReference type="PDB" id="3PXA">
    <property type="method" value="X-ray"/>
    <property type="resolution" value="2.55 A"/>
    <property type="chains" value="A=1646-1859"/>
</dbReference>
<dbReference type="PDB" id="3PXB">
    <property type="method" value="X-ray"/>
    <property type="resolution" value="2.50 A"/>
    <property type="chains" value="A=1646-1859"/>
</dbReference>
<dbReference type="PDB" id="3PXC">
    <property type="method" value="X-ray"/>
    <property type="resolution" value="2.80 A"/>
    <property type="chains" value="X=1646-1859"/>
</dbReference>
<dbReference type="PDB" id="3PXD">
    <property type="method" value="X-ray"/>
    <property type="resolution" value="2.80 A"/>
    <property type="chains" value="A=1646-1859"/>
</dbReference>
<dbReference type="PDB" id="3PXE">
    <property type="method" value="X-ray"/>
    <property type="resolution" value="2.85 A"/>
    <property type="chains" value="A/B/C/D=1646-1859"/>
</dbReference>
<dbReference type="PDB" id="4IFI">
    <property type="method" value="X-ray"/>
    <property type="resolution" value="2.20 A"/>
    <property type="chains" value="A=1646-1859"/>
</dbReference>
<dbReference type="PDB" id="4IGK">
    <property type="method" value="X-ray"/>
    <property type="resolution" value="1.75 A"/>
    <property type="chains" value="A/B=1646-1859"/>
</dbReference>
<dbReference type="PDB" id="4JLU">
    <property type="method" value="X-ray"/>
    <property type="resolution" value="3.50 A"/>
    <property type="chains" value="A=1649-1859"/>
</dbReference>
<dbReference type="PDB" id="4OFB">
    <property type="method" value="X-ray"/>
    <property type="resolution" value="3.05 A"/>
    <property type="chains" value="A=1646-1859"/>
</dbReference>
<dbReference type="PDB" id="4U4A">
    <property type="method" value="X-ray"/>
    <property type="resolution" value="3.51 A"/>
    <property type="chains" value="A/B/C=1646-1859"/>
</dbReference>
<dbReference type="PDB" id="4Y18">
    <property type="method" value="X-ray"/>
    <property type="resolution" value="3.50 A"/>
    <property type="chains" value="A/B/C/D/E/F/G/H=1646-1859"/>
</dbReference>
<dbReference type="PDB" id="4Y2G">
    <property type="method" value="X-ray"/>
    <property type="resolution" value="2.50 A"/>
    <property type="chains" value="A=1646-1859"/>
</dbReference>
<dbReference type="PDB" id="6G2I">
    <property type="method" value="EM"/>
    <property type="resolution" value="5.90 A"/>
    <property type="chains" value="H/K/M/O/S/U/W/Y=1646-1859"/>
</dbReference>
<dbReference type="PDB" id="7JZV">
    <property type="method" value="EM"/>
    <property type="resolution" value="3.90 A"/>
    <property type="chains" value="A=2-104"/>
</dbReference>
<dbReference type="PDB" id="7LYB">
    <property type="method" value="EM"/>
    <property type="resolution" value="3.28 A"/>
    <property type="chains" value="M=1-100"/>
</dbReference>
<dbReference type="PDB" id="8GRQ">
    <property type="method" value="EM"/>
    <property type="resolution" value="3.87 A"/>
    <property type="chains" value="K=6-97"/>
</dbReference>
<dbReference type="PDBsum" id="1JM7"/>
<dbReference type="PDBsum" id="1JNX"/>
<dbReference type="PDBsum" id="1N5O"/>
<dbReference type="PDBsum" id="1OQA"/>
<dbReference type="PDBsum" id="1T15"/>
<dbReference type="PDBsum" id="1T29"/>
<dbReference type="PDBsum" id="1T2U"/>
<dbReference type="PDBsum" id="1T2V"/>
<dbReference type="PDBsum" id="1Y98"/>
<dbReference type="PDBsum" id="2ING"/>
<dbReference type="PDBsum" id="3COJ"/>
<dbReference type="PDBsum" id="3K0H"/>
<dbReference type="PDBsum" id="3K0K"/>
<dbReference type="PDBsum" id="3K15"/>
<dbReference type="PDBsum" id="3K16"/>
<dbReference type="PDBsum" id="3PXA"/>
<dbReference type="PDBsum" id="3PXB"/>
<dbReference type="PDBsum" id="3PXC"/>
<dbReference type="PDBsum" id="3PXD"/>
<dbReference type="PDBsum" id="3PXE"/>
<dbReference type="PDBsum" id="4IFI"/>
<dbReference type="PDBsum" id="4IGK"/>
<dbReference type="PDBsum" id="4JLU"/>
<dbReference type="PDBsum" id="4OFB"/>
<dbReference type="PDBsum" id="4U4A"/>
<dbReference type="PDBsum" id="4Y18"/>
<dbReference type="PDBsum" id="4Y2G"/>
<dbReference type="PDBsum" id="6G2I"/>
<dbReference type="PDBsum" id="7JZV"/>
<dbReference type="PDBsum" id="7LYB"/>
<dbReference type="PDBsum" id="8GRQ"/>
<dbReference type="BMRB" id="P38398"/>
<dbReference type="EMDB" id="EMD-23591"/>
<dbReference type="EMDB" id="EMD-34212"/>
<dbReference type="EMDB" id="EMD-4344"/>
<dbReference type="EMDB" id="EMD-6340"/>
<dbReference type="EMDB" id="EMD-6400"/>
<dbReference type="SMR" id="P38398"/>
<dbReference type="BioGRID" id="107140">
    <property type="interactions" value="1284"/>
</dbReference>
<dbReference type="ComplexPortal" id="CPX-715">
    <property type="entry name" value="BRCA1-BARD1 complex"/>
</dbReference>
<dbReference type="ComplexPortal" id="CPX-845">
    <property type="entry name" value="BRCA1-PALB2-BRCA2 homologous recombination DNA repair complex"/>
</dbReference>
<dbReference type="ComplexPortal" id="CPX-955">
    <property type="entry name" value="BRCC E3 ubiquitin ligase complex"/>
</dbReference>
<dbReference type="CORUM" id="P38398"/>
<dbReference type="DIP" id="DIP-5971N"/>
<dbReference type="FunCoup" id="P38398">
    <property type="interactions" value="1566"/>
</dbReference>
<dbReference type="IntAct" id="P38398">
    <property type="interactions" value="258"/>
</dbReference>
<dbReference type="MINT" id="P38398"/>
<dbReference type="STRING" id="9606.ENSP00000418960"/>
<dbReference type="BindingDB" id="P38398"/>
<dbReference type="ChEMBL" id="CHEMBL5990"/>
<dbReference type="MoonProt" id="P38398"/>
<dbReference type="GlyConnect" id="2024">
    <property type="glycosylation" value="1 N-Linked glycan (1 site)"/>
</dbReference>
<dbReference type="GlyCosmos" id="P38398">
    <property type="glycosylation" value="1 site, 2 glycans"/>
</dbReference>
<dbReference type="GlyGen" id="P38398">
    <property type="glycosylation" value="3 sites, 3 N-linked glycans (2 sites), 1 O-linked glycan (1 site)"/>
</dbReference>
<dbReference type="iPTMnet" id="P38398"/>
<dbReference type="PhosphoSitePlus" id="P38398"/>
<dbReference type="BioMuta" id="BRCA1"/>
<dbReference type="DMDM" id="728984"/>
<dbReference type="CPTAC" id="CPTAC-2610"/>
<dbReference type="CPTAC" id="CPTAC-2611"/>
<dbReference type="CPTAC" id="CPTAC-3218"/>
<dbReference type="CPTAC" id="CPTAC-3219"/>
<dbReference type="CPTAC" id="CPTAC-916"/>
<dbReference type="jPOST" id="P38398"/>
<dbReference type="MassIVE" id="P38398"/>
<dbReference type="PaxDb" id="9606-ENSP00000418960"/>
<dbReference type="PeptideAtlas" id="P38398"/>
<dbReference type="ProteomicsDB" id="20208"/>
<dbReference type="ProteomicsDB" id="55287">
    <molecule id="P38398-1"/>
</dbReference>
<dbReference type="ProteomicsDB" id="55288">
    <molecule id="P38398-2"/>
</dbReference>
<dbReference type="ProteomicsDB" id="55289">
    <molecule id="P38398-3"/>
</dbReference>
<dbReference type="ProteomicsDB" id="55290">
    <molecule id="P38398-4"/>
</dbReference>
<dbReference type="ProteomicsDB" id="55291">
    <molecule id="P38398-5"/>
</dbReference>
<dbReference type="ProteomicsDB" id="55292">
    <molecule id="P38398-6"/>
</dbReference>
<dbReference type="Pumba" id="P38398"/>
<dbReference type="Antibodypedia" id="4527">
    <property type="antibodies" value="2266 antibodies from 46 providers"/>
</dbReference>
<dbReference type="CPTC" id="P38398">
    <property type="antibodies" value="4 antibodies"/>
</dbReference>
<dbReference type="DNASU" id="672"/>
<dbReference type="Ensembl" id="ENST00000352993.7">
    <molecule id="P38398-5"/>
    <property type="protein sequence ID" value="ENSP00000312236.5"/>
    <property type="gene ID" value="ENSG00000012048.26"/>
</dbReference>
<dbReference type="Ensembl" id="ENST00000357654.9">
    <molecule id="P38398-1"/>
    <property type="protein sequence ID" value="ENSP00000350283.3"/>
    <property type="gene ID" value="ENSG00000012048.26"/>
</dbReference>
<dbReference type="Ensembl" id="ENST00000461221.5">
    <molecule id="P38398-2"/>
    <property type="protein sequence ID" value="ENSP00000418548.1"/>
    <property type="gene ID" value="ENSG00000012048.26"/>
</dbReference>
<dbReference type="Ensembl" id="ENST00000461798.5">
    <molecule id="P38398-2"/>
    <property type="protein sequence ID" value="ENSP00000417988.1"/>
    <property type="gene ID" value="ENSG00000012048.26"/>
</dbReference>
<dbReference type="Ensembl" id="ENST00000468300.5">
    <molecule id="P38398-6"/>
    <property type="protein sequence ID" value="ENSP00000417148.1"/>
    <property type="gene ID" value="ENSG00000012048.26"/>
</dbReference>
<dbReference type="Ensembl" id="ENST00000470026.6">
    <molecule id="P38398-1"/>
    <property type="protein sequence ID" value="ENSP00000419274.2"/>
    <property type="gene ID" value="ENSG00000012048.26"/>
</dbReference>
<dbReference type="Ensembl" id="ENST00000471181.7">
    <molecule id="P38398-7"/>
    <property type="protein sequence ID" value="ENSP00000418960.2"/>
    <property type="gene ID" value="ENSG00000012048.26"/>
</dbReference>
<dbReference type="Ensembl" id="ENST00000491747.6">
    <molecule id="P38398-3"/>
    <property type="protein sequence ID" value="ENSP00000420705.2"/>
    <property type="gene ID" value="ENSG00000012048.26"/>
</dbReference>
<dbReference type="Ensembl" id="ENST00000493795.5">
    <molecule id="P38398-8"/>
    <property type="protein sequence ID" value="ENSP00000418775.1"/>
    <property type="gene ID" value="ENSG00000012048.26"/>
</dbReference>
<dbReference type="Ensembl" id="ENST00000494123.6">
    <molecule id="P38398-1"/>
    <property type="protein sequence ID" value="ENSP00000419103.2"/>
    <property type="gene ID" value="ENSG00000012048.26"/>
</dbReference>
<dbReference type="Ensembl" id="ENST00000618469.2">
    <molecule id="P38398-1"/>
    <property type="protein sequence ID" value="ENSP00000478114.2"/>
    <property type="gene ID" value="ENSG00000012048.26"/>
</dbReference>
<dbReference type="Ensembl" id="ENST00000652672.2">
    <molecule id="P38398-8"/>
    <property type="protein sequence ID" value="ENSP00000498906.2"/>
    <property type="gene ID" value="ENSG00000012048.26"/>
</dbReference>
<dbReference type="Ensembl" id="ENST00000713676.1">
    <molecule id="P38398-1"/>
    <property type="protein sequence ID" value="ENSP00000518978.1"/>
    <property type="gene ID" value="ENSG00000012048.26"/>
</dbReference>
<dbReference type="GeneID" id="672"/>
<dbReference type="KEGG" id="hsa:672"/>
<dbReference type="MANE-Select" id="ENST00000357654.9">
    <property type="protein sequence ID" value="ENSP00000350283.3"/>
    <property type="RefSeq nucleotide sequence ID" value="NM_007294.4"/>
    <property type="RefSeq protein sequence ID" value="NP_009225.1"/>
</dbReference>
<dbReference type="UCSC" id="uc002icq.4">
    <molecule id="P38398-1"/>
    <property type="organism name" value="human"/>
</dbReference>
<dbReference type="UCSC" id="uc010cyx.4">
    <property type="organism name" value="human"/>
</dbReference>
<dbReference type="AGR" id="HGNC:1100"/>
<dbReference type="CTD" id="672"/>
<dbReference type="DisGeNET" id="672"/>
<dbReference type="GeneCards" id="BRCA1"/>
<dbReference type="GeneReviews" id="BRCA1"/>
<dbReference type="HGNC" id="HGNC:1100">
    <property type="gene designation" value="BRCA1"/>
</dbReference>
<dbReference type="HPA" id="ENSG00000012048">
    <property type="expression patterns" value="Low tissue specificity"/>
</dbReference>
<dbReference type="MalaCards" id="BRCA1"/>
<dbReference type="MIM" id="113705">
    <property type="type" value="gene"/>
</dbReference>
<dbReference type="MIM" id="114480">
    <property type="type" value="phenotype"/>
</dbReference>
<dbReference type="MIM" id="167000">
    <property type="type" value="phenotype"/>
</dbReference>
<dbReference type="MIM" id="604370">
    <property type="type" value="phenotype"/>
</dbReference>
<dbReference type="MIM" id="614320">
    <property type="type" value="phenotype"/>
</dbReference>
<dbReference type="MIM" id="617883">
    <property type="type" value="phenotype"/>
</dbReference>
<dbReference type="neXtProt" id="NX_P38398"/>
<dbReference type="OpenTargets" id="ENSG00000012048"/>
<dbReference type="Orphanet" id="70567">
    <property type="disease" value="Cholangiocarcinoma"/>
</dbReference>
<dbReference type="Orphanet" id="1333">
    <property type="disease" value="Familial pancreatic carcinoma"/>
</dbReference>
<dbReference type="Orphanet" id="1331">
    <property type="disease" value="Familial prostate cancer"/>
</dbReference>
<dbReference type="Orphanet" id="84">
    <property type="disease" value="Fanconi anemia"/>
</dbReference>
<dbReference type="Orphanet" id="145">
    <property type="disease" value="Hereditary breast and/or ovarian cancer syndrome"/>
</dbReference>
<dbReference type="Orphanet" id="227535">
    <property type="disease" value="Hereditary breast cancer"/>
</dbReference>
<dbReference type="Orphanet" id="168829">
    <property type="disease" value="Primary peritoneal carcinoma"/>
</dbReference>
<dbReference type="PharmGKB" id="PA25411"/>
<dbReference type="VEuPathDB" id="HostDB:ENSG00000012048"/>
<dbReference type="eggNOG" id="KOG4362">
    <property type="taxonomic scope" value="Eukaryota"/>
</dbReference>
<dbReference type="GeneTree" id="ENSGT00440000034289"/>
<dbReference type="HOGENOM" id="CLU_002290_0_0_1"/>
<dbReference type="InParanoid" id="P38398"/>
<dbReference type="OMA" id="ATCQQSP"/>
<dbReference type="OrthoDB" id="6105938at2759"/>
<dbReference type="PAN-GO" id="P38398">
    <property type="GO annotations" value="11 GO annotations based on evolutionary models"/>
</dbReference>
<dbReference type="PhylomeDB" id="P38398"/>
<dbReference type="BRENDA" id="2.3.2.27">
    <property type="organism ID" value="2681"/>
</dbReference>
<dbReference type="PathwayCommons" id="P38398"/>
<dbReference type="Reactome" id="R-HSA-1221632">
    <property type="pathway name" value="Meiotic synapsis"/>
</dbReference>
<dbReference type="Reactome" id="R-HSA-3108214">
    <property type="pathway name" value="SUMOylation of DNA damage response and repair proteins"/>
</dbReference>
<dbReference type="Reactome" id="R-HSA-5685938">
    <property type="pathway name" value="HDR through Single Strand Annealing (SSA)"/>
</dbReference>
<dbReference type="Reactome" id="R-HSA-5685942">
    <property type="pathway name" value="HDR through Homologous Recombination (HRR)"/>
</dbReference>
<dbReference type="Reactome" id="R-HSA-5689901">
    <property type="pathway name" value="Metalloprotease DUBs"/>
</dbReference>
<dbReference type="Reactome" id="R-HSA-5693554">
    <property type="pathway name" value="Resolution of D-loop Structures through Synthesis-Dependent Strand Annealing (SDSA)"/>
</dbReference>
<dbReference type="Reactome" id="R-HSA-5693565">
    <property type="pathway name" value="Recruitment and ATM-mediated phosphorylation of repair and signaling proteins at DNA double strand breaks"/>
</dbReference>
<dbReference type="Reactome" id="R-HSA-5693568">
    <property type="pathway name" value="Resolution of D-loop Structures through Holliday Junction Intermediates"/>
</dbReference>
<dbReference type="Reactome" id="R-HSA-5693571">
    <property type="pathway name" value="Nonhomologous End-Joining (NHEJ)"/>
</dbReference>
<dbReference type="Reactome" id="R-HSA-5693579">
    <property type="pathway name" value="Homologous DNA Pairing and Strand Exchange"/>
</dbReference>
<dbReference type="Reactome" id="R-HSA-5693607">
    <property type="pathway name" value="Processing of DNA double-strand break ends"/>
</dbReference>
<dbReference type="Reactome" id="R-HSA-5693616">
    <property type="pathway name" value="Presynaptic phase of homologous DNA pairing and strand exchange"/>
</dbReference>
<dbReference type="Reactome" id="R-HSA-6796648">
    <property type="pathway name" value="TP53 Regulates Transcription of DNA Repair Genes"/>
</dbReference>
<dbReference type="Reactome" id="R-HSA-6804756">
    <property type="pathway name" value="Regulation of TP53 Activity through Phosphorylation"/>
</dbReference>
<dbReference type="Reactome" id="R-HSA-69473">
    <property type="pathway name" value="G2/M DNA damage checkpoint"/>
</dbReference>
<dbReference type="Reactome" id="R-HSA-8951664">
    <property type="pathway name" value="Neddylation"/>
</dbReference>
<dbReference type="Reactome" id="R-HSA-8953750">
    <property type="pathway name" value="Transcriptional Regulation by E2F6"/>
</dbReference>
<dbReference type="Reactome" id="R-HSA-912446">
    <property type="pathway name" value="Meiotic recombination"/>
</dbReference>
<dbReference type="Reactome" id="R-HSA-9663199">
    <property type="pathway name" value="Defective DNA double strand break response due to BRCA1 loss of function"/>
</dbReference>
<dbReference type="Reactome" id="R-HSA-9699150">
    <property type="pathway name" value="Defective DNA double strand break response due to BARD1 loss of function"/>
</dbReference>
<dbReference type="Reactome" id="R-HSA-9701192">
    <property type="pathway name" value="Defective homologous recombination repair (HRR) due to BRCA1 loss of function"/>
</dbReference>
<dbReference type="Reactome" id="R-HSA-9704331">
    <property type="pathway name" value="Defective HDR through Homologous Recombination Repair (HRR) due to PALB2 loss of BRCA1 binding function"/>
</dbReference>
<dbReference type="Reactome" id="R-HSA-9704646">
    <property type="pathway name" value="Defective HDR through Homologous Recombination Repair (HRR) due to PALB2 loss of BRCA2/RAD51/RAD51C binding function"/>
</dbReference>
<dbReference type="Reactome" id="R-HSA-9709570">
    <property type="pathway name" value="Impaired BRCA2 binding to RAD51"/>
</dbReference>
<dbReference type="Reactome" id="R-HSA-9709603">
    <property type="pathway name" value="Impaired BRCA2 binding to PALB2"/>
</dbReference>
<dbReference type="Reactome" id="R-HSA-9755511">
    <property type="pathway name" value="KEAP1-NFE2L2 pathway"/>
</dbReference>
<dbReference type="Reactome" id="R-HSA-9825895">
    <property type="pathway name" value="Regulation of MITF-M-dependent genes involved in DNA replication, damage repair and senescence"/>
</dbReference>
<dbReference type="SignaLink" id="P38398"/>
<dbReference type="SIGNOR" id="P38398"/>
<dbReference type="UniPathway" id="UPA00143"/>
<dbReference type="BioGRID-ORCS" id="672">
    <property type="hits" value="412 hits in 1226 CRISPR screens"/>
</dbReference>
<dbReference type="ChiTaRS" id="BRCA1">
    <property type="organism name" value="human"/>
</dbReference>
<dbReference type="EvolutionaryTrace" id="P38398"/>
<dbReference type="GeneWiki" id="BRCA1"/>
<dbReference type="GenomeRNAi" id="672"/>
<dbReference type="Pharos" id="P38398">
    <property type="development level" value="Tchem"/>
</dbReference>
<dbReference type="PRO" id="PR:P38398"/>
<dbReference type="Proteomes" id="UP000005640">
    <property type="component" value="Chromosome 17"/>
</dbReference>
<dbReference type="RNAct" id="P38398">
    <property type="molecule type" value="protein"/>
</dbReference>
<dbReference type="Bgee" id="ENSG00000012048">
    <property type="expression patterns" value="Expressed in ventricular zone and 135 other cell types or tissues"/>
</dbReference>
<dbReference type="ExpressionAtlas" id="P38398">
    <property type="expression patterns" value="baseline and differential"/>
</dbReference>
<dbReference type="GO" id="GO:0070531">
    <property type="term" value="C:BRCA1-A complex"/>
    <property type="evidence" value="ECO:0000314"/>
    <property type="project" value="UniProtKB"/>
</dbReference>
<dbReference type="GO" id="GO:0070532">
    <property type="term" value="C:BRCA1-B complex"/>
    <property type="evidence" value="ECO:0000353"/>
    <property type="project" value="ComplexPortal"/>
</dbReference>
<dbReference type="GO" id="GO:0031436">
    <property type="term" value="C:BRCA1-BARD1 complex"/>
    <property type="evidence" value="ECO:0000314"/>
    <property type="project" value="UniProtKB"/>
</dbReference>
<dbReference type="GO" id="GO:0070533">
    <property type="term" value="C:BRCA1-C complex"/>
    <property type="evidence" value="ECO:0000353"/>
    <property type="project" value="ComplexPortal"/>
</dbReference>
<dbReference type="GO" id="GO:0005694">
    <property type="term" value="C:chromosome"/>
    <property type="evidence" value="ECO:0000250"/>
    <property type="project" value="UniProtKB"/>
</dbReference>
<dbReference type="GO" id="GO:0005737">
    <property type="term" value="C:cytoplasm"/>
    <property type="evidence" value="ECO:0000314"/>
    <property type="project" value="UniProtKB"/>
</dbReference>
<dbReference type="GO" id="GO:1990391">
    <property type="term" value="C:DNA repair complex"/>
    <property type="evidence" value="ECO:0000353"/>
    <property type="project" value="ComplexPortal"/>
</dbReference>
<dbReference type="GO" id="GO:0000931">
    <property type="term" value="C:gamma-tubulin ring complex"/>
    <property type="evidence" value="ECO:0000303"/>
    <property type="project" value="UniProtKB"/>
</dbReference>
<dbReference type="GO" id="GO:0043232">
    <property type="term" value="C:intracellular membraneless organelle"/>
    <property type="evidence" value="ECO:0000314"/>
    <property type="project" value="DisProt"/>
</dbReference>
<dbReference type="GO" id="GO:0000800">
    <property type="term" value="C:lateral element"/>
    <property type="evidence" value="ECO:0000314"/>
    <property type="project" value="MGI"/>
</dbReference>
<dbReference type="GO" id="GO:0001673">
    <property type="term" value="C:male germ cell nucleus"/>
    <property type="evidence" value="ECO:0007669"/>
    <property type="project" value="Ensembl"/>
</dbReference>
<dbReference type="GO" id="GO:0016604">
    <property type="term" value="C:nuclear body"/>
    <property type="evidence" value="ECO:0000314"/>
    <property type="project" value="HPA"/>
</dbReference>
<dbReference type="GO" id="GO:0000152">
    <property type="term" value="C:nuclear ubiquitin ligase complex"/>
    <property type="evidence" value="ECO:0000314"/>
    <property type="project" value="ComplexPortal"/>
</dbReference>
<dbReference type="GO" id="GO:0005654">
    <property type="term" value="C:nucleoplasm"/>
    <property type="evidence" value="ECO:0000314"/>
    <property type="project" value="HPA"/>
</dbReference>
<dbReference type="GO" id="GO:0005634">
    <property type="term" value="C:nucleus"/>
    <property type="evidence" value="ECO:0000314"/>
    <property type="project" value="UniProtKB"/>
</dbReference>
<dbReference type="GO" id="GO:0005886">
    <property type="term" value="C:plasma membrane"/>
    <property type="evidence" value="ECO:0000314"/>
    <property type="project" value="BHF-UCL"/>
</dbReference>
<dbReference type="GO" id="GO:0032991">
    <property type="term" value="C:protein-containing complex"/>
    <property type="evidence" value="ECO:0000314"/>
    <property type="project" value="UniProtKB"/>
</dbReference>
<dbReference type="GO" id="GO:1990904">
    <property type="term" value="C:ribonucleoprotein complex"/>
    <property type="evidence" value="ECO:0000314"/>
    <property type="project" value="MGI"/>
</dbReference>
<dbReference type="GO" id="GO:0000151">
    <property type="term" value="C:ubiquitin ligase complex"/>
    <property type="evidence" value="ECO:0000303"/>
    <property type="project" value="UniProtKB"/>
</dbReference>
<dbReference type="GO" id="GO:0001741">
    <property type="term" value="C:XY body"/>
    <property type="evidence" value="ECO:0007669"/>
    <property type="project" value="Ensembl"/>
</dbReference>
<dbReference type="GO" id="GO:0003684">
    <property type="term" value="F:damaged DNA binding"/>
    <property type="evidence" value="ECO:0007669"/>
    <property type="project" value="Ensembl"/>
</dbReference>
<dbReference type="GO" id="GO:0003677">
    <property type="term" value="F:DNA binding"/>
    <property type="evidence" value="ECO:0000304"/>
    <property type="project" value="ProtInc"/>
</dbReference>
<dbReference type="GO" id="GO:0019899">
    <property type="term" value="F:enzyme binding"/>
    <property type="evidence" value="ECO:0000353"/>
    <property type="project" value="UniProtKB"/>
</dbReference>
<dbReference type="GO" id="GO:0140863">
    <property type="term" value="F:histone H2AK127 ubiquitin ligase activity"/>
    <property type="evidence" value="ECO:0000304"/>
    <property type="project" value="ARUK-UCL"/>
</dbReference>
<dbReference type="GO" id="GO:0140864">
    <property type="term" value="F:histone H2AK129 ubiquitin ligase activity"/>
    <property type="evidence" value="ECO:0000304"/>
    <property type="project" value="ARUK-UCL"/>
</dbReference>
<dbReference type="GO" id="GO:0042802">
    <property type="term" value="F:identical protein binding"/>
    <property type="evidence" value="ECO:0000353"/>
    <property type="project" value="IntAct"/>
</dbReference>
<dbReference type="GO" id="GO:0002039">
    <property type="term" value="F:p53 binding"/>
    <property type="evidence" value="ECO:0000314"/>
    <property type="project" value="DisProt"/>
</dbReference>
<dbReference type="GO" id="GO:0003723">
    <property type="term" value="F:RNA binding"/>
    <property type="evidence" value="ECO:0000314"/>
    <property type="project" value="MGI"/>
</dbReference>
<dbReference type="GO" id="GO:0070063">
    <property type="term" value="F:RNA polymerase binding"/>
    <property type="evidence" value="ECO:0000314"/>
    <property type="project" value="UniProtKB"/>
</dbReference>
<dbReference type="GO" id="GO:0000976">
    <property type="term" value="F:transcription cis-regulatory region binding"/>
    <property type="evidence" value="ECO:0000314"/>
    <property type="project" value="BHF-UCL"/>
</dbReference>
<dbReference type="GO" id="GO:0003713">
    <property type="term" value="F:transcription coactivator activity"/>
    <property type="evidence" value="ECO:0000314"/>
    <property type="project" value="BHF-UCL"/>
</dbReference>
<dbReference type="GO" id="GO:0015631">
    <property type="term" value="F:tubulin binding"/>
    <property type="evidence" value="ECO:0000303"/>
    <property type="project" value="UniProtKB"/>
</dbReference>
<dbReference type="GO" id="GO:0031625">
    <property type="term" value="F:ubiquitin protein ligase binding"/>
    <property type="evidence" value="ECO:0000353"/>
    <property type="project" value="UniProtKB"/>
</dbReference>
<dbReference type="GO" id="GO:0061649">
    <property type="term" value="F:ubiquitin-modified histone reader activity"/>
    <property type="evidence" value="ECO:0000304"/>
    <property type="project" value="ARUK-UCL"/>
</dbReference>
<dbReference type="GO" id="GO:0004842">
    <property type="term" value="F:ubiquitin-protein transferase activity"/>
    <property type="evidence" value="ECO:0000314"/>
    <property type="project" value="UniProtKB"/>
</dbReference>
<dbReference type="GO" id="GO:0008270">
    <property type="term" value="F:zinc ion binding"/>
    <property type="evidence" value="ECO:0000304"/>
    <property type="project" value="ProtInc"/>
</dbReference>
<dbReference type="GO" id="GO:0071681">
    <property type="term" value="P:cellular response to indole-3-methanol"/>
    <property type="evidence" value="ECO:0000314"/>
    <property type="project" value="UniProtKB"/>
</dbReference>
<dbReference type="GO" id="GO:0071479">
    <property type="term" value="P:cellular response to ionizing radiation"/>
    <property type="evidence" value="ECO:0000315"/>
    <property type="project" value="ComplexPortal"/>
</dbReference>
<dbReference type="GO" id="GO:0071356">
    <property type="term" value="P:cellular response to tumor necrosis factor"/>
    <property type="evidence" value="ECO:0000315"/>
    <property type="project" value="BHF-UCL"/>
</dbReference>
<dbReference type="GO" id="GO:0007098">
    <property type="term" value="P:centrosome cycle"/>
    <property type="evidence" value="ECO:0007669"/>
    <property type="project" value="Ensembl"/>
</dbReference>
<dbReference type="GO" id="GO:0043009">
    <property type="term" value="P:chordate embryonic development"/>
    <property type="evidence" value="ECO:0000318"/>
    <property type="project" value="GO_Central"/>
</dbReference>
<dbReference type="GO" id="GO:0006338">
    <property type="term" value="P:chromatin remodeling"/>
    <property type="evidence" value="ECO:0000304"/>
    <property type="project" value="ARUK-UCL"/>
</dbReference>
<dbReference type="GO" id="GO:0007059">
    <property type="term" value="P:chromosome segregation"/>
    <property type="evidence" value="ECO:0000315"/>
    <property type="project" value="UniProtKB"/>
</dbReference>
<dbReference type="GO" id="GO:0006974">
    <property type="term" value="P:DNA damage response"/>
    <property type="evidence" value="ECO:0000304"/>
    <property type="project" value="ProtInc"/>
</dbReference>
<dbReference type="GO" id="GO:0006281">
    <property type="term" value="P:DNA repair"/>
    <property type="evidence" value="ECO:0000303"/>
    <property type="project" value="ComplexPortal"/>
</dbReference>
<dbReference type="GO" id="GO:0110025">
    <property type="term" value="P:DNA strand resection involved in replication fork processing"/>
    <property type="evidence" value="ECO:0000303"/>
    <property type="project" value="ComplexPortal"/>
</dbReference>
<dbReference type="GO" id="GO:0006302">
    <property type="term" value="P:double-strand break repair"/>
    <property type="evidence" value="ECO:0000314"/>
    <property type="project" value="CACAO"/>
</dbReference>
<dbReference type="GO" id="GO:0000724">
    <property type="term" value="P:double-strand break repair via homologous recombination"/>
    <property type="evidence" value="ECO:0000314"/>
    <property type="project" value="HGNC-UCL"/>
</dbReference>
<dbReference type="GO" id="GO:0006633">
    <property type="term" value="P:fatty acid biosynthetic process"/>
    <property type="evidence" value="ECO:0007669"/>
    <property type="project" value="UniProtKB-KW"/>
</dbReference>
<dbReference type="GO" id="GO:0035825">
    <property type="term" value="P:homologous recombination"/>
    <property type="evidence" value="ECO:0000303"/>
    <property type="project" value="ComplexPortal"/>
</dbReference>
<dbReference type="GO" id="GO:0008630">
    <property type="term" value="P:intrinsic apoptotic signaling pathway in response to DNA damage"/>
    <property type="evidence" value="ECO:0000314"/>
    <property type="project" value="MGI"/>
</dbReference>
<dbReference type="GO" id="GO:0007095">
    <property type="term" value="P:mitotic G2 DNA damage checkpoint signaling"/>
    <property type="evidence" value="ECO:0000315"/>
    <property type="project" value="UniProtKB"/>
</dbReference>
<dbReference type="GO" id="GO:0044818">
    <property type="term" value="P:mitotic G2/M transition checkpoint"/>
    <property type="evidence" value="ECO:0000303"/>
    <property type="project" value="ComplexPortal"/>
</dbReference>
<dbReference type="GO" id="GO:0045786">
    <property type="term" value="P:negative regulation of cell cycle"/>
    <property type="evidence" value="ECO:0000303"/>
    <property type="project" value="ComplexPortal"/>
</dbReference>
<dbReference type="GO" id="GO:0030308">
    <property type="term" value="P:negative regulation of cell growth"/>
    <property type="evidence" value="ECO:0000315"/>
    <property type="project" value="DisProt"/>
</dbReference>
<dbReference type="GO" id="GO:0046600">
    <property type="term" value="P:negative regulation of centriole replication"/>
    <property type="evidence" value="ECO:0000303"/>
    <property type="project" value="UniProtKB"/>
</dbReference>
<dbReference type="GO" id="GO:0045892">
    <property type="term" value="P:negative regulation of DNA-templated transcription"/>
    <property type="evidence" value="ECO:0000314"/>
    <property type="project" value="UniProtKB"/>
</dbReference>
<dbReference type="GO" id="GO:1902042">
    <property type="term" value="P:negative regulation of extrinsic apoptotic signaling pathway via death domain receptors"/>
    <property type="evidence" value="ECO:0000315"/>
    <property type="project" value="BHF-UCL"/>
</dbReference>
<dbReference type="GO" id="GO:0045717">
    <property type="term" value="P:negative regulation of fatty acid biosynthetic process"/>
    <property type="evidence" value="ECO:0000315"/>
    <property type="project" value="UniProtKB"/>
</dbReference>
<dbReference type="GO" id="GO:0044027">
    <property type="term" value="P:negative regulation of gene expression via chromosomal CpG island methylation"/>
    <property type="evidence" value="ECO:0000315"/>
    <property type="project" value="BHF-UCL"/>
</dbReference>
<dbReference type="GO" id="GO:0033147">
    <property type="term" value="P:negative regulation of intracellular estrogen receptor signaling pathway"/>
    <property type="evidence" value="ECO:0000315"/>
    <property type="project" value="CACAO"/>
</dbReference>
<dbReference type="GO" id="GO:2000378">
    <property type="term" value="P:negative regulation of reactive oxygen species metabolic process"/>
    <property type="evidence" value="ECO:0000315"/>
    <property type="project" value="BHF-UCL"/>
</dbReference>
<dbReference type="GO" id="GO:0045766">
    <property type="term" value="P:positive regulation of angiogenesis"/>
    <property type="evidence" value="ECO:0000315"/>
    <property type="project" value="BHF-UCL"/>
</dbReference>
<dbReference type="GO" id="GO:0045739">
    <property type="term" value="P:positive regulation of DNA repair"/>
    <property type="evidence" value="ECO:0000315"/>
    <property type="project" value="UniProtKB"/>
</dbReference>
<dbReference type="GO" id="GO:0045893">
    <property type="term" value="P:positive regulation of DNA-templated transcription"/>
    <property type="evidence" value="ECO:0000314"/>
    <property type="project" value="UniProtKB"/>
</dbReference>
<dbReference type="GO" id="GO:0010628">
    <property type="term" value="P:positive regulation of gene expression"/>
    <property type="evidence" value="ECO:0000315"/>
    <property type="project" value="BHF-UCL"/>
</dbReference>
<dbReference type="GO" id="GO:0045944">
    <property type="term" value="P:positive regulation of transcription by RNA polymerase II"/>
    <property type="evidence" value="ECO:0000314"/>
    <property type="project" value="UniProtKB"/>
</dbReference>
<dbReference type="GO" id="GO:0010575">
    <property type="term" value="P:positive regulation of vascular endothelial growth factor production"/>
    <property type="evidence" value="ECO:0000315"/>
    <property type="project" value="BHF-UCL"/>
</dbReference>
<dbReference type="GO" id="GO:0006301">
    <property type="term" value="P:postreplication repair"/>
    <property type="evidence" value="ECO:0000314"/>
    <property type="project" value="HGNC-UCL"/>
</dbReference>
<dbReference type="GO" id="GO:0051865">
    <property type="term" value="P:protein autoubiquitination"/>
    <property type="evidence" value="ECO:0000314"/>
    <property type="project" value="UniProtKB"/>
</dbReference>
<dbReference type="GO" id="GO:0085020">
    <property type="term" value="P:protein K6-linked ubiquitination"/>
    <property type="evidence" value="ECO:0000314"/>
    <property type="project" value="UniProtKB"/>
</dbReference>
<dbReference type="GO" id="GO:0016567">
    <property type="term" value="P:protein ubiquitination"/>
    <property type="evidence" value="ECO:0000314"/>
    <property type="project" value="HGNC-UCL"/>
</dbReference>
<dbReference type="GO" id="GO:0060816">
    <property type="term" value="P:random inactivation of X chromosome"/>
    <property type="evidence" value="ECO:0007669"/>
    <property type="project" value="Ensembl"/>
</dbReference>
<dbReference type="GO" id="GO:0051726">
    <property type="term" value="P:regulation of cell cycle"/>
    <property type="evidence" value="ECO:0000314"/>
    <property type="project" value="BHF-UCL"/>
</dbReference>
<dbReference type="GO" id="GO:2000001">
    <property type="term" value="P:regulation of DNA damage checkpoint"/>
    <property type="evidence" value="ECO:0000303"/>
    <property type="project" value="ComplexPortal"/>
</dbReference>
<dbReference type="GO" id="GO:0006282">
    <property type="term" value="P:regulation of DNA repair"/>
    <property type="evidence" value="ECO:0000303"/>
    <property type="project" value="ComplexPortal"/>
</dbReference>
<dbReference type="GO" id="GO:0006357">
    <property type="term" value="P:regulation of transcription by RNA polymerase II"/>
    <property type="evidence" value="ECO:0000315"/>
    <property type="project" value="UniProtKB"/>
</dbReference>
<dbReference type="GO" id="GO:0010212">
    <property type="term" value="P:response to ionizing radiation"/>
    <property type="evidence" value="ECO:0000315"/>
    <property type="project" value="UniProtKB"/>
</dbReference>
<dbReference type="GO" id="GO:0007549">
    <property type="term" value="P:sex-chromosome dosage compensation"/>
    <property type="evidence" value="ECO:0000318"/>
    <property type="project" value="GO_Central"/>
</dbReference>
<dbReference type="CDD" id="cd17735">
    <property type="entry name" value="BRCT_BRCA1_rpt1"/>
    <property type="match status" value="1"/>
</dbReference>
<dbReference type="CDD" id="cd17721">
    <property type="entry name" value="BRCT_BRCA1_rpt2"/>
    <property type="match status" value="1"/>
</dbReference>
<dbReference type="CDD" id="cd16498">
    <property type="entry name" value="RING-HC_BRCA1"/>
    <property type="match status" value="1"/>
</dbReference>
<dbReference type="FunFam" id="3.30.40.10:FF:000213">
    <property type="entry name" value="Breast cancer type 1 susceptibility protein homolog"/>
    <property type="match status" value="1"/>
</dbReference>
<dbReference type="FunFam" id="3.40.50.10190:FF:000006">
    <property type="entry name" value="Breast cancer type 1 susceptibility protein homolog"/>
    <property type="match status" value="1"/>
</dbReference>
<dbReference type="FunFam" id="3.40.50.10190:FF:000025">
    <property type="entry name" value="Breast cancer type 1 susceptibility protein homolog"/>
    <property type="match status" value="1"/>
</dbReference>
<dbReference type="Gene3D" id="3.40.50.10190">
    <property type="entry name" value="BRCT domain"/>
    <property type="match status" value="2"/>
</dbReference>
<dbReference type="Gene3D" id="3.30.40.10">
    <property type="entry name" value="Zinc/RING finger domain, C3HC4 (zinc finger)"/>
    <property type="match status" value="1"/>
</dbReference>
<dbReference type="IDEAL" id="IID00042"/>
<dbReference type="InterPro" id="IPR011364">
    <property type="entry name" value="BRCA1"/>
</dbReference>
<dbReference type="InterPro" id="IPR031099">
    <property type="entry name" value="BRCA1-associated"/>
</dbReference>
<dbReference type="InterPro" id="IPR025994">
    <property type="entry name" value="BRCA1_serine_dom"/>
</dbReference>
<dbReference type="InterPro" id="IPR001357">
    <property type="entry name" value="BRCT_dom"/>
</dbReference>
<dbReference type="InterPro" id="IPR036420">
    <property type="entry name" value="BRCT_dom_sf"/>
</dbReference>
<dbReference type="InterPro" id="IPR018957">
    <property type="entry name" value="Znf_C3HC4_RING-type"/>
</dbReference>
<dbReference type="InterPro" id="IPR001841">
    <property type="entry name" value="Znf_RING"/>
</dbReference>
<dbReference type="InterPro" id="IPR013083">
    <property type="entry name" value="Znf_RING/FYVE/PHD"/>
</dbReference>
<dbReference type="InterPro" id="IPR017907">
    <property type="entry name" value="Znf_RING_CS"/>
</dbReference>
<dbReference type="PANTHER" id="PTHR13763:SF0">
    <property type="entry name" value="BREAST CANCER TYPE 1 SUSCEPTIBILITY PROTEIN"/>
    <property type="match status" value="1"/>
</dbReference>
<dbReference type="PANTHER" id="PTHR13763">
    <property type="entry name" value="BREAST CANCER TYPE 1 SUSCEPTIBILITY PROTEIN BRCA1"/>
    <property type="match status" value="1"/>
</dbReference>
<dbReference type="Pfam" id="PF00533">
    <property type="entry name" value="BRCT"/>
    <property type="match status" value="2"/>
</dbReference>
<dbReference type="Pfam" id="PF12820">
    <property type="entry name" value="BRCT_assoc"/>
    <property type="match status" value="1"/>
</dbReference>
<dbReference type="Pfam" id="PF00097">
    <property type="entry name" value="zf-C3HC4"/>
    <property type="match status" value="1"/>
</dbReference>
<dbReference type="PIRSF" id="PIRSF001734">
    <property type="entry name" value="BRCA1"/>
    <property type="match status" value="1"/>
</dbReference>
<dbReference type="PRINTS" id="PR00493">
    <property type="entry name" value="BRSTCANCERI"/>
</dbReference>
<dbReference type="SMART" id="SM00292">
    <property type="entry name" value="BRCT"/>
    <property type="match status" value="2"/>
</dbReference>
<dbReference type="SMART" id="SM00184">
    <property type="entry name" value="RING"/>
    <property type="match status" value="1"/>
</dbReference>
<dbReference type="SUPFAM" id="SSF52113">
    <property type="entry name" value="BRCT domain"/>
    <property type="match status" value="2"/>
</dbReference>
<dbReference type="SUPFAM" id="SSF57850">
    <property type="entry name" value="RING/U-box"/>
    <property type="match status" value="1"/>
</dbReference>
<dbReference type="PROSITE" id="PS50172">
    <property type="entry name" value="BRCT"/>
    <property type="match status" value="2"/>
</dbReference>
<dbReference type="PROSITE" id="PS00518">
    <property type="entry name" value="ZF_RING_1"/>
    <property type="match status" value="1"/>
</dbReference>
<dbReference type="PROSITE" id="PS50089">
    <property type="entry name" value="ZF_RING_2"/>
    <property type="match status" value="1"/>
</dbReference>
<name>BRCA1_HUMAN</name>
<feature type="chain" id="PRO_0000055830" description="Breast cancer type 1 susceptibility protein">
    <location>
        <begin position="1"/>
        <end position="1863"/>
    </location>
</feature>
<feature type="domain" description="BRCT 1" evidence="2">
    <location>
        <begin position="1642"/>
        <end position="1736"/>
    </location>
</feature>
<feature type="domain" description="BRCT 2" evidence="2">
    <location>
        <begin position="1756"/>
        <end position="1855"/>
    </location>
</feature>
<feature type="zinc finger region" description="RING-type" evidence="3">
    <location>
        <begin position="24"/>
        <end position="65"/>
    </location>
</feature>
<feature type="region of interest" description="Disordered" evidence="4">
    <location>
        <begin position="230"/>
        <end position="270"/>
    </location>
</feature>
<feature type="region of interest" description="Disordered" evidence="4">
    <location>
        <begin position="306"/>
        <end position="338"/>
    </location>
</feature>
<feature type="region of interest" description="Disordered" evidence="4">
    <location>
        <begin position="534"/>
        <end position="570"/>
    </location>
</feature>
<feature type="region of interest" description="Disordered" evidence="4">
    <location>
        <begin position="654"/>
        <end position="709"/>
    </location>
</feature>
<feature type="region of interest" description="Disordered" evidence="4">
    <location>
        <begin position="1181"/>
        <end position="1216"/>
    </location>
</feature>
<feature type="region of interest" description="Disordered" evidence="4">
    <location>
        <begin position="1322"/>
        <end position="1387"/>
    </location>
</feature>
<feature type="region of interest" description="Interaction with PALB2" evidence="55">
    <location>
        <begin position="1397"/>
        <end position="1424"/>
    </location>
</feature>
<feature type="region of interest" description="Disordered" evidence="4">
    <location>
        <begin position="1440"/>
        <end position="1505"/>
    </location>
</feature>
<feature type="region of interest" description="Disordered" evidence="4">
    <location>
        <begin position="1565"/>
        <end position="1596"/>
    </location>
</feature>
<feature type="compositionally biased region" description="Basic and acidic residues" evidence="4">
    <location>
        <begin position="248"/>
        <end position="260"/>
    </location>
</feature>
<feature type="compositionally biased region" description="Basic and acidic residues" evidence="4">
    <location>
        <begin position="327"/>
        <end position="338"/>
    </location>
</feature>
<feature type="compositionally biased region" description="Low complexity" evidence="4">
    <location>
        <begin position="534"/>
        <end position="544"/>
    </location>
</feature>
<feature type="compositionally biased region" description="Polar residues" evidence="4">
    <location>
        <begin position="1373"/>
        <end position="1387"/>
    </location>
</feature>
<feature type="compositionally biased region" description="Polar residues" evidence="4">
    <location>
        <begin position="1445"/>
        <end position="1470"/>
    </location>
</feature>
<feature type="modified residue" description="N-acetylmethionine" evidence="103">
    <location>
        <position position="1"/>
    </location>
</feature>
<feature type="modified residue" description="Phosphoserine" evidence="101 102 104">
    <location>
        <position position="114"/>
    </location>
</feature>
<feature type="modified residue" description="Phosphoserine" evidence="99 100">
    <location>
        <position position="395"/>
    </location>
</feature>
<feature type="modified residue" description="Phosphoserine" evidence="99 100">
    <location>
        <position position="398"/>
    </location>
</feature>
<feature type="modified residue" description="Phosphoserine" evidence="101">
    <location>
        <position position="423"/>
    </location>
</feature>
<feature type="modified residue" description="Phosphoserine" evidence="104">
    <location>
        <position position="434"/>
    </location>
</feature>
<feature type="modified residue" description="Phosphoserine" evidence="104">
    <location>
        <position position="551"/>
    </location>
</feature>
<feature type="modified residue" description="Phosphoserine" evidence="101 104">
    <location>
        <position position="694"/>
    </location>
</feature>
<feature type="modified residue" description="Phosphoserine" evidence="104">
    <location>
        <position position="708"/>
    </location>
</feature>
<feature type="modified residue" description="Phosphoserine" evidence="1">
    <location>
        <position position="725"/>
    </location>
</feature>
<feature type="modified residue" description="Phosphoserine" evidence="99">
    <location>
        <position position="753"/>
    </location>
</feature>
<feature type="modified residue" description="Phosphoserine" evidence="1">
    <location>
        <position position="840"/>
    </location>
</feature>
<feature type="modified residue" description="Phosphoserine; by CHEK2" evidence="9 59">
    <location>
        <position position="988"/>
    </location>
</feature>
<feature type="modified residue" description="Phosphoserine" evidence="104">
    <location>
        <position position="1009"/>
    </location>
</feature>
<feature type="modified residue" description="Phosphoserine; by ATR; in vitro" evidence="11">
    <location>
        <position position="1143"/>
    </location>
</feature>
<feature type="modified residue" description="Phosphoserine" evidence="104">
    <location>
        <position position="1189"/>
    </location>
</feature>
<feature type="modified residue" description="Phosphoserine" evidence="104">
    <location>
        <position position="1191"/>
    </location>
</feature>
<feature type="modified residue" description="Phosphoserine" evidence="99">
    <location>
        <position position="1211"/>
    </location>
</feature>
<feature type="modified residue" description="Phosphoserine" evidence="99">
    <location>
        <position position="1217"/>
    </location>
</feature>
<feature type="modified residue" description="Phosphoserine" evidence="99 102">
    <location>
        <position position="1218"/>
    </location>
</feature>
<feature type="modified residue" description="Phosphoserine; by ATR; in vitro" evidence="11">
    <location>
        <position position="1280"/>
    </location>
</feature>
<feature type="modified residue" description="Phosphoserine" evidence="101">
    <location>
        <position position="1328"/>
    </location>
</feature>
<feature type="modified residue" description="Phosphoserine" evidence="98 101 102">
    <location>
        <position position="1336"/>
    </location>
</feature>
<feature type="modified residue" description="Phosphoserine" evidence="101 102">
    <location>
        <position position="1342"/>
    </location>
</feature>
<feature type="modified residue" description="Phosphoserine; by ATM and ATR" evidence="11">
    <location>
        <position position="1387"/>
    </location>
</feature>
<feature type="modified residue" description="Phosphothreonine; by ATR; in vitro" evidence="11">
    <location>
        <position position="1394"/>
    </location>
</feature>
<feature type="modified residue" description="Phosphoserine; by ATM and ATR" evidence="11">
    <location>
        <position position="1423"/>
    </location>
</feature>
<feature type="modified residue" description="Phosphoserine; by ATR; in vitro" evidence="11">
    <location>
        <position position="1457"/>
    </location>
</feature>
<feature type="modified residue" description="Phosphoserine; by ATM" evidence="61">
    <location>
        <position position="1524"/>
    </location>
</feature>
<feature type="modified residue" description="Phosphoserine" evidence="104">
    <location>
        <position position="1542"/>
    </location>
</feature>
<feature type="cross-link" description="Glycyl lysine isopeptide (Lys-Gly) (interchain with G-Cter in SUMO2)" evidence="107">
    <location>
        <position position="109"/>
    </location>
</feature>
<feature type="cross-link" description="Glycyl lysine isopeptide (Lys-Gly) (interchain with G-Cter in SUMO2)" evidence="107">
    <location>
        <position position="301"/>
    </location>
</feature>
<feature type="cross-link" description="Glycyl lysine isopeptide (Lys-Gly) (interchain with G-Cter in SUMO2)" evidence="105 106 107">
    <location>
        <position position="339"/>
    </location>
</feature>
<feature type="cross-link" description="Glycyl lysine isopeptide (Lys-Gly) (interchain with G-Cter in SUMO2)" evidence="106 107">
    <location>
        <position position="443"/>
    </location>
</feature>
<feature type="cross-link" description="Glycyl lysine isopeptide (Lys-Gly) (interchain with G-Cter in SUMO2)" evidence="105 107">
    <location>
        <position position="459"/>
    </location>
</feature>
<feature type="cross-link" description="Glycyl lysine isopeptide (Lys-Gly) (interchain with G-Cter in SUMO2)" evidence="107">
    <location>
        <position position="519"/>
    </location>
</feature>
<feature type="cross-link" description="Glycyl lysine isopeptide (Lys-Gly) (interchain with G-Cter in SUMO2)" evidence="105 106 107">
    <location>
        <position position="583"/>
    </location>
</feature>
<feature type="cross-link" description="Glycyl lysine isopeptide (Lys-Gly) (interchain with G-Cter in SUMO2)" evidence="105">
    <location>
        <position position="654"/>
    </location>
</feature>
<feature type="cross-link" description="Glycyl lysine isopeptide (Lys-Gly) (interchain with G-Cter in SUMO2)" evidence="105">
    <location>
        <position position="734"/>
    </location>
</feature>
<feature type="cross-link" description="Glycyl lysine isopeptide (Lys-Gly) (interchain with G-Cter in SUMO2)" evidence="105">
    <location>
        <position position="739"/>
    </location>
</feature>
<feature type="cross-link" description="Glycyl lysine isopeptide (Lys-Gly) (interchain with G-Cter in SUMO2)" evidence="107">
    <location>
        <position position="918"/>
    </location>
</feature>
<feature type="cross-link" description="Glycyl lysine isopeptide (Lys-Gly) (interchain with G-Cter in SUMO2)" evidence="107">
    <location>
        <position position="987"/>
    </location>
</feature>
<feature type="cross-link" description="Glycyl lysine isopeptide (Lys-Gly) (interchain with G-Cter in SUMO2)" evidence="107">
    <location>
        <position position="1079"/>
    </location>
</feature>
<feature type="splice variant" id="VSP_057569" description="In isoform 8.">
    <location>
        <begin position="1"/>
        <end position="47"/>
    </location>
</feature>
<feature type="splice variant" id="VSP_035396" description="In isoform 4." evidence="95">
    <location>
        <begin position="1"/>
        <end position="17"/>
    </location>
</feature>
<feature type="splice variant" id="VSP_047891" description="In isoform 2." evidence="94">
    <location>
        <begin position="64"/>
        <end position="1863"/>
    </location>
</feature>
<feature type="splice variant" id="VSP_035398" description="In isoform 5." evidence="95">
    <location>
        <begin position="224"/>
        <end position="1365"/>
    </location>
</feature>
<feature type="splice variant" id="VSP_035399" description="In isoform 3 and isoform 6." evidence="92 93">
    <location>
        <begin position="264"/>
        <end position="1366"/>
    </location>
</feature>
<feature type="splice variant" id="VSP_043797" description="In isoform 3 and isoform 6." evidence="92 93">
    <location>
        <position position="1453"/>
    </location>
</feature>
<feature type="splice variant" id="VSP_055404" description="In isoform 7." evidence="92">
    <original>A</original>
    <variation>DSHIHGQRNNSMFSKRPREHIS</variation>
    <location>
        <position position="1453"/>
    </location>
</feature>
<feature type="splice variant" id="VSP_043798" description="In isoform 6." evidence="92">
    <original>DQLEWMVQLCGASVVKELSSFTLGTGVHPIVVVQPDAWTEDNGFHAIGQMCEAPVVTREWVLDSVALYQCQELDTYLIPQIPHSHY</original>
    <variation>GCPPNCGCAARCLDRGQWLPCNWADV</variation>
    <location>
        <begin position="1778"/>
        <end position="1863"/>
    </location>
</feature>
<feature type="sequence variant" id="VAR_070458" description="In BC; uncertain significance; dbSNP:rs786203152." evidence="65">
    <original>S</original>
    <variation>F</variation>
    <location>
        <position position="4"/>
    </location>
</feature>
<feature type="sequence variant" id="VAR_020679" description="In BC and BROVCA1." evidence="30">
    <original>E</original>
    <variation>K</variation>
    <location>
        <position position="10"/>
    </location>
</feature>
<feature type="sequence variant" id="VAR_007754" description="Found in breast-ovarian cancer patients; uncertain significance; dbSNP:rs80357017.">
    <original>V</original>
    <variation>A</variation>
    <location>
        <position position="11"/>
    </location>
</feature>
<feature type="sequence variant" id="VAR_063899" description="In BC; pathogenic; dbSNP:rs80356929." evidence="47 65">
    <original>M</original>
    <variation>T</variation>
    <location>
        <position position="18"/>
    </location>
</feature>
<feature type="sequence variant" id="VAR_007755" description="Found in breast-ovarian cancer patients; uncertain significance; dbSNP:rs80357406.">
    <original>I</original>
    <variation>V</variation>
    <location>
        <position position="21"/>
    </location>
</feature>
<feature type="sequence variant" id="VAR_007756" description="In BC; dbSNP:rs80357438." evidence="86">
    <original>L</original>
    <variation>S</variation>
    <location>
        <position position="22"/>
    </location>
</feature>
<feature type="sequence variant" id="VAR_020680" description="In BC and BROVCA1." evidence="30">
    <original>E</original>
    <variation>K</variation>
    <location>
        <position position="23"/>
    </location>
</feature>
<feature type="sequence variant" id="VAR_035947" description="In a breast cancer sample; somatic mutation." evidence="43">
    <original>L</original>
    <variation>F</variation>
    <location>
        <position position="30"/>
    </location>
</feature>
<feature type="sequence variant" id="VAR_070459" description="In BC; benign; functionally neutral in vitro; dbSNP:rs769650474." evidence="65">
    <original>K</original>
    <variation>Q</variation>
    <location>
        <position position="45"/>
    </location>
</feature>
<feature type="sequence variant" id="VAR_007757" description="In BC and OC; pathogenic; no interaction with BAP1; dbSNP:rs28897672." evidence="28 31 65 76 78 85 88">
    <original>C</original>
    <variation>G</variation>
    <location>
        <position position="61"/>
    </location>
</feature>
<feature type="sequence variant" id="VAR_007758" description="In BC; no interaction with BAP1; dbSNP:rs80357064." evidence="65 75 84 85">
    <original>C</original>
    <variation>G</variation>
    <location>
        <position position="64"/>
    </location>
</feature>
<feature type="sequence variant" id="VAR_007759" description="In BC; pathogenic; dbSNP:rs55851803.">
    <original>C</original>
    <variation>Y</variation>
    <location>
        <position position="64"/>
    </location>
</feature>
<feature type="sequence variant" id="VAR_070460" description="In BC; benign; functionally neutral in vitro; dbSNP:rs80357102." evidence="65">
    <original>D</original>
    <variation>Y</variation>
    <location>
        <position position="67"/>
    </location>
</feature>
<feature type="sequence variant" id="VAR_020681" description="In BC; uncertain significance; dbSNP:rs80356913." evidence="28">
    <original>R</original>
    <variation>K</variation>
    <location>
        <position position="71"/>
    </location>
</feature>
<feature type="sequence variant" id="VAR_070461" description="In dbSNP:rs28897673." evidence="65">
    <original>Y</original>
    <variation>C</variation>
    <location>
        <position position="105"/>
    </location>
</feature>
<feature type="sequence variant" id="VAR_070462" description="In BC; benign; functionally neutral in vitro; dbSNP:rs80357413." evidence="65">
    <original>N</original>
    <variation>K</variation>
    <location>
        <position position="132"/>
    </location>
</feature>
<feature type="sequence variant" id="VAR_070463" description="In BC; benign; functionally neutral in vitro; dbSNP:rs55971303." evidence="65">
    <original>P</original>
    <variation>H</variation>
    <location>
        <position position="142"/>
    </location>
</feature>
<feature type="sequence variant" id="VAR_070464" description="In BC; uncertain significance; functionally neutral in vitro; dbSNP:rs748876625." evidence="65">
    <original>L</original>
    <variation>F</variation>
    <location>
        <position position="147"/>
    </location>
</feature>
<feature type="sequence variant" id="VAR_052077" description="In dbSNP:rs28897674.">
    <original>S</original>
    <variation>R</variation>
    <location>
        <position position="153"/>
    </location>
</feature>
<feature type="sequence variant" id="VAR_070465" description="In BC; uncertain significance; functionally neutral in vitro." evidence="65">
    <original>L</original>
    <variation>P</variation>
    <location>
        <position position="165"/>
    </location>
</feature>
<feature type="sequence variant" id="VAR_070466" description="In BC; benign; functionally neutral in vitro; dbSNP:rs80357325." evidence="65">
    <original>R</original>
    <variation>W</variation>
    <location>
        <position position="170"/>
    </location>
</feature>
<feature type="sequence variant" id="VAR_070467" description="In BC; benign; functionally neutral in vitro; dbSNP:rs55688530." evidence="65">
    <original>S</original>
    <variation>Y</variation>
    <location>
        <position position="186"/>
    </location>
</feature>
<feature type="sequence variant" id="VAR_070468" description="In BC; benign; functionally neutral in vitro; dbSNP:rs80357090." evidence="65">
    <original>V</original>
    <variation>I</variation>
    <location>
        <position position="191"/>
    </location>
</feature>
<feature type="sequence variant" id="VAR_008759" description="In ovarian cancer; uncertain significance." evidence="5">
    <original>E</original>
    <variation>K</variation>
    <location>
        <position position="227"/>
    </location>
</feature>
<feature type="sequence variant" id="VAR_070469" description="In BC; uncertain significance; functionally neutral in vitro; dbSNP:rs80357001." evidence="65">
    <original>T</original>
    <variation>M</variation>
    <location>
        <position position="231"/>
    </location>
</feature>
<feature type="sequence variant" id="VAR_007760" description="In dbSNP:rs80357396." evidence="83 88">
    <original>H</original>
    <variation>R</variation>
    <location>
        <position position="239"/>
    </location>
</feature>
<feature type="sequence variant" id="VAR_070470" description="In BC; uncertain significance; functionally neutral in vitro; dbSNP:rs80356865." evidence="65">
    <original>D</original>
    <variation>V</variation>
    <location>
        <position position="245"/>
    </location>
</feature>
<feature type="sequence variant" id="VAR_070471" description="In BC; benign; functionally neutral in vitro; dbSNP:rs28897675." evidence="65">
    <original>L</original>
    <variation>V</variation>
    <location>
        <position position="246"/>
    </location>
</feature>
<feature type="sequence variant" id="VAR_070472" description="In BC; uncertain significance; functionally neutral in vitro; dbSNP:rs80357244." evidence="65">
    <original>V</original>
    <variation>L</variation>
    <location>
        <position position="271"/>
    </location>
</feature>
<feature type="sequence variant" id="VAR_007761" description="In BC; dbSNP:rs80357244." evidence="79">
    <original>V</original>
    <variation>M</variation>
    <location>
        <position position="271"/>
    </location>
</feature>
<feature type="sequence variant" id="VAR_019944" description="In dbSNP:rs8176153." evidence="91">
    <original>G</original>
    <variation>S</variation>
    <location>
        <position position="275"/>
    </location>
</feature>
<feature type="sequence variant" id="VAR_008760" description="In BC; benign; dbSNP:rs80357015." evidence="6">
    <original>P</original>
    <variation>S</variation>
    <location>
        <position position="346"/>
    </location>
</feature>
<feature type="sequence variant" id="VAR_007762" description="In dbSNP:rs1799950." evidence="76 90 91">
    <original>Q</original>
    <variation>R</variation>
    <location>
        <position position="356"/>
    </location>
</feature>
<feature type="sequence variant" id="VAR_007763" description="In BC; dbSNP:rs80358325.">
    <location>
        <position position="369"/>
    </location>
</feature>
<feature type="sequence variant" id="VAR_007764" description="In dbSNP:rs56128296.">
    <original>I</original>
    <variation>M</variation>
    <location>
        <position position="379"/>
    </location>
</feature>
<feature type="sequence variant" id="VAR_007765" description="In BC; benign; dbSNP:rs56046357." evidence="86">
    <original>F</original>
    <variation>L</variation>
    <location>
        <position position="461"/>
    </location>
</feature>
<feature type="sequence variant" id="VAR_007766" description="In BC; dbSNP:rs397508869." evidence="86">
    <original>Y</original>
    <variation>D</variation>
    <location>
        <position position="465"/>
    </location>
</feature>
<feature type="sequence variant" id="VAR_007767" description="Found in breast-ovarian cancer patients; uncertain significance; dbSNP:rs80357224.">
    <original>R</original>
    <variation>I</variation>
    <location>
        <position position="507"/>
    </location>
</feature>
<feature type="sequence variant" id="VAR_007768" description="In BC; dbSNP:rs397508893." evidence="86">
    <original>G</original>
    <variation>V</variation>
    <location>
        <position position="552"/>
    </location>
</feature>
<feature type="sequence variant" id="VAR_020682" evidence="24">
    <original>N</original>
    <variation>I</variation>
    <location>
        <position position="656"/>
    </location>
</feature>
<feature type="sequence variant" id="VAR_070473" description="In BC; benign; functionally neutral in vitro; dbSNP:rs80357250." evidence="65">
    <original>L</original>
    <variation>F</variation>
    <location>
        <position position="668"/>
    </location>
</feature>
<feature type="sequence variant" id="VAR_007769" description="In dbSNP:rs4986850." evidence="33 91">
    <original>D</original>
    <variation>N</variation>
    <location>
        <position position="693"/>
    </location>
</feature>
<feature type="sequence variant" id="VAR_070474" description="In BC; uncertain significance; functionally neutral in vitro; dbSNP:rs28897681." evidence="65">
    <original>D</original>
    <variation>N</variation>
    <location>
        <position position="695"/>
    </location>
</feature>
<feature type="sequence variant" id="VAR_020110" description="In dbSNP:rs4986845.">
    <original>N</original>
    <variation>D</variation>
    <location>
        <position position="723"/>
    </location>
</feature>
<feature type="sequence variant" id="VAR_020683" description="In BC; dbSNP:rs80357114." evidence="25">
    <original>D</original>
    <variation>Y</variation>
    <location>
        <position position="749"/>
    </location>
</feature>
<feature type="sequence variant" id="VAR_035948" description="In a breast cancer sample; somatic mutation." evidence="43">
    <original>L</original>
    <variation>F</variation>
    <location>
        <position position="758"/>
    </location>
</feature>
<feature type="sequence variant" id="VAR_007770" description="In dbSNP:rs80357467." evidence="75 84">
    <original>V</original>
    <variation>A</variation>
    <location>
        <position position="772"/>
    </location>
</feature>
<feature type="sequence variant" id="VAR_035949" description="In a breast cancer sample; somatic mutation." evidence="43">
    <original>G</original>
    <variation>C</variation>
    <location>
        <position position="778"/>
    </location>
</feature>
<feature type="sequence variant" id="VAR_070475" description="In BC; uncertain significance; functionally neutral in vitro; dbSNP:rs876660005." evidence="65">
    <original>P</original>
    <variation>L</variation>
    <location>
        <position position="798"/>
    </location>
</feature>
<feature type="sequence variant" id="VAR_070476" description="In BC; benign; functionally neutral in vitro; dbSNP:rs28897682." evidence="65">
    <original>N</original>
    <variation>Y</variation>
    <location>
        <position position="810"/>
    </location>
</feature>
<feature type="sequence variant" id="VAR_007771" description="In dbSNP:rs56082113." evidence="84">
    <original>K</original>
    <variation>E</variation>
    <location>
        <position position="820"/>
    </location>
</feature>
<feature type="sequence variant" id="VAR_007772" description="In BC; benign; functionally neutral in vitro; dbSNP:rs28897683." evidence="65">
    <original>T</original>
    <variation>K</variation>
    <location>
        <position position="826"/>
    </location>
</feature>
<feature type="sequence variant" id="VAR_020684" description="In BROVCA1; uncertain significance; dbSNP:rs751656678." evidence="28">
    <original>H</original>
    <variation>Y</variation>
    <location>
        <position position="835"/>
    </location>
</feature>
<feature type="sequence variant" id="VAR_070477" description="In BC; benign; functionally neutral in vitro; dbSNP:rs80357337." evidence="65">
    <original>R</original>
    <variation>Q</variation>
    <location>
        <position position="841"/>
    </location>
</feature>
<feature type="sequence variant" id="VAR_007773" description="In BROVCA1; benign; dbSNP:rs1800709." evidence="81 88">
    <original>R</original>
    <variation>W</variation>
    <location>
        <position position="841"/>
    </location>
</feature>
<feature type="sequence variant" id="VAR_020685" description="In BC; benign; dbSNP:rs80356892." evidence="36 65">
    <original>Y</original>
    <variation>H</variation>
    <location>
        <position position="856"/>
    </location>
</feature>
<feature type="sequence variant" id="VAR_070478" description="In dbSNP:rs41286300." evidence="65">
    <original>R</original>
    <variation>C</variation>
    <location>
        <position position="866"/>
    </location>
</feature>
<feature type="sequence variant" id="VAR_020686" description="In BC; uncertain significance." evidence="28">
    <original>R</original>
    <variation>Q</variation>
    <location>
        <position position="866"/>
    </location>
</feature>
<feature type="sequence variant" id="VAR_007774" description="In dbSNP:rs799917." evidence="6 24 36 38 91">
    <original>P</original>
    <variation>L</variation>
    <location>
        <position position="871"/>
    </location>
</feature>
<feature type="sequence variant" id="VAR_020687" description="In BC; uncertain significance; dbSNP:rs80357480." evidence="28">
    <original>H</original>
    <variation>Y</variation>
    <location>
        <position position="888"/>
    </location>
</feature>
<feature type="sequence variant" id="VAR_007775" description="In BC; dbSNP:rs397508994." evidence="86">
    <original>L</original>
    <variation>S</variation>
    <location>
        <position position="892"/>
    </location>
</feature>
<feature type="sequence variant" id="VAR_080693" description="In FANCS." evidence="72">
    <location>
        <begin position="903"/>
        <end position="1863"/>
    </location>
</feature>
<feature type="sequence variant" id="VAR_021913" description="In dbSNP:rs4986847.">
    <original>I</original>
    <variation>L</variation>
    <location>
        <position position="925"/>
    </location>
</feature>
<feature type="sequence variant" id="VAR_007776" description="In BC; dbSNP:rs397509022." evidence="86">
    <original>G</original>
    <variation>D</variation>
    <location>
        <position position="960"/>
    </location>
</feature>
<feature type="sequence variant" id="VAR_020111" description="In dbSNP:rs4986848.">
    <original>F</original>
    <variation>S</variation>
    <location>
        <position position="989"/>
    </location>
</feature>
<feature type="sequence variant" id="VAR_007777" description="In dbSNP:rs1800704.">
    <original>M</original>
    <variation>I</variation>
    <location>
        <position position="1008"/>
    </location>
</feature>
<feature type="sequence variant" id="VAR_007778" description="In BC; dbSNP:rs397509034." evidence="86">
    <original>T</original>
    <variation>I</variation>
    <location>
        <position position="1025"/>
    </location>
</feature>
<feature type="sequence variant" id="VAR_007779" description="In dbSNP:rs16941." evidence="6 36 38 76 91">
    <original>E</original>
    <variation>G</variation>
    <location>
        <position position="1038"/>
    </location>
</feature>
<feature type="sequence variant" id="VAR_007780" description="In dbSNP:rs4986852." evidence="33 75 76 84 91">
    <original>S</original>
    <variation>N</variation>
    <location>
        <position position="1040"/>
    </location>
</feature>
<feature type="sequence variant" id="VAR_007781" description="In BC; dbSNP:rs397509037." evidence="86">
    <original>V</original>
    <variation>A</variation>
    <location>
        <position position="1047"/>
    </location>
</feature>
<feature type="sequence variant" id="VAR_020688" description="In dbSNP:rs80357184." evidence="33 65">
    <original>E</original>
    <variation>A</variation>
    <location>
        <position position="1060"/>
    </location>
</feature>
<feature type="sequence variant" id="VAR_070479" description="In BC; benign; functionally neutral in vitro; dbSNP:rs41293447." evidence="65">
    <original>S</original>
    <variation>N</variation>
    <location>
        <position position="1101"/>
    </location>
</feature>
<feature type="sequence variant" id="VAR_020689" description="In BC; benign; dbSNP:rs80357228." evidence="28">
    <original>S</original>
    <variation>I</variation>
    <location>
        <position position="1139"/>
    </location>
</feature>
<feature type="sequence variant" id="VAR_019945" description="In BC; benign; functionally neutral in vitro; dbSNP:rs2227945." evidence="65 91">
    <original>S</original>
    <variation>G</variation>
    <location>
        <position position="1140"/>
    </location>
</feature>
<feature type="sequence variant" id="VAR_070480" description="In BC; uncertain significance; functionally neutral in vitro." evidence="65">
    <original>S</original>
    <variation>N</variation>
    <location>
        <position position="1140"/>
    </location>
</feature>
<feature type="sequence variant" id="VAR_007782" description="In BC; benign; dbSNP:rs80357272." evidence="79">
    <original>P</original>
    <variation>S</variation>
    <location>
        <position position="1150"/>
    </location>
</feature>
<feature type="sequence variant" id="VAR_007783" description="In dbSNP:rs16942." evidence="6 30 36 38 76 91">
    <original>K</original>
    <variation>R</variation>
    <location>
        <position position="1183"/>
    </location>
</feature>
<feature type="sequence variant" id="VAR_020690" description="In BC and BROVCA1." evidence="30">
    <original>S</original>
    <variation>I</variation>
    <location>
        <position position="1187"/>
    </location>
</feature>
<feature type="sequence variant" id="VAR_020691" description="In BC and BROVCA1; benign; dbSNP:rs56214134." evidence="30">
    <original>Q</original>
    <variation>H</variation>
    <location>
        <position position="1200"/>
    </location>
</feature>
<feature type="sequence variant" id="VAR_020692" description="In BC." evidence="30">
    <original>R</original>
    <variation>I</variation>
    <location>
        <position position="1204"/>
    </location>
</feature>
<feature type="sequence variant" id="VAR_020693" description="In BC." evidence="30">
    <original>K</original>
    <variation>N</variation>
    <location>
        <position position="1207"/>
    </location>
</feature>
<feature type="sequence variant" id="VAR_020694" description="In BC; uncertain significance; dbSNP:rs1060502347." evidence="28">
    <original>E</original>
    <variation>G</variation>
    <location>
        <position position="1210"/>
    </location>
</feature>
<feature type="sequence variant" id="VAR_070481" description="In BC; benign; functionally neutral in vitro; dbSNP:rs80356923." evidence="65">
    <original>E</original>
    <variation>K</variation>
    <location>
        <position position="1214"/>
    </location>
</feature>
<feature type="sequence variant" id="VAR_020695" description="In BC and BROVCA1." evidence="30">
    <original>S</original>
    <variation>Y</variation>
    <location>
        <position position="1217"/>
    </location>
</feature>
<feature type="sequence variant" id="VAR_007784" description="In dbSNP:rs80356876.">
    <original>E</original>
    <variation>D</variation>
    <location>
        <position position="1219"/>
    </location>
</feature>
<feature type="sequence variant" id="VAR_020696" description="In BROVCA1." evidence="30">
    <original>F</original>
    <variation>L</variation>
    <location>
        <position position="1226"/>
    </location>
</feature>
<feature type="sequence variant" id="VAR_052078" description="In BC; benign; functionally neutral in vitro; dbSNP:rs28897687." evidence="65">
    <original>N</original>
    <variation>K</variation>
    <location>
        <position position="1236"/>
    </location>
</feature>
<feature type="sequence variant" id="VAR_020697" description="In BROVCA1." evidence="30">
    <original>R</original>
    <variation>G</variation>
    <location>
        <position position="1243"/>
    </location>
</feature>
<feature type="sequence variant" id="VAR_052079" description="In dbSNP:rs28897686." evidence="65">
    <original>E</original>
    <variation>K</variation>
    <location>
        <position position="1250"/>
    </location>
</feature>
<feature type="sequence variant" id="VAR_070482" description="In BC; uncertain significance; functionally neutral in vitro; dbSNP:rs587782190." evidence="65">
    <original>L</original>
    <variation>S</variation>
    <location>
        <position position="1267"/>
    </location>
</feature>
<feature type="sequence variant" id="VAR_070483" description="In BC; uncertain significance; functionally neutral in vitro; dbSNP:rs80357217." evidence="65">
    <original>E</original>
    <variation>V</variation>
    <location>
        <position position="1282"/>
    </location>
</feature>
<feature type="sequence variant" id="VAR_020698" description="In BC; uncertain significance; dbSNP:rs1450793674." evidence="28">
    <original>S</original>
    <variation>P</variation>
    <location>
        <position position="1297"/>
    </location>
</feature>
<feature type="sequence variant" id="VAR_070484" description="In BC; uncertain significance; functionally neutral in vitro." evidence="65">
    <location>
        <position position="1297"/>
    </location>
</feature>
<feature type="sequence variant" id="VAR_070485" description="In BC; uncertain significance; functionally neutral in vitro; dbSNP:rs273900719." evidence="65">
    <original>S</original>
    <variation>R</variation>
    <location>
        <position position="1301"/>
    </location>
</feature>
<feature type="sequence variant" id="VAR_070486" description="In BC; uncertain significance; functionally neutral in vitro; dbSNP:rs80357407." evidence="65">
    <original>E</original>
    <variation>K</variation>
    <location>
        <position position="1346"/>
    </location>
</feature>
<feature type="sequence variant" id="VAR_007785" description="In dbSNP:rs28897689." evidence="20">
    <original>R</original>
    <variation>G</variation>
    <location>
        <position position="1347"/>
    </location>
</feature>
<feature type="sequence variant" id="VAR_070487" description="In BC; benign; functionally neutral in vitro; dbSNP:rs28897690." evidence="65">
    <original>V</original>
    <variation>I</variation>
    <location>
        <position position="1378"/>
    </location>
</feature>
<feature type="sequence variant" id="VAR_070488" description="In BC; uncertain significance; functionally neutral in vitro; dbSNP:rs80357306." evidence="65">
    <original>M</original>
    <variation>V</variation>
    <location>
        <position position="1400"/>
    </location>
</feature>
<feature type="sequence variant" id="VAR_008761" description="In dbSNP:rs1800707.">
    <original>K</original>
    <variation>N</variation>
    <location>
        <position position="1406"/>
    </location>
</feature>
<feature type="sequence variant" id="VAR_070489" description="In BC; uncertain significance; functionally neutral in vitro; dbSNP:rs80357492." evidence="65">
    <original>L</original>
    <variation>P</variation>
    <location>
        <position position="1407"/>
    </location>
</feature>
<feature type="sequence variant" id="VAR_020699" description="In BC and OC; uncertain significance; decreased interaction with PALB2; dbSNP:rs273900729." evidence="31 55 65">
    <original>M</original>
    <variation>T</variation>
    <location>
        <position position="1411"/>
    </location>
</feature>
<feature type="sequence variant" id="VAR_007786">
    <original>S</original>
    <variation>P</variation>
    <location>
        <position position="1431"/>
    </location>
</feature>
<feature type="sequence variant" id="VAR_007787" description="In BC; benign; functionally neutral in vitro; dbSNP:rs41293455." evidence="65 75 84">
    <original>R</original>
    <variation>G</variation>
    <location>
        <position position="1443"/>
    </location>
</feature>
<feature type="sequence variant" id="VAR_020112" description="In dbSNP:rs4986849.">
    <original>R</original>
    <variation>Q</variation>
    <location>
        <position position="1443"/>
    </location>
</feature>
<feature type="sequence variant" id="VAR_070490" description="In BC; uncertain significance; functionally neutral in vitro; dbSNP:rs80357486." evidence="65">
    <original>S</original>
    <variation>G</variation>
    <location>
        <position position="1448"/>
    </location>
</feature>
<feature type="sequence variant" id="VAR_070491" description="In BC; uncertain significance; functionally neutral in vitro; dbSNP:rs397507232." evidence="65">
    <original>S</original>
    <variation>C</variation>
    <location>
        <position position="1486"/>
    </location>
</feature>
<feature type="sequence variant" id="VAR_063900" description="In BC; dbSNP:rs80357389." evidence="47">
    <original>R</original>
    <variation>M</variation>
    <location>
        <position position="1495"/>
    </location>
</feature>
<feature type="sequence variant" id="VAR_007788" description="In dbSNP:rs1800744." evidence="20 84 88">
    <original>S</original>
    <variation>I</variation>
    <location>
        <position position="1512"/>
    </location>
</feature>
<feature type="sequence variant" id="VAR_070492" description="In BC; benign; functionally neutral in vitro; dbSNP:rs55815649." evidence="65">
    <original>V</original>
    <variation>M</variation>
    <location>
        <position position="1534"/>
    </location>
</feature>
<feature type="sequence variant" id="VAR_007789" description="Found in breast cancer; uncertain significance; dbSNP:rs56158747.">
    <original>T</original>
    <variation>I</variation>
    <location>
        <position position="1561"/>
    </location>
</feature>
<feature type="sequence variant" id="VAR_070493" description="In BC; uncertain significance; functionally neutral in vitro." evidence="65">
    <original>R</original>
    <variation>P</variation>
    <location>
        <position position="1589"/>
    </location>
</feature>
<feature type="sequence variant" id="VAR_007790" description="In dbSNP:rs80356943.">
    <original>K</original>
    <variation>E</variation>
    <location>
        <position position="1606"/>
    </location>
</feature>
<feature type="sequence variant" id="VAR_007791" description="In dbSNP:rs1799966." evidence="6 24 38 76 83 91">
    <original>S</original>
    <variation>G</variation>
    <location>
        <position position="1613"/>
    </location>
</feature>
<feature type="sequence variant" id="VAR_019946" description="In dbSNP:rs8176219." evidence="91">
    <original>T</original>
    <variation>A</variation>
    <location>
        <position position="1620"/>
    </location>
</feature>
<feature type="sequence variant" id="VAR_063901" description="In BROVCA1; major splicing aberration identified with this mutant; dbSNP:rs80356862." evidence="47 60">
    <original>A</original>
    <variation>G</variation>
    <location>
        <position position="1623"/>
    </location>
</feature>
<feature type="sequence variant" id="VAR_007793" description="In dbSNP:rs4986854." evidence="36 65">
    <original>M</original>
    <variation>T</variation>
    <location>
        <position position="1628"/>
    </location>
</feature>
<feature type="sequence variant" id="VAR_007792" description="Found in breast and ovarian cancer patients; uncertain significance; dbSNP:rs80357465.">
    <original>M</original>
    <variation>V</variation>
    <location>
        <position position="1628"/>
    </location>
</feature>
<feature type="sequence variant" id="VAR_007794" description="In dbSNP:rs80357048." evidence="77 84">
    <original>P</original>
    <variation>L</variation>
    <location>
        <position position="1637"/>
    </location>
</feature>
<feature type="sequence variant" id="VAR_008762" description="In ovarian cancer; uncertain significance; dbSNP:rs1800726." evidence="5">
    <original>A</original>
    <variation>P</variation>
    <location>
        <position position="1641"/>
    </location>
</feature>
<feature type="sequence variant" id="VAR_070494" description="In BC; uncertain significance; dbSNP:rs80356938." evidence="65">
    <original>S</original>
    <variation>F</variation>
    <location>
        <position position="1651"/>
    </location>
</feature>
<feature type="sequence variant" id="VAR_070495" description="In BC; uncertain significance; dbSNP:rs879254042." evidence="65">
    <original>S</original>
    <variation>P</variation>
    <location>
        <position position="1651"/>
    </location>
</feature>
<feature type="sequence variant" id="VAR_007795" description="In dbSNP:rs1799967." evidence="20 38 65 84">
    <original>M</original>
    <variation>I</variation>
    <location>
        <position position="1652"/>
    </location>
</feature>
<feature type="sequence variant" id="VAR_070496" description="In BC; uncertain significance; functionally impaired in vitro; dbSNP:rs80357390." evidence="65">
    <original>S</original>
    <variation>F</variation>
    <location>
        <position position="1655"/>
    </location>
</feature>
<feature type="sequence variant" id="VAR_052080" description="In dbSNP:rs28897695.">
    <original>F</original>
    <variation>C</variation>
    <location>
        <position position="1662"/>
    </location>
</feature>
<feature type="sequence variant" id="VAR_020700" description="In dbSNP:rs80357169." evidence="33">
    <original>V</original>
    <variation>M</variation>
    <location>
        <position position="1665"/>
    </location>
</feature>
<feature type="sequence variant" id="VAR_063902" description="In BC; pathogenic; dbSNP:rs80356890." evidence="47">
    <original>T</original>
    <variation>A</variation>
    <location>
        <position position="1685"/>
    </location>
</feature>
<feature type="sequence variant" id="VAR_063903" description="In BROVCA1; pathogenic." evidence="47 60">
    <original>T</original>
    <variation>I</variation>
    <location>
        <position position="1685"/>
    </location>
</feature>
<feature type="sequence variant" id="VAR_070497" description="In BC; uncertain significance; functionally impaired in vitro; dbSNP:rs397509218." evidence="65">
    <original>H</original>
    <variation>Q</variation>
    <location>
        <position position="1686"/>
    </location>
</feature>
<feature type="sequence variant" id="VAR_070498" description="In BC; uncertain significance; functionally impaired in vitro; dbSNP:rs730882166." evidence="65">
    <original>H</original>
    <variation>R</variation>
    <location>
        <position position="1686"/>
    </location>
</feature>
<feature type="sequence variant" id="VAR_070499" description="In BC; uncertain significance; functionally impaired in vitro; dbSNP:rs80358344." evidence="65">
    <location>
        <position position="1688"/>
    </location>
</feature>
<feature type="sequence variant" id="VAR_063904" description="In BC; uncertain significance; dbSNP:rs80357061." evidence="47">
    <original>M</original>
    <variation>R</variation>
    <location>
        <position position="1689"/>
    </location>
</feature>
<feature type="sequence variant" id="VAR_020701" description="In some patients with sporadic breast cancer; uncertain significance; dbSNP:rs397507239." evidence="36">
    <original>K</original>
    <variation>Q</variation>
    <location>
        <position position="1690"/>
    </location>
</feature>
<feature type="sequence variant" id="VAR_070500" description="In BC; uncertain significance; functionally impaired in vitro; dbSNP:rs80357034." evidence="65">
    <original>T</original>
    <variation>I</variation>
    <location>
        <position position="1691"/>
    </location>
</feature>
<feature type="sequence variant" id="VAR_008763" description="In ovarian cancer; uncertain significance; dbSNP:rs80187739." evidence="5">
    <original>D</original>
    <variation>N</variation>
    <location>
        <position position="1692"/>
    </location>
</feature>
<feature type="sequence variant" id="VAR_020702" description="In OC; pathogenic; dbSNP:rs80356993." evidence="31">
    <original>C</original>
    <variation>R</variation>
    <location>
        <position position="1697"/>
    </location>
</feature>
<feature type="sequence variant" id="VAR_070501" description="In BC; pathogenic; strongly reduces affinity for a BRIP1 phosphopeptide; functionally impaired in vitro; dbSNP:rs41293459." evidence="62 65">
    <original>R</original>
    <variation>Q</variation>
    <location>
        <position position="1699"/>
    </location>
</feature>
<feature type="sequence variant" id="VAR_075666" description="In BC, OC and FANCS; impairs protein stability; functionally impaired in vitro; dbSNP:rs55770810." evidence="31 47 62 65 67">
    <original>R</original>
    <variation>W</variation>
    <location>
        <position position="1699"/>
    </location>
</feature>
<feature type="sequence variant" id="VAR_070502" description="In BC; benign; dbSNP:rs80356860." evidence="65">
    <original>G</original>
    <variation>A</variation>
    <location>
        <position position="1706"/>
    </location>
</feature>
<feature type="sequence variant" id="VAR_063905" description="In BC; pathogenic; dbSNP:rs80356860." evidence="47 65">
    <original>G</original>
    <variation>E</variation>
    <location>
        <position position="1706"/>
    </location>
</feature>
<feature type="sequence variant" id="VAR_007796" description="In BC; abolishes ACACA binding; dbSNP:rs28897696." evidence="47 65 77">
    <original>A</original>
    <variation>E</variation>
    <location>
        <position position="1708"/>
    </location>
</feature>
<feature type="sequence variant" id="VAR_007797" evidence="36">
    <original>V</original>
    <variation>G</variation>
    <location>
        <position position="1713"/>
    </location>
</feature>
<feature type="sequence variant" id="VAR_063906" description="In BC; pathogenic; dbSNP:rs80357094." evidence="47">
    <original>S</original>
    <variation>R</variation>
    <location>
        <position position="1715"/>
    </location>
</feature>
<feature type="sequence variant" id="VAR_070503" description="In BC; uncertain significance; functionally impaired in vitro; dbSNP:rs80357239." evidence="65">
    <original>W</original>
    <variation>C</variation>
    <location>
        <position position="1718"/>
    </location>
</feature>
<feature type="sequence variant" id="VAR_070504" description="In BC; benign; functionally neutral in vitro; no effect on in vitro phosphorylation by ATR; dbSNP:rs56195342." evidence="11 65">
    <original>T</original>
    <variation>A</variation>
    <location>
        <position position="1720"/>
    </location>
</feature>
<feature type="sequence variant" id="VAR_070505" description="In BC; uncertain significance; dbSNP:rs397509238." evidence="65">
    <original>E</original>
    <variation>K</variation>
    <location>
        <position position="1735"/>
    </location>
</feature>
<feature type="sequence variant" id="VAR_070506" description="In BC and FANCS; pathogenic; decreased localization to DNA damage sites and reduced interaction with UIMC1/RAP80; dbSNP:rs45553935." evidence="64 65">
    <original>V</original>
    <variation>A</variation>
    <location>
        <position position="1736"/>
    </location>
</feature>
<feature type="sequence variant" id="VAR_063907" description="In BC; pathogenic; dbSNP:rs80356937." evidence="47">
    <original>G</original>
    <variation>R</variation>
    <location>
        <position position="1738"/>
    </location>
</feature>
<feature type="sequence variant" id="VAR_070507" description="In BC; uncertain significance; functionally impaired in vitro; dbSNP:rs80357227." evidence="65">
    <original>D</original>
    <variation>G</variation>
    <location>
        <position position="1739"/>
    </location>
</feature>
<feature type="sequence variant" id="VAR_070508" description="In BC; uncertain significance; functionally impaired in vitro; dbSNP:rs80357227." evidence="65">
    <original>D</original>
    <variation>V</variation>
    <location>
        <position position="1739"/>
    </location>
</feature>
<feature type="sequence variant" id="VAR_070509" description="In BC; uncertain significance; dbSNP:rs786202389." evidence="65">
    <original>H</original>
    <variation>Q</variation>
    <location>
        <position position="1746"/>
    </location>
</feature>
<feature type="sequence variant" id="VAR_007798" description="In ovarian cancer; uncertain significance; abolishes ACACA binding and strongly reduces BRIP1 binding; dbSNP:rs80357462." evidence="7 13 35">
    <original>P</original>
    <variation>R</variation>
    <location>
        <position position="1749"/>
    </location>
</feature>
<feature type="sequence variant" id="VAR_070510" description="In BC; uncertain significance; dbSNP:rs397509246." evidence="65">
    <original>R</original>
    <variation>T</variation>
    <location>
        <position position="1753"/>
    </location>
</feature>
<feature type="sequence variant" id="VAR_063908" description="In BC; pathogenic; functionally impaired in vitro; dbSNP:rs80357281." evidence="47 65">
    <original>L</original>
    <variation>P</variation>
    <location>
        <position position="1764"/>
    </location>
</feature>
<feature type="sequence variant" id="VAR_063909" description="In BC; pathogenic; dbSNP:rs80357463." evidence="47">
    <original>I</original>
    <variation>S</variation>
    <location>
        <position position="1766"/>
    </location>
</feature>
<feature type="sequence variant" id="VAR_070511" description="In BC; uncertain significance; functionally neutral in vitro; dbSNP:rs1597804426." evidence="65">
    <original>C</original>
    <variation>S</variation>
    <location>
        <position position="1767"/>
    </location>
</feature>
<feature type="sequence variant" id="VAR_070512" description="In BC; pathogenic; functionally impaired in vitro; dbSNP:rs863224765." evidence="65">
    <original>G</original>
    <variation>V</variation>
    <location>
        <position position="1770"/>
    </location>
</feature>
<feature type="sequence variant" id="VAR_063212" description="In BC; pathogenic; strongly reduced transcription transactivation; abolishes interaction with BRIP1 and RBBP8; dbSNP:rs41293463." evidence="49">
    <original>M</original>
    <variation>K</variation>
    <location>
        <position position="1775"/>
    </location>
</feature>
<feature type="sequence variant" id="VAR_007799" description="In BC; pathogenic; alters protein stability and abolishes ACACA and BRIP1 binding; dbSNP:rs41293463." evidence="13 23 35 74 77">
    <original>M</original>
    <variation>R</variation>
    <location>
        <position position="1775"/>
    </location>
</feature>
<feature type="sequence variant" id="VAR_008764" description="In ovarian cancer; uncertain significance; dbSNP:rs1800757." evidence="5">
    <original>P</original>
    <variation>S</variation>
    <location>
        <position position="1776"/>
    </location>
</feature>
<feature type="sequence variant" id="VAR_079607" description="In BC, BROVCA1 and OC; uncertain significance; dbSNP:rs80357474." evidence="71">
    <original>L</original>
    <variation>P</variation>
    <location>
        <position position="1780"/>
    </location>
</feature>
<feature type="sequence variant" id="VAR_070513" description="In BC; uncertain significance; functionally neutral in vitro." evidence="65">
    <original>W</original>
    <variation>C</variation>
    <location>
        <position position="1782"/>
    </location>
</feature>
<feature type="sequence variant" id="VAR_020704" description="In BROVCA1; uncertain significance; dbSNP:rs398122697." evidence="28">
    <original>L</original>
    <variation>P</variation>
    <location>
        <position position="1786"/>
    </location>
</feature>
<feature type="sequence variant" id="VAR_063910" description="In BC; pathogenic; dbSNP:rs80357069." evidence="47">
    <original>G</original>
    <variation>V</variation>
    <location>
        <position position="1788"/>
    </location>
</feature>
<feature type="sequence variant" id="VAR_070514" description="In BC; uncertain significance; functionally impaired in vitro; dbSNP:rs80357078." evidence="65">
    <original>A</original>
    <variation>T</variation>
    <location>
        <position position="1789"/>
    </location>
</feature>
<feature type="sequence variant" id="VAR_070515" description="In BC; uncertain significance; functionally neutral in vitro; dbSNP:rs397509275." evidence="65">
    <original>E</original>
    <variation>D</variation>
    <location>
        <position position="1794"/>
    </location>
</feature>
<feature type="sequence variant" id="VAR_070516" description="In BC; benign; functionally neutral in vitro; dbSNP:rs80356920." evidence="65">
    <original>V</original>
    <variation>D</variation>
    <location>
        <position position="1804"/>
    </location>
</feature>
<feature type="sequence variant" id="VAR_070517" description="In BC; uncertain significance; functionally neutral in vitro." evidence="65">
    <original>P</original>
    <variation>R</variation>
    <location>
        <position position="1812"/>
    </location>
</feature>
<feature type="sequence variant" id="VAR_008765" description="In ovarian cancer; uncertain significance; dbSNP:rs1800751." evidence="5">
    <original>P</original>
    <variation>S</variation>
    <location>
        <position position="1812"/>
    </location>
</feature>
<feature type="sequence variant" id="VAR_070518" description="In BC; pathogenic; functionally impaired in vitro; dbSNP:rs80356959." evidence="65">
    <original>W</original>
    <variation>R</variation>
    <location>
        <position position="1837"/>
    </location>
</feature>
<feature type="sequence variant" id="VAR_070519" description="In BC; uncertain significance; functionally neutral in vitro; dbSNP:rs80357183." evidence="65">
    <original>H</original>
    <variation>L</variation>
    <location>
        <position position="1862"/>
    </location>
</feature>
<feature type="mutagenesis site" description="Disrupts the interaction with E2 enzymes, thereby abolishing the E3 ubiquitin-protein ligase activity." evidence="42 58">
    <original>I</original>
    <variation>A</variation>
    <location>
        <position position="26"/>
    </location>
</feature>
<feature type="mutagenesis site" description="No ubiquitination of RBBP8. No restoration RBBP8-mediated focus formation or G2/M checkpoint control upon DNA damage." evidence="42 58">
    <original>I</original>
    <variation>E</variation>
    <location>
        <position position="26"/>
    </location>
</feature>
<feature type="mutagenesis site" description="No effect on interaction with BAP1." evidence="85">
    <original>R</original>
    <variation>G</variation>
    <location>
        <position position="71"/>
    </location>
</feature>
<feature type="mutagenesis site" description="Reduces in vitro phosphorylation by ATR." evidence="11">
    <original>S</original>
    <variation>A</variation>
    <location>
        <position position="1143"/>
    </location>
</feature>
<feature type="mutagenesis site" description="No effect on in vitro phosphorylation by ATR." evidence="11">
    <original>S</original>
    <variation>A</variation>
    <location>
        <position position="1239"/>
    </location>
</feature>
<feature type="mutagenesis site" description="Reduces in vitro phosphorylation by ATR." evidence="11">
    <original>S</original>
    <variation>A</variation>
    <location>
        <position position="1280"/>
    </location>
</feature>
<feature type="mutagenesis site" description="No effect on in vitro phosphorylation by ATR." evidence="11">
    <original>S</original>
    <variation>A</variation>
    <location>
        <position position="1298"/>
    </location>
</feature>
<feature type="mutagenesis site" description="No effect on in vitro phosphorylation by ATR." evidence="11">
    <original>S</original>
    <variation>A</variation>
    <location>
        <position position="1330"/>
    </location>
</feature>
<feature type="mutagenesis site" description="Loss of IR-induced S-phase checkpoint. Reduces in vitro phosphorylation by ATR." evidence="11 19">
    <original>S</original>
    <variation>A</variation>
    <location>
        <position position="1387"/>
    </location>
</feature>
<feature type="mutagenesis site" description="Reduces in vitro phosphorylation by ATR." evidence="11">
    <original>T</original>
    <variation>A</variation>
    <location>
        <position position="1394"/>
    </location>
</feature>
<feature type="mutagenesis site" description="Inhibition of the infrared-induced G2 arrest. Reduces phosphorylation by ATR." evidence="11 19">
    <original>S</original>
    <variation>A</variation>
    <location>
        <position position="1423"/>
    </location>
</feature>
<feature type="mutagenesis site" description="Reduces in vitro phosphorylation by ATR." evidence="11">
    <original>S</original>
    <variation>A</variation>
    <location>
        <position position="1457"/>
    </location>
</feature>
<feature type="mutagenesis site" description="No effect on in vitro phosphorylation by ATR." evidence="11">
    <original>S</original>
    <variation>A</variation>
    <location>
        <position position="1466"/>
    </location>
</feature>
<feature type="mutagenesis site" description="No change in infrared S-phase delay; when associated with A-1387. No effect on in vitro phosphorylation by ATR." evidence="11 19">
    <original>S</original>
    <variation>A</variation>
    <location>
        <position position="1524"/>
    </location>
</feature>
<feature type="mutagenesis site" description="Abolishes interaction with BRIP1." evidence="35">
    <original>S</original>
    <variation>A</variation>
    <location>
        <position position="1655"/>
    </location>
</feature>
<feature type="mutagenesis site" description="No effect on affinity for a BRIP1 phosphopeptide." evidence="62">
    <original>G</original>
    <variation>D</variation>
    <location>
        <position position="1656"/>
    </location>
</feature>
<feature type="mutagenesis site" description="Does not abolish ABRAXAS1 binding, but abolishes formation of a heterotetramer with ABRAXAS1." evidence="68">
    <original>F</original>
    <variation>S</variation>
    <location>
        <position position="1662"/>
    </location>
</feature>
<feature type="mutagenesis site" description="Does not abolish ABRAXAS1 binding, but abolishes formation of a heterotetramer with ABRAXAS1." evidence="68">
    <original>M</original>
    <variation>K</variation>
    <location>
        <position position="1663"/>
    </location>
</feature>
<feature type="mutagenesis site" description="Does not abolish ABRAXAS1 binding, but impairs formation of a heterotetramer with ABRAXAS1." evidence="68">
    <original>Y</original>
    <variation>A</variation>
    <location>
        <position position="1666"/>
    </location>
</feature>
<feature type="mutagenesis site" description="Impairs formation of a heterotetramer with ABRAXAS1." evidence="68">
    <original>R</original>
    <variation>E</variation>
    <location>
        <position position="1670"/>
    </location>
</feature>
<feature type="mutagenesis site" description="Impairs formation of a heterotetramer with ABRAXAS1." evidence="68">
    <original>K</original>
    <variation>E</variation>
    <location>
        <position position="1671"/>
    </location>
</feature>
<feature type="mutagenesis site" description="Strongly reduces affinity for a BRIP1 phosphopeptide." evidence="62">
    <original>T</original>
    <variation>A</variation>
    <location>
        <position position="1700"/>
    </location>
</feature>
<feature type="mutagenesis site" description="Abolishes interaction with BRIP1." evidence="35">
    <original>K</original>
    <variation>M</variation>
    <location>
        <position position="1702"/>
    </location>
</feature>
<feature type="mutagenesis site" description="Abolishes interaction with BRIP1." evidence="35">
    <original>G</original>
    <variation>E</variation>
    <location>
        <position position="1738"/>
    </location>
</feature>
<feature type="mutagenesis site" description="No effect on in vitro phosphorylation by ATR." evidence="11">
    <original>S</original>
    <variation>A</variation>
    <location>
        <position position="1755"/>
    </location>
</feature>
<feature type="mutagenesis site" description="Mildly reduces affinity for a BRIP1 phosphopeptide." evidence="62">
    <original>R</original>
    <variation>P</variation>
    <location>
        <position position="1835"/>
    </location>
</feature>
<feature type="mutagenesis site" description="Slightly reduces affinity for a BRIP1 phosphopeptide." evidence="62">
    <original>E</original>
    <variation>K</variation>
    <location>
        <position position="1836"/>
    </location>
</feature>
<feature type="sequence conflict" description="In Ref. 4; AAB61673." evidence="95" ref="4">
    <original>I</original>
    <variation>T</variation>
    <location>
        <position position="89"/>
    </location>
</feature>
<feature type="sequence conflict" description="In Ref. 4; AAB61673." evidence="95" ref="4">
    <location>
        <position position="148"/>
    </location>
</feature>
<feature type="sequence conflict" description="In Ref. 3; AAC00049." evidence="95" ref="3">
    <original>A</original>
    <variation>V</variation>
    <location>
        <position position="253"/>
    </location>
</feature>
<feature type="sequence conflict" description="In Ref. 8; AAI15038." evidence="95" ref="8">
    <original>S</original>
    <variation>P</variation>
    <location>
        <position position="713"/>
    </location>
</feature>
<feature type="sequence conflict" description="In Ref. 4; AAB61673." evidence="95" ref="4">
    <original>G</original>
    <variation>R</variation>
    <location>
        <position position="1077"/>
    </location>
</feature>
<feature type="sequence conflict" description="In Ref. 3; AAC00049." evidence="95" ref="3">
    <original>S</original>
    <variation>P</variation>
    <location>
        <position position="1426"/>
    </location>
</feature>
<feature type="sequence conflict" description="In Ref. 8; AAI15038." evidence="95" ref="8">
    <original>E</original>
    <variation>G</variation>
    <location>
        <position position="1527"/>
    </location>
</feature>
<feature type="turn" evidence="114">
    <location>
        <begin position="5"/>
        <end position="7"/>
    </location>
</feature>
<feature type="helix" evidence="114">
    <location>
        <begin position="8"/>
        <end position="21"/>
    </location>
</feature>
<feature type="strand" evidence="114">
    <location>
        <begin position="25"/>
        <end position="27"/>
    </location>
</feature>
<feature type="helix" evidence="114">
    <location>
        <begin position="49"/>
        <end position="52"/>
    </location>
</feature>
<feature type="strand" evidence="108">
    <location>
        <begin position="54"/>
        <end position="58"/>
    </location>
</feature>
<feature type="strand" evidence="114">
    <location>
        <begin position="62"/>
        <end position="64"/>
    </location>
</feature>
<feature type="strand" evidence="114">
    <location>
        <begin position="66"/>
        <end position="68"/>
    </location>
</feature>
<feature type="turn" evidence="114">
    <location>
        <begin position="70"/>
        <end position="72"/>
    </location>
</feature>
<feature type="helix" evidence="114">
    <location>
        <begin position="80"/>
        <end position="96"/>
    </location>
</feature>
<feature type="strand" evidence="113">
    <location>
        <begin position="1651"/>
        <end position="1656"/>
    </location>
</feature>
<feature type="helix" evidence="113">
    <location>
        <begin position="1659"/>
        <end position="1671"/>
    </location>
</feature>
<feature type="strand" evidence="110">
    <location>
        <begin position="1675"/>
        <end position="1679"/>
    </location>
</feature>
<feature type="strand" evidence="113">
    <location>
        <begin position="1686"/>
        <end position="1689"/>
    </location>
</feature>
<feature type="strand" evidence="113">
    <location>
        <begin position="1695"/>
        <end position="1697"/>
    </location>
</feature>
<feature type="helix" evidence="113">
    <location>
        <begin position="1701"/>
        <end position="1708"/>
    </location>
</feature>
<feature type="strand" evidence="113">
    <location>
        <begin position="1712"/>
        <end position="1715"/>
    </location>
</feature>
<feature type="helix" evidence="113">
    <location>
        <begin position="1717"/>
        <end position="1725"/>
    </location>
</feature>
<feature type="helix" evidence="113">
    <location>
        <begin position="1731"/>
        <end position="1734"/>
    </location>
</feature>
<feature type="turn" evidence="113">
    <location>
        <begin position="1740"/>
        <end position="1742"/>
    </location>
</feature>
<feature type="strand" evidence="110">
    <location>
        <begin position="1743"/>
        <end position="1745"/>
    </location>
</feature>
<feature type="helix" evidence="113">
    <location>
        <begin position="1748"/>
        <end position="1754"/>
    </location>
</feature>
<feature type="turn" evidence="110">
    <location>
        <begin position="1755"/>
        <end position="1757"/>
    </location>
</feature>
<feature type="turn" evidence="113">
    <location>
        <begin position="1760"/>
        <end position="1763"/>
    </location>
</feature>
<feature type="strand" evidence="113">
    <location>
        <begin position="1765"/>
        <end position="1768"/>
    </location>
</feature>
<feature type="strand" evidence="111">
    <location>
        <begin position="1770"/>
        <end position="1772"/>
    </location>
</feature>
<feature type="strand" evidence="113">
    <location>
        <begin position="1773"/>
        <end position="1775"/>
    </location>
</feature>
<feature type="helix" evidence="113">
    <location>
        <begin position="1777"/>
        <end position="1786"/>
    </location>
</feature>
<feature type="strand" evidence="113">
    <location>
        <begin position="1790"/>
        <end position="1794"/>
    </location>
</feature>
<feature type="helix" evidence="113">
    <location>
        <begin position="1795"/>
        <end position="1797"/>
    </location>
</feature>
<feature type="strand" evidence="113">
    <location>
        <begin position="1801"/>
        <end position="1803"/>
    </location>
</feature>
<feature type="strand" evidence="113">
    <location>
        <begin position="1806"/>
        <end position="1810"/>
    </location>
</feature>
<feature type="helix" evidence="113">
    <location>
        <begin position="1812"/>
        <end position="1814"/>
    </location>
</feature>
<feature type="strand" evidence="109">
    <location>
        <begin position="1817"/>
        <end position="1819"/>
    </location>
</feature>
<feature type="helix" evidence="113">
    <location>
        <begin position="1820"/>
        <end position="1822"/>
    </location>
</feature>
<feature type="helix" evidence="113">
    <location>
        <begin position="1824"/>
        <end position="1827"/>
    </location>
</feature>
<feature type="strand" evidence="112">
    <location>
        <begin position="1828"/>
        <end position="1830"/>
    </location>
</feature>
<feature type="strand" evidence="113">
    <location>
        <begin position="1832"/>
        <end position="1834"/>
    </location>
</feature>
<feature type="helix" evidence="113">
    <location>
        <begin position="1835"/>
        <end position="1844"/>
    </location>
</feature>
<feature type="helix" evidence="113">
    <location>
        <begin position="1851"/>
        <end position="1853"/>
    </location>
</feature>
<feature type="sequence conflict" description="In Ref. 8; AAI15038." evidence="95" ref="8">
    <original>N</original>
    <variation>D</variation>
    <location sequence="P38398-7">
        <position position="1461"/>
    </location>
</feature>
<evidence type="ECO:0000250" key="1">
    <source>
        <dbReference type="UniProtKB" id="P48754"/>
    </source>
</evidence>
<evidence type="ECO:0000255" key="2">
    <source>
        <dbReference type="PROSITE-ProRule" id="PRU00033"/>
    </source>
</evidence>
<evidence type="ECO:0000255" key="3">
    <source>
        <dbReference type="PROSITE-ProRule" id="PRU00175"/>
    </source>
</evidence>
<evidence type="ECO:0000256" key="4">
    <source>
        <dbReference type="SAM" id="MobiDB-lite"/>
    </source>
</evidence>
<evidence type="ECO:0000269" key="5">
    <source>
    </source>
</evidence>
<evidence type="ECO:0000269" key="6">
    <source>
    </source>
</evidence>
<evidence type="ECO:0000269" key="7">
    <source>
    </source>
</evidence>
<evidence type="ECO:0000269" key="8">
    <source>
    </source>
</evidence>
<evidence type="ECO:0000269" key="9">
    <source>
    </source>
</evidence>
<evidence type="ECO:0000269" key="10">
    <source>
    </source>
</evidence>
<evidence type="ECO:0000269" key="11">
    <source>
    </source>
</evidence>
<evidence type="ECO:0000269" key="12">
    <source>
    </source>
</evidence>
<evidence type="ECO:0000269" key="13">
    <source>
    </source>
</evidence>
<evidence type="ECO:0000269" key="14">
    <source>
    </source>
</evidence>
<evidence type="ECO:0000269" key="15">
    <source>
    </source>
</evidence>
<evidence type="ECO:0000269" key="16">
    <source>
    </source>
</evidence>
<evidence type="ECO:0000269" key="17">
    <source>
    </source>
</evidence>
<evidence type="ECO:0000269" key="18">
    <source>
    </source>
</evidence>
<evidence type="ECO:0000269" key="19">
    <source>
    </source>
</evidence>
<evidence type="ECO:0000269" key="20">
    <source>
    </source>
</evidence>
<evidence type="ECO:0000269" key="21">
    <source>
    </source>
</evidence>
<evidence type="ECO:0000269" key="22">
    <source>
    </source>
</evidence>
<evidence type="ECO:0000269" key="23">
    <source>
    </source>
</evidence>
<evidence type="ECO:0000269" key="24">
    <source>
    </source>
</evidence>
<evidence type="ECO:0000269" key="25">
    <source>
    </source>
</evidence>
<evidence type="ECO:0000269" key="26">
    <source>
    </source>
</evidence>
<evidence type="ECO:0000269" key="27">
    <source>
    </source>
</evidence>
<evidence type="ECO:0000269" key="28">
    <source>
    </source>
</evidence>
<evidence type="ECO:0000269" key="29">
    <source>
    </source>
</evidence>
<evidence type="ECO:0000269" key="30">
    <source>
    </source>
</evidence>
<evidence type="ECO:0000269" key="31">
    <source>
    </source>
</evidence>
<evidence type="ECO:0000269" key="32">
    <source>
    </source>
</evidence>
<evidence type="ECO:0000269" key="33">
    <source>
    </source>
</evidence>
<evidence type="ECO:0000269" key="34">
    <source>
    </source>
</evidence>
<evidence type="ECO:0000269" key="35">
    <source>
    </source>
</evidence>
<evidence type="ECO:0000269" key="36">
    <source>
    </source>
</evidence>
<evidence type="ECO:0000269" key="37">
    <source>
    </source>
</evidence>
<evidence type="ECO:0000269" key="38">
    <source>
    </source>
</evidence>
<evidence type="ECO:0000269" key="39">
    <source>
    </source>
</evidence>
<evidence type="ECO:0000269" key="40">
    <source>
    </source>
</evidence>
<evidence type="ECO:0000269" key="41">
    <source>
    </source>
</evidence>
<evidence type="ECO:0000269" key="42">
    <source>
    </source>
</evidence>
<evidence type="ECO:0000269" key="43">
    <source>
    </source>
</evidence>
<evidence type="ECO:0000269" key="44">
    <source>
    </source>
</evidence>
<evidence type="ECO:0000269" key="45">
    <source>
    </source>
</evidence>
<evidence type="ECO:0000269" key="46">
    <source>
    </source>
</evidence>
<evidence type="ECO:0000269" key="47">
    <source>
    </source>
</evidence>
<evidence type="ECO:0000269" key="48">
    <source>
    </source>
</evidence>
<evidence type="ECO:0000269" key="49">
    <source>
    </source>
</evidence>
<evidence type="ECO:0000269" key="50">
    <source>
    </source>
</evidence>
<evidence type="ECO:0000269" key="51">
    <source>
    </source>
</evidence>
<evidence type="ECO:0000269" key="52">
    <source>
    </source>
</evidence>
<evidence type="ECO:0000269" key="53">
    <source>
    </source>
</evidence>
<evidence type="ECO:0000269" key="54">
    <source>
    </source>
</evidence>
<evidence type="ECO:0000269" key="55">
    <source>
    </source>
</evidence>
<evidence type="ECO:0000269" key="56">
    <source>
    </source>
</evidence>
<evidence type="ECO:0000269" key="57">
    <source>
    </source>
</evidence>
<evidence type="ECO:0000269" key="58">
    <source>
    </source>
</evidence>
<evidence type="ECO:0000269" key="59">
    <source>
    </source>
</evidence>
<evidence type="ECO:0000269" key="60">
    <source>
    </source>
</evidence>
<evidence type="ECO:0000269" key="61">
    <source>
    </source>
</evidence>
<evidence type="ECO:0000269" key="62">
    <source>
    </source>
</evidence>
<evidence type="ECO:0000269" key="63">
    <source>
    </source>
</evidence>
<evidence type="ECO:0000269" key="64">
    <source>
    </source>
</evidence>
<evidence type="ECO:0000269" key="65">
    <source>
    </source>
</evidence>
<evidence type="ECO:0000269" key="66">
    <source>
    </source>
</evidence>
<evidence type="ECO:0000269" key="67">
    <source>
    </source>
</evidence>
<evidence type="ECO:0000269" key="68">
    <source>
    </source>
</evidence>
<evidence type="ECO:0000269" key="69">
    <source>
    </source>
</evidence>
<evidence type="ECO:0000269" key="70">
    <source>
    </source>
</evidence>
<evidence type="ECO:0000269" key="71">
    <source>
    </source>
</evidence>
<evidence type="ECO:0000269" key="72">
    <source>
    </source>
</evidence>
<evidence type="ECO:0000269" key="73">
    <source>
    </source>
</evidence>
<evidence type="ECO:0000269" key="74">
    <source>
    </source>
</evidence>
<evidence type="ECO:0000269" key="75">
    <source>
    </source>
</evidence>
<evidence type="ECO:0000269" key="76">
    <source>
    </source>
</evidence>
<evidence type="ECO:0000269" key="77">
    <source>
    </source>
</evidence>
<evidence type="ECO:0000269" key="78">
    <source>
    </source>
</evidence>
<evidence type="ECO:0000269" key="79">
    <source>
    </source>
</evidence>
<evidence type="ECO:0000269" key="80">
    <source>
    </source>
</evidence>
<evidence type="ECO:0000269" key="81">
    <source>
    </source>
</evidence>
<evidence type="ECO:0000269" key="82">
    <source>
    </source>
</evidence>
<evidence type="ECO:0000269" key="83">
    <source>
    </source>
</evidence>
<evidence type="ECO:0000269" key="84">
    <source>
    </source>
</evidence>
<evidence type="ECO:0000269" key="85">
    <source>
    </source>
</evidence>
<evidence type="ECO:0000269" key="86">
    <source>
    </source>
</evidence>
<evidence type="ECO:0000269" key="87">
    <source>
    </source>
</evidence>
<evidence type="ECO:0000269" key="88">
    <source>
    </source>
</evidence>
<evidence type="ECO:0000269" key="89">
    <source>
    </source>
</evidence>
<evidence type="ECO:0000269" key="90">
    <source ref="5"/>
</evidence>
<evidence type="ECO:0000269" key="91">
    <source ref="6"/>
</evidence>
<evidence type="ECO:0000303" key="92">
    <source>
    </source>
</evidence>
<evidence type="ECO:0000303" key="93">
    <source>
    </source>
</evidence>
<evidence type="ECO:0000303" key="94">
    <source ref="4"/>
</evidence>
<evidence type="ECO:0000305" key="95"/>
<evidence type="ECO:0000305" key="96">
    <source>
    </source>
</evidence>
<evidence type="ECO:0000305" key="97">
    <source>
    </source>
</evidence>
<evidence type="ECO:0007744" key="98">
    <source>
    </source>
</evidence>
<evidence type="ECO:0007744" key="99">
    <source>
    </source>
</evidence>
<evidence type="ECO:0007744" key="100">
    <source>
    </source>
</evidence>
<evidence type="ECO:0007744" key="101">
    <source>
    </source>
</evidence>
<evidence type="ECO:0007744" key="102">
    <source>
    </source>
</evidence>
<evidence type="ECO:0007744" key="103">
    <source>
    </source>
</evidence>
<evidence type="ECO:0007744" key="104">
    <source>
    </source>
</evidence>
<evidence type="ECO:0007744" key="105">
    <source>
    </source>
</evidence>
<evidence type="ECO:0007744" key="106">
    <source>
    </source>
</evidence>
<evidence type="ECO:0007744" key="107">
    <source>
    </source>
</evidence>
<evidence type="ECO:0007829" key="108">
    <source>
        <dbReference type="PDB" id="1JM7"/>
    </source>
</evidence>
<evidence type="ECO:0007829" key="109">
    <source>
        <dbReference type="PDB" id="1OQA"/>
    </source>
</evidence>
<evidence type="ECO:0007829" key="110">
    <source>
        <dbReference type="PDB" id="1T29"/>
    </source>
</evidence>
<evidence type="ECO:0007829" key="111">
    <source>
        <dbReference type="PDB" id="1T2V"/>
    </source>
</evidence>
<evidence type="ECO:0007829" key="112">
    <source>
        <dbReference type="PDB" id="3PXE"/>
    </source>
</evidence>
<evidence type="ECO:0007829" key="113">
    <source>
        <dbReference type="PDB" id="4IGK"/>
    </source>
</evidence>
<evidence type="ECO:0007829" key="114">
    <source>
        <dbReference type="PDB" id="7LYB"/>
    </source>
</evidence>
<reference key="1">
    <citation type="journal article" date="1994" name="Science">
        <title>A strong candidate for the breast and ovarian cancer susceptibility gene BRCA1.</title>
        <authorList>
            <person name="Miki Y."/>
            <person name="Swensen J."/>
            <person name="Shattuck-Eidens D."/>
            <person name="Futreal P.A."/>
            <person name="Harshman K."/>
            <person name="Tavtigian S."/>
            <person name="Liu Q."/>
            <person name="Cochran C."/>
            <person name="Bennett L.M."/>
            <person name="Ding W."/>
            <person name="Bell R."/>
            <person name="Rosenthal J."/>
            <person name="Hussey C."/>
            <person name="Tran T."/>
            <person name="McClure M."/>
            <person name="Frye C."/>
            <person name="Hattier T."/>
            <person name="Phelps R."/>
            <person name="Haugen-Strano A."/>
            <person name="Katcher H."/>
            <person name="Yakumo K."/>
            <person name="Gholami Z."/>
            <person name="Shaffer D."/>
            <person name="Stone S."/>
            <person name="Bayer S."/>
            <person name="Wray C."/>
            <person name="Bogden R."/>
            <person name="Dayananth P."/>
            <person name="Ward J."/>
            <person name="Tonin P."/>
            <person name="Narod S."/>
            <person name="Bristow P.K."/>
            <person name="Norris F.H."/>
            <person name="Helvering L."/>
            <person name="Morrison P."/>
            <person name="Rosteck P."/>
            <person name="Lai M."/>
            <person name="Barrett J.C."/>
            <person name="Lewis C."/>
            <person name="Neuhausen S."/>
            <person name="Cannon-Albright L."/>
            <person name="Godlgar D."/>
            <person name="Wiseman R."/>
            <person name="Kamb A."/>
            <person name="Skolnick M.H."/>
        </authorList>
    </citation>
    <scope>NUCLEOTIDE SEQUENCE [MRNA] (ISOFORM 1)</scope>
    <scope>VARIANT BC ARG-1775</scope>
</reference>
<reference key="2">
    <citation type="journal article" date="1996" name="Genome Res.">
        <title>Complete genomic sequence and analysis of 117 kb of human DNA containing the gene BRCA1.</title>
        <authorList>
            <person name="Smith T.M."/>
            <person name="Lee M.K."/>
            <person name="Szabo C.I."/>
            <person name="Jerome N."/>
            <person name="McEuen M."/>
            <person name="Taylor M."/>
            <person name="Hood L."/>
            <person name="King M.-C."/>
        </authorList>
    </citation>
    <scope>NUCLEOTIDE SEQUENCE [GENOMIC DNA]</scope>
</reference>
<reference key="3">
    <citation type="journal article" date="1997" name="Oncogene">
        <title>Differential subcellular localization, expression and biological toxicity of BRCA1 and the splice variant BRCA1-delta11b.</title>
        <authorList>
            <person name="Wilson C.A."/>
            <person name="Payton M.N."/>
            <person name="Elliott G.S."/>
            <person name="Buaas F.W."/>
            <person name="Cajulis E.E."/>
            <person name="Grosshans D."/>
            <person name="Ramos L."/>
            <person name="Reese D.M."/>
            <person name="Slamon D.J."/>
            <person name="Calzone F.J."/>
        </authorList>
    </citation>
    <scope>NUCLEOTIDE SEQUENCE [MRNA] (ISOFORM 3)</scope>
    <scope>SUBCELLULAR LOCATION (ISOFORM 2)</scope>
    <scope>VARIANTS ARG-239 AND GLY-1613</scope>
    <scope>TISSUE SPECIFICITY (ISOFORMS 1 AND 3)</scope>
    <source>
        <tissue>Mammary gland</tissue>
    </source>
</reference>
<reference key="4">
    <citation type="submission" date="1997-05" db="EMBL/GenBank/DDBJ databases">
        <authorList>
            <person name="Holt J.T."/>
            <person name="Robinson-Benion C."/>
        </authorList>
    </citation>
    <scope>NUCLEOTIDE SEQUENCE [MRNA] (ISOFORM 2)</scope>
    <source>
        <tissue>Testis</tissue>
    </source>
</reference>
<reference key="5">
    <citation type="submission" date="2005-09" db="EMBL/GenBank/DDBJ databases">
        <authorList>
            <person name="Raymond C.K."/>
            <person name="Paddock M."/>
            <person name="Subramanian S."/>
            <person name="Deodato C."/>
            <person name="Zhou Y."/>
            <person name="Haugen E."/>
            <person name="Kaul R."/>
            <person name="Olson M.V."/>
        </authorList>
    </citation>
    <scope>NUCLEOTIDE SEQUENCE [GENOMIC DNA]</scope>
    <scope>VARIANT ARG-356</scope>
</reference>
<reference key="6">
    <citation type="submission" date="2003-04" db="EMBL/GenBank/DDBJ databases">
        <authorList>
            <consortium name="NIEHS SNPs program"/>
        </authorList>
    </citation>
    <scope>NUCLEOTIDE SEQUENCE [GENOMIC DNA]</scope>
    <scope>VARIANTS SER-275; ARG-356; ASN-693; LEU-871; GLY-1038; ASN-1040; GLY-1140; ARG-1183; GLY-1613 AND ALA-1620</scope>
</reference>
<reference key="7">
    <citation type="journal article" date="2006" name="Nature">
        <title>DNA sequence of human chromosome 17 and analysis of rearrangement in the human lineage.</title>
        <authorList>
            <person name="Zody M.C."/>
            <person name="Garber M."/>
            <person name="Adams D.J."/>
            <person name="Sharpe T."/>
            <person name="Harrow J."/>
            <person name="Lupski J.R."/>
            <person name="Nicholson C."/>
            <person name="Searle S.M."/>
            <person name="Wilming L."/>
            <person name="Young S.K."/>
            <person name="Abouelleil A."/>
            <person name="Allen N.R."/>
            <person name="Bi W."/>
            <person name="Bloom T."/>
            <person name="Borowsky M.L."/>
            <person name="Bugalter B.E."/>
            <person name="Butler J."/>
            <person name="Chang J.L."/>
            <person name="Chen C.-K."/>
            <person name="Cook A."/>
            <person name="Corum B."/>
            <person name="Cuomo C.A."/>
            <person name="de Jong P.J."/>
            <person name="DeCaprio D."/>
            <person name="Dewar K."/>
            <person name="FitzGerald M."/>
            <person name="Gilbert J."/>
            <person name="Gibson R."/>
            <person name="Gnerre S."/>
            <person name="Goldstein S."/>
            <person name="Grafham D.V."/>
            <person name="Grocock R."/>
            <person name="Hafez N."/>
            <person name="Hagopian D.S."/>
            <person name="Hart E."/>
            <person name="Norman C.H."/>
            <person name="Humphray S."/>
            <person name="Jaffe D.B."/>
            <person name="Jones M."/>
            <person name="Kamal M."/>
            <person name="Khodiyar V.K."/>
            <person name="LaButti K."/>
            <person name="Laird G."/>
            <person name="Lehoczky J."/>
            <person name="Liu X."/>
            <person name="Lokyitsang T."/>
            <person name="Loveland J."/>
            <person name="Lui A."/>
            <person name="Macdonald P."/>
            <person name="Major J.E."/>
            <person name="Matthews L."/>
            <person name="Mauceli E."/>
            <person name="McCarroll S.A."/>
            <person name="Mihalev A.H."/>
            <person name="Mudge J."/>
            <person name="Nguyen C."/>
            <person name="Nicol R."/>
            <person name="O'Leary S.B."/>
            <person name="Osoegawa K."/>
            <person name="Schwartz D.C."/>
            <person name="Shaw-Smith C."/>
            <person name="Stankiewicz P."/>
            <person name="Steward C."/>
            <person name="Swarbreck D."/>
            <person name="Venkataraman V."/>
            <person name="Whittaker C.A."/>
            <person name="Yang X."/>
            <person name="Zimmer A.R."/>
            <person name="Bradley A."/>
            <person name="Hubbard T."/>
            <person name="Birren B.W."/>
            <person name="Rogers J."/>
            <person name="Lander E.S."/>
            <person name="Nusbaum C."/>
        </authorList>
    </citation>
    <scope>NUCLEOTIDE SEQUENCE [LARGE SCALE GENOMIC DNA]</scope>
</reference>
<reference key="8">
    <citation type="journal article" date="2004" name="Genome Res.">
        <title>The status, quality, and expansion of the NIH full-length cDNA project: the Mammalian Gene Collection (MGC).</title>
        <authorList>
            <consortium name="The MGC Project Team"/>
        </authorList>
    </citation>
    <scope>NUCLEOTIDE SEQUENCE [LARGE SCALE MRNA] (ISOFORMS 6 AND 7)</scope>
    <scope>VARIANTS LEU-871; GLY-1038; ARG-1183; GLY-1613 AND ILE-1652</scope>
    <source>
        <tissue>PNS</tissue>
    </source>
</reference>
<reference key="9">
    <citation type="journal article" date="2000" name="Oncogene">
        <title>Initiation of translation from a downstream in-frame AUG codon on BRCA1 can generate the novel isoform protein DeltaBRCA1(17aa).</title>
        <authorList>
            <person name="Liu J."/>
            <person name="Prolla G."/>
            <person name="Rostagno A."/>
            <person name="Chiarle R."/>
            <person name="Feiner H."/>
            <person name="Inghirami G."/>
        </authorList>
    </citation>
    <scope>PROTEIN SEQUENCE OF 6-18 (ISOFORM 1)</scope>
    <scope>PROTEIN SEQUENCE OF 18-26 (ISOFORM 4)</scope>
    <scope>ALTERNATIVE INITIATION (ISOFORM 4)</scope>
</reference>
<reference key="10">
    <citation type="journal article" date="1997" name="Mol. Cell. Biol.">
        <title>Localization of BRCA1 and a splice variant identifies the nuclear localization signal.</title>
        <authorList>
            <person name="Thakur S."/>
            <person name="Zhang H.B."/>
            <person name="Peng Y."/>
            <person name="Le H."/>
            <person name="Carroll B."/>
            <person name="Ward T."/>
            <person name="Yao J."/>
            <person name="Farid L.M."/>
            <person name="Couch F.J."/>
            <person name="Wilson R.B."/>
            <person name="Weber B.L."/>
        </authorList>
    </citation>
    <scope>ALTERNATIVE SPLICING (ISOFORM 5)</scope>
    <scope>SUBCELLULAR LOCATION (ISOFORM 5)</scope>
</reference>
<reference key="11">
    <citation type="journal article" date="1998" name="Nat. Genet.">
        <title>BRCA1 protein is linked to the RNA polymerase II holoenzyme complex via RNA helicase A.</title>
        <authorList>
            <person name="Anderson S.F."/>
            <person name="Schlegel B.P."/>
            <person name="Nakajima T."/>
            <person name="Wolpin E.S."/>
            <person name="Parvin J.D."/>
        </authorList>
    </citation>
    <scope>INTERACTION WITH DHX9</scope>
</reference>
<reference key="12">
    <citation type="journal article" date="1998" name="Oncogene">
        <title>BAP1: a novel ubiquitin hydrolase which binds to the BRCA1 RING finger and enhances BRCA1-mediated cell growth suppression.</title>
        <authorList>
            <person name="Jensen D.E."/>
            <person name="Proctor M."/>
            <person name="Marquis S.T."/>
            <person name="Gardner H.P."/>
            <person name="Ha S.I."/>
            <person name="Chodosh L.A."/>
            <person name="Ishov A.M."/>
            <person name="Tommerup N."/>
            <person name="Vissing H."/>
            <person name="Sekido Y."/>
            <person name="Minna J."/>
            <person name="Borodovsky A."/>
            <person name="Schultz D.C."/>
            <person name="Wilkinson K.D."/>
            <person name="Maul G.G."/>
            <person name="Barlev N."/>
            <person name="Berger S."/>
            <person name="Prendergast G.C."/>
            <person name="Rauscher F.J. III"/>
        </authorList>
    </citation>
    <scope>INTERACTION WITH BAP1</scope>
    <scope>SUBCELLULAR LOCATION</scope>
    <scope>VARIANTS GLY-61 AND GLY-64</scope>
    <scope>MUTAGENESIS OF ARG-71</scope>
</reference>
<reference key="13">
    <citation type="journal article" date="1998" name="Oncogene">
        <title>Characterization of a carboxy-terminal BRCA1 interacting protein.</title>
        <authorList>
            <person name="Wong A.K."/>
            <person name="Ormonde P.A."/>
            <person name="Pero R."/>
            <person name="Chen Y."/>
            <person name="Lian L."/>
            <person name="Salada G."/>
            <person name="Berry S."/>
            <person name="Lawrence Q."/>
            <person name="Dayananth P."/>
            <person name="Ha P."/>
            <person name="Tavtigian S.V."/>
            <person name="Teng D.H."/>
            <person name="Bartel P.L."/>
        </authorList>
    </citation>
    <scope>INTERACTION WITH RBBP8</scope>
</reference>
<reference key="14">
    <citation type="journal article" date="1999" name="Proc. Natl. Acad. Sci. U.S.A.">
        <title>RING fingers mediate ubiquitin-conjugating enzyme (E2)-dependent ubiquitination.</title>
        <authorList>
            <person name="Lorick K.L."/>
            <person name="Jensen J.P."/>
            <person name="Fang S."/>
            <person name="Ong A.M."/>
            <person name="Hatakeyama S."/>
            <person name="Weissman A.M."/>
        </authorList>
    </citation>
    <scope>FUNCTION AS AN E2-DEPENDENT UBIQUITIN-PROTEIN LIGASE</scope>
    <scope>CATALYTIC ACTIVITY</scope>
</reference>
<reference key="15">
    <citation type="journal article" date="2000" name="Genes Dev.">
        <title>BASC, a super complex of BRCA1-associated proteins involved in the recognition and repair of aberrant DNA structures.</title>
        <authorList>
            <person name="Wang Y."/>
            <person name="Cortez D."/>
            <person name="Yazdi P."/>
            <person name="Neff N."/>
            <person name="Elledge S.J."/>
            <person name="Qin J."/>
        </authorList>
    </citation>
    <scope>IDENTIFICATION IN THE BASC COMPLEX</scope>
</reference>
<reference key="16">
    <citation type="journal article" date="2000" name="Genes Dev.">
        <title>Functional interactions between BRCA1 and the checkpoint kinase ATR during genotoxic stress.</title>
        <authorList>
            <person name="Tibbetts R.S."/>
            <person name="Cortez D."/>
            <person name="Brumbaugh K.M."/>
            <person name="Scully R."/>
            <person name="Livingston D."/>
            <person name="Elledge S.J."/>
            <person name="Abraham R.T."/>
        </authorList>
    </citation>
    <scope>PHOSPHORYLATION AT SER-1143; SER-1280; SER-1387; THR-1394; SER-1423 AND SER-1457</scope>
    <scope>MUTAGENESIS OF SER-1143; SER-1239; SER-1280; SER-1298; SER-1330; SER-1387; THR-1394; SER-1423; SER-1457; SER-1466; SER-1524 AND SER-1755</scope>
    <scope>CHARACTERIZATION OF VARIANT BC ALA-1720</scope>
</reference>
<reference key="17">
    <citation type="journal article" date="2000" name="Nature">
        <title>hCds1-mediated phosphorylation of BRCA1 regulates the DNA damage response.</title>
        <authorList>
            <person name="Lee J.S."/>
            <person name="Collins K.M."/>
            <person name="Brown A.L."/>
            <person name="Lee C.H."/>
            <person name="Chung J.H."/>
        </authorList>
    </citation>
    <scope>FUNCTION IN DNA DAMAGE RESPONSE</scope>
    <scope>PHOSPHORYLATION AT SER-988 BY CHEK2</scope>
    <scope>INTERACTION WITH CHEK2</scope>
</reference>
<reference key="18">
    <citation type="journal article" date="2001" name="Cell">
        <title>BACH1, a novel helicase-like protein, interacts directly with BRCA1 and contributes to its DNA repair function.</title>
        <authorList>
            <person name="Cantor S.B."/>
            <person name="Bell D.W."/>
            <person name="Ganesan S."/>
            <person name="Kass E.M."/>
            <person name="Drapkin R."/>
            <person name="Grossman S."/>
            <person name="Wahrer D.C.R."/>
            <person name="Sgroi D.C."/>
            <person name="Lane W.S."/>
            <person name="Haber D.A."/>
            <person name="Livingston D.M."/>
        </authorList>
    </citation>
    <scope>INTERACTION WITH BRIP1</scope>
    <scope>CHARACTERIZATION OF VARIANT OVARIAN CANCER ARG-1749</scope>
    <scope>CHARACTERIZATION OF VARIANT BC ARG-1775</scope>
</reference>
<reference key="19">
    <citation type="journal article" date="2001" name="J. Cell Biol.">
        <title>BRCA1-induced large-scale chromatin unfolding and allele-specific effects of cancer-predisposing mutations.</title>
        <authorList>
            <person name="Ye Q."/>
            <person name="Hu Y.-F."/>
            <person name="Zhong H."/>
            <person name="Nye A.C."/>
            <person name="Belmont A.S."/>
            <person name="Li R."/>
        </authorList>
    </citation>
    <scope>INTERACTION WITH NELFB</scope>
</reference>
<reference key="20">
    <citation type="journal article" date="2001" name="Mol. Cell">
        <title>Interaction of the Fanconi anemia proteins and BRCA1 in a common pathway.</title>
        <authorList>
            <person name="Garcia-Higuera I."/>
            <person name="Taniguchi T."/>
            <person name="Ganesan S."/>
            <person name="Meyn M.S."/>
            <person name="Timmers C."/>
            <person name="Hejna J."/>
            <person name="Grompe M."/>
            <person name="D'Andrea A.D."/>
        </authorList>
    </citation>
    <scope>INTERACTION WITH FANCD2</scope>
</reference>
<reference key="21">
    <citation type="journal article" date="2002" name="Cancer Res.">
        <title>Phosphorylation of serine 1387 in BRCA1 is specifically required for the Atm-mediated S-phase checkpoint after ionizing irradiation.</title>
        <authorList>
            <person name="Xu B."/>
            <person name="O'Donnell A.H."/>
            <person name="Kim S.-T."/>
            <person name="Kastan M.B."/>
        </authorList>
    </citation>
    <scope>FUNCTION</scope>
    <scope>PHOSPHORYLATION BY ATM</scope>
    <scope>MUTAGENESIS OF SER-1387; SER-1423 AND SER-1524</scope>
</reference>
<reference key="22">
    <citation type="journal article" date="2002" name="Curr. Biol.">
        <title>NBS1 localizes to gamma-H2AX foci through interaction with the FHA/BRCT domain.</title>
        <authorList>
            <person name="Kobayashi J."/>
            <person name="Tauchi H."/>
            <person name="Sakamoto S."/>
            <person name="Nakamura A."/>
            <person name="Morishima K."/>
            <person name="Matsuura S."/>
            <person name="Kobayashi T."/>
            <person name="Tamai K."/>
            <person name="Tanimoto K."/>
            <person name="Komatsu K."/>
        </authorList>
    </citation>
    <scope>INTERACTION WITH H2AX</scope>
</reference>
<reference key="23">
    <citation type="journal article" date="2002" name="Genes Dev.">
        <title>SMC1 is a downstream effector in the ATM/NBS1 branch of the human S-phase checkpoint.</title>
        <authorList>
            <person name="Yazdi P.T."/>
            <person name="Wang Y."/>
            <person name="Zhao S."/>
            <person name="Patel N."/>
            <person name="Lee E.Y.-H.P."/>
            <person name="Qin J."/>
        </authorList>
    </citation>
    <scope>INTERACTION WITH SMC1A</scope>
</reference>
<reference key="24">
    <citation type="journal article" date="2002" name="J. Biol. Chem.">
        <title>The LIM domain protein LMO4 interacts with the cofactor CtIP and the tumor suppressor BRCA1 and inhibits BRCA1 activity.</title>
        <authorList>
            <person name="Sum E.Y."/>
            <person name="Peng B."/>
            <person name="Yu X."/>
            <person name="Chen J."/>
            <person name="Byrne J."/>
            <person name="Lindeman G.J."/>
            <person name="Visvader J.E."/>
        </authorList>
    </citation>
    <scope>INTERACTION WITH LMO4</scope>
</reference>
<reference key="25">
    <citation type="journal article" date="2002" name="Nat. Genet.">
        <title>BRCA1 regulates the G2/M checkpoint by activating Chk1 kinase upon DNA damage.</title>
        <authorList>
            <person name="Yarden R.I."/>
            <person name="Pardo-Reoyo S."/>
            <person name="Sgagias M."/>
            <person name="Cowan K.H."/>
            <person name="Brody L.C."/>
        </authorList>
    </citation>
    <scope>FUNCTION</scope>
    <scope>INTERACTION WITH CHEK1</scope>
</reference>
<reference key="26">
    <citation type="journal article" date="2002" name="Oncogene">
        <title>BRCA1 interacts with acetyl-CoA carboxylase through its tandem of BRCT domains.</title>
        <authorList>
            <person name="Magnard C."/>
            <person name="Bachelier R."/>
            <person name="Vincent A."/>
            <person name="Jaquinod M."/>
            <person name="Kieffer S."/>
            <person name="Lenoir G.M."/>
            <person name="Venezia N.D."/>
        </authorList>
    </citation>
    <scope>INTERACTION WITH ACACA</scope>
</reference>
<reference key="27">
    <citation type="journal article" date="2003" name="J. Biol. Chem.">
        <title>The BRCA1/BARD1 heterodimer assembles polyubiquitin chains through an unconventional linkage involving lysine residue K6 of ubiquitin.</title>
        <authorList>
            <person name="Wu-Baer F."/>
            <person name="Lagrazon K."/>
            <person name="Yuan W."/>
            <person name="Baer R."/>
        </authorList>
    </citation>
    <scope>FUNCTION</scope>
    <scope>UBIQUITINATION</scope>
    <scope>CATALYTIC ACTIVITY</scope>
    <scope>INTERACTION WITH BARD1</scope>
</reference>
<reference key="28">
    <citation type="journal article" date="2003" name="Mol. Cell">
        <title>BRCA1-independent ubiquitination of FANCD2.</title>
        <authorList>
            <person name="Vandenberg C.J."/>
            <person name="Gergely F."/>
            <person name="Ong C.Y."/>
            <person name="Pace P."/>
            <person name="Mallery D.L."/>
            <person name="Hiom K."/>
            <person name="Patel K.J."/>
        </authorList>
    </citation>
    <scope>FUNCTION</scope>
    <scope>CATALYTIC ACTIVITY</scope>
</reference>
<reference key="29">
    <citation type="journal article" date="2003" name="Mol. Cell">
        <title>Regulation of BRCC, a holoenzyme complex containing BRCA1 and BRCA2, by a signalosome-like subunit and its role in DNA repair.</title>
        <authorList>
            <person name="Dong Y."/>
            <person name="Hakimi M.-A."/>
            <person name="Chen X."/>
            <person name="Kumaraswamy E."/>
            <person name="Cooch N.S."/>
            <person name="Godwin A.K."/>
            <person name="Shiekhattar R."/>
        </authorList>
    </citation>
    <scope>INTERACTION WITH BRCC3</scope>
</reference>
<reference key="30">
    <citation type="journal article" date="2004" name="Hum. Mol. Genet.">
        <title>BRCA1:BARD1 induces the formation of conjugated ubiquitin structures, dependent on K6 of ubiquitin, in cells during DNA replication and repair.</title>
        <authorList>
            <person name="Morris J.R."/>
            <person name="Solomon E."/>
        </authorList>
    </citation>
    <scope>FUNCTION</scope>
    <scope>INTERACTION WITH BARD1</scope>
</reference>
<reference key="31">
    <citation type="journal article" date="2004" name="J. Biol. Chem.">
        <title>BRCA1 phosphorylation by Aurora-A in the regulation of G2 to M transition.</title>
        <authorList>
            <person name="Ouchi M."/>
            <person name="Fujiuchi N."/>
            <person name="Sasai K."/>
            <person name="Katayama H."/>
            <person name="Minamishima Y.A."/>
            <person name="Ongusaha P.P."/>
            <person name="Deng C."/>
            <person name="Sen S."/>
            <person name="Lee S.W."/>
            <person name="Ouchi T."/>
        </authorList>
    </citation>
    <scope>RETRACTED PAPER</scope>
</reference>
<reference key="32">
    <citation type="journal article" date="2015" name="J. Biol. Chem.">
        <authorList>
            <person name="Ouchi M."/>
            <person name="Fujiuchi N."/>
            <person name="Sasai K."/>
            <person name="Katayama H."/>
            <person name="Minamishima Y.A."/>
            <person name="Ongusaha P.P."/>
            <person name="Deng C."/>
            <person name="Sen S."/>
            <person name="Lee S.W."/>
            <person name="Ouchi T."/>
        </authorList>
    </citation>
    <scope>RETRACTION NOTICE OF PUBMED:14990569</scope>
</reference>
<reference key="33">
    <citation type="journal article" date="2004" name="Mol. Cell. Biol.">
        <title>Artemis is a phosphorylation target of ATM and ATR and is involved in the G2/M DNA damage checkpoint response.</title>
        <authorList>
            <person name="Zhang X."/>
            <person name="Succi J."/>
            <person name="Feng Z."/>
            <person name="Prithivirajsingh S."/>
            <person name="Story M.D."/>
            <person name="Legerski R.J."/>
        </authorList>
    </citation>
    <scope>INTERACTION WITH DCLRE1C</scope>
</reference>
<reference key="34">
    <citation type="journal article" date="2004" name="Proc. Natl. Acad. Sci. U.S.A.">
        <title>Human claspin works with BRCA1 to both positively and negatively regulate cell proliferation.</title>
        <authorList>
            <person name="Lin S.-Y."/>
            <person name="Li K."/>
            <person name="Stewart G.S."/>
            <person name="Elledge S.J."/>
        </authorList>
    </citation>
    <scope>INTERACTION WITH CLSPN</scope>
</reference>
<reference key="35">
    <citation type="journal article" date="2006" name="Cell">
        <title>Global, in vivo, and site-specific phosphorylation dynamics in signaling networks.</title>
        <authorList>
            <person name="Olsen J.V."/>
            <person name="Blagoev B."/>
            <person name="Gnad F."/>
            <person name="Macek B."/>
            <person name="Kumar C."/>
            <person name="Mortensen P."/>
            <person name="Mann M."/>
        </authorList>
    </citation>
    <scope>PHOSPHORYLATION [LARGE SCALE ANALYSIS] AT SER-1336</scope>
    <scope>IDENTIFICATION BY MASS SPECTROMETRY [LARGE SCALE ANALYSIS]</scope>
    <source>
        <tissue>Cervix carcinoma</tissue>
    </source>
</reference>
<reference key="36">
    <citation type="journal article" date="2006" name="Genes Dev.">
        <title>BRCA1 ubiquitinates its phosphorylation-dependent binding partner CtIP.</title>
        <authorList>
            <person name="Yu X."/>
            <person name="Fu S."/>
            <person name="Lai M."/>
            <person name="Baer R."/>
            <person name="Chen J."/>
        </authorList>
    </citation>
    <scope>FUNCTION</scope>
    <scope>CATALYTIC ACTIVITY</scope>
    <scope>INTERACTION WITH RBBP8</scope>
    <scope>MUTAGENESIS OF ILE-26</scope>
</reference>
<reference key="37">
    <citation type="journal article" date="2006" name="J. Biol. Chem.">
        <title>BRCA1 affects lipid synthesis through its interaction with acetyl-CoA carboxylase.</title>
        <authorList>
            <person name="Moreau K."/>
            <person name="Dizin E."/>
            <person name="Ray H."/>
            <person name="Luquain C."/>
            <person name="Lefai E."/>
            <person name="Foufelle F."/>
            <person name="Billaud M."/>
            <person name="Lenoir G.M."/>
            <person name="Venezia N.D."/>
        </authorList>
    </citation>
    <scope>FUNCTION</scope>
    <scope>INTERACTION WITH ACACA</scope>
</reference>
<reference key="38">
    <citation type="journal article" date="2006" name="J. Mol. Biol.">
        <title>ACCA phosphopeptide recognition by the BRCT repeats of BRCA1.</title>
        <authorList>
            <person name="Ray H."/>
            <person name="Moreau K."/>
            <person name="Dizin E."/>
            <person name="Callebaut I."/>
            <person name="Venezia N.D."/>
        </authorList>
    </citation>
    <scope>INTERACTION WITH ACACA</scope>
</reference>
<reference key="39">
    <citation type="journal article" date="2007" name="Cancer Res.">
        <title>Aurora-A kinase regulates breast cancer associated gene 1 inhibition of centrosome-dependent microtubule nucleation.</title>
        <authorList>
            <person name="Sankaran S."/>
            <person name="Crone D.E."/>
            <person name="Palazzo R.E."/>
            <person name="Parvin J.D."/>
        </authorList>
    </citation>
    <scope>FUNCTION</scope>
    <scope>CATALYTIC ACTIVITY</scope>
    <scope>PHOSPHORYLATION BY AURKA</scope>
    <scope>ACTIVITY REGULATION</scope>
</reference>
<reference key="40">
    <citation type="journal article" date="2007" name="Nat. Struct. Mol. Biol.">
        <title>CCDC98 is a BRCA1-BRCT domain-binding protein involved in the DNA damage response.</title>
        <authorList>
            <person name="Kim H."/>
            <person name="Huang J."/>
            <person name="Chen J."/>
        </authorList>
    </citation>
    <scope>INTERACTION WITH ABRAXAS1</scope>
</reference>
<reference key="41">
    <citation type="journal article" date="2007" name="Nat. Struct. Mol. Biol.">
        <title>CCDC98 targets BRCA1 to DNA damage sites.</title>
        <authorList>
            <person name="Liu Z."/>
            <person name="Wu J."/>
            <person name="Yu X."/>
        </authorList>
    </citation>
    <scope>INTERACTION WITH ABRAXAS1</scope>
</reference>
<reference key="42">
    <citation type="journal article" date="2007" name="Science">
        <title>ATM and ATR substrate analysis reveals extensive protein networks responsive to DNA damage.</title>
        <authorList>
            <person name="Matsuoka S."/>
            <person name="Ballif B.A."/>
            <person name="Smogorzewska A."/>
            <person name="McDonald E.R. III"/>
            <person name="Hurov K.E."/>
            <person name="Luo J."/>
            <person name="Bakalarski C.E."/>
            <person name="Zhao Z."/>
            <person name="Solimini N."/>
            <person name="Lerenthal Y."/>
            <person name="Shiloh Y."/>
            <person name="Gygi S.P."/>
            <person name="Elledge S.J."/>
        </authorList>
    </citation>
    <scope>IDENTIFICATION BY MASS SPECTROMETRY [LARGE SCALE ANALYSIS]</scope>
    <source>
        <tissue>Embryonic kidney</tissue>
    </source>
</reference>
<reference key="43">
    <citation type="journal article" date="2007" name="Science">
        <title>Abraxas and RAP80 form a BRCA1 protein complex required for the DNA damage response.</title>
        <authorList>
            <person name="Wang B."/>
            <person name="Matsuoka S."/>
            <person name="Ballif B.A."/>
            <person name="Zhang D."/>
            <person name="Smogorzewska A."/>
            <person name="Giyi S."/>
            <person name="Elledge S.J."/>
        </authorList>
    </citation>
    <scope>FUNCTION</scope>
    <scope>SUBCELLULAR LOCATION</scope>
    <scope>INTERACTION WITH ABRAXAS1</scope>
</reference>
<reference key="44">
    <citation type="journal article" date="2008" name="Hum. Genet.">
        <title>Germline BRCA1 mutations predispose to pancreatic adenocarcinoma.</title>
        <authorList>
            <person name="Al-Sukhni W."/>
            <person name="Rothenmund H."/>
            <person name="Borgida A.E."/>
            <person name="Zogopoulos G."/>
            <person name="O'Shea A.M."/>
            <person name="Pollett A."/>
            <person name="Gallinger S."/>
        </authorList>
    </citation>
    <scope>INVOLVEMENT IN PNCA4</scope>
</reference>
<reference key="45">
    <citation type="journal article" date="2008" name="Proc. Natl. Acad. Sci. U.S.A.">
        <title>A quantitative atlas of mitotic phosphorylation.</title>
        <authorList>
            <person name="Dephoure N."/>
            <person name="Zhou C."/>
            <person name="Villen J."/>
            <person name="Beausoleil S.A."/>
            <person name="Bakalarski C.E."/>
            <person name="Elledge S.J."/>
            <person name="Gygi S.P."/>
        </authorList>
    </citation>
    <scope>PHOSPHORYLATION [LARGE SCALE ANALYSIS] AT SER-395; SER-398; SER-753; SER-1211; SER-1217 AND SER-1218</scope>
    <scope>IDENTIFICATION BY MASS SPECTROMETRY [LARGE SCALE ANALYSIS]</scope>
    <source>
        <tissue>Cervix carcinoma</tissue>
    </source>
</reference>
<reference key="46">
    <citation type="journal article" date="2009" name="Genes Dev.">
        <title>MERIT40 facilitates BRCA1 localization and DNA damage repair.</title>
        <authorList>
            <person name="Feng L."/>
            <person name="Huang J."/>
            <person name="Chen J."/>
        </authorList>
    </citation>
    <scope>FUNCTION</scope>
    <scope>IDENTIFICATION IN THE BRCA1-A COMPLEX</scope>
</reference>
<reference key="47">
    <citation type="journal article" date="2009" name="Genes Dev.">
        <title>NBA1, a new player in the Brca1 A complex, is required for DNA damage resistance and checkpoint control.</title>
        <authorList>
            <person name="Wang B."/>
            <person name="Hurov K."/>
            <person name="Hofmann K."/>
            <person name="Elledge S.J."/>
        </authorList>
    </citation>
    <scope>IDENTIFICATION IN THE BRCA1-A COMPLEX</scope>
</reference>
<reference key="48">
    <citation type="journal article" date="2009" name="Genes Dev.">
        <title>MERIT40 controls BRCA1-Rap80 complex integrity and recruitment to DNA double-strand breaks.</title>
        <authorList>
            <person name="Shao G."/>
            <person name="Patterson-Fortin J."/>
            <person name="Messick T.E."/>
            <person name="Feng D."/>
            <person name="Shanbhag N."/>
            <person name="Wang Y."/>
            <person name="Greenberg R.A."/>
        </authorList>
    </citation>
    <scope>IDENTIFICATION IN THE BRCA1-A COMPLEX</scope>
</reference>
<reference key="49">
    <citation type="journal article" date="2009" name="Proc. Natl. Acad. Sci. U.S.A.">
        <title>PALB2 is an integral component of the BRCA complex required for homologous recombination repair.</title>
        <authorList>
            <person name="Sy S.M."/>
            <person name="Huen M.S."/>
            <person name="Chen J."/>
        </authorList>
    </citation>
    <scope>IDENTIFICATION BY MASS SPECTROMETRY</scope>
    <scope>FUNCTION</scope>
    <scope>INTERACTION WITH PALB2</scope>
    <scope>IDENTIFICATION IN A BRCA COMPLEX WITH BRCA1 AND PALB2</scope>
    <scope>CHARACTERIZATION OF VARIANT OVARIAN CANCER 1411-THR</scope>
</reference>
<reference key="50">
    <citation type="journal article" date="2009" name="Sci. Signal.">
        <title>Quantitative phosphoproteomic analysis of T cell receptor signaling reveals system-wide modulation of protein-protein interactions.</title>
        <authorList>
            <person name="Mayya V."/>
            <person name="Lundgren D.H."/>
            <person name="Hwang S.-I."/>
            <person name="Rezaul K."/>
            <person name="Wu L."/>
            <person name="Eng J.K."/>
            <person name="Rodionov V."/>
            <person name="Han D.K."/>
        </authorList>
    </citation>
    <scope>PHOSPHORYLATION [LARGE SCALE ANALYSIS] AT SER-395 AND SER-398</scope>
    <scope>IDENTIFICATION BY MASS SPECTROMETRY [LARGE SCALE ANALYSIS]</scope>
    <source>
        <tissue>Leukemic T-cell</tissue>
    </source>
</reference>
<reference key="51">
    <citation type="journal article" date="2010" name="Br. J. Cancer">
        <title>Identification of DBC1 as a transcriptional repressor for BRCA1.</title>
        <authorList>
            <person name="Hiraike H."/>
            <person name="Wada-Hiraike O."/>
            <person name="Nakagawa S."/>
            <person name="Koyama S."/>
            <person name="Miyamoto Y."/>
            <person name="Sone K."/>
            <person name="Tanikawa M."/>
            <person name="Tsuruga T."/>
            <person name="Nagasaka K."/>
            <person name="Matsumoto Y."/>
            <person name="Oda K."/>
            <person name="Shoji K."/>
            <person name="Fukuhara H."/>
            <person name="Saji S."/>
            <person name="Nakagawa K."/>
            <person name="Kato S."/>
            <person name="Yano T."/>
            <person name="Taketani Y."/>
        </authorList>
    </citation>
    <scope>FUNCTION</scope>
    <scope>INTERACTION WITH CCAR2</scope>
    <scope>SUBCELLULAR LOCATION</scope>
</reference>
<reference key="52">
    <citation type="journal article" date="2010" name="Mol. Cell. Biol.">
        <title>The UBXN1 protein associates with autoubiquitinated forms of the BRCA1 tumor suppressor and inhibits its enzymatic function.</title>
        <authorList>
            <person name="Wu-Baer F."/>
            <person name="Ludwig T."/>
            <person name="Baer R."/>
        </authorList>
    </citation>
    <scope>FUNCTION</scope>
    <scope>CATALYTIC ACTIVITY</scope>
    <scope>INTERACTION WITH BARD1 AND UBXN1</scope>
    <scope>UBIQUITINATION</scope>
    <scope>MUTAGENESIS OF ILE-26</scope>
</reference>
<reference key="53">
    <citation type="journal article" date="2010" name="Nat. Cell Biol.">
        <title>The CHK2-BRCA1 tumour suppressor pathway ensures chromosomal stability in human somatic cells.</title>
        <authorList>
            <person name="Stolz A."/>
            <person name="Ertych N."/>
            <person name="Kienitz A."/>
            <person name="Vogel C."/>
            <person name="Schneider V."/>
            <person name="Fritz B."/>
            <person name="Jacob R."/>
            <person name="Dittmar G."/>
            <person name="Weichert W."/>
            <person name="Petersen I."/>
            <person name="Bastians H."/>
        </authorList>
    </citation>
    <scope>FUNCTION IN CHROMOSOMAL STABILITY</scope>
    <scope>PHOSPHORYLATION AT SER-988 BY CHEK2</scope>
</reference>
<reference key="54">
    <citation type="journal article" date="2010" name="Sci. Signal.">
        <title>Quantitative phosphoproteomics reveals widespread full phosphorylation site occupancy during mitosis.</title>
        <authorList>
            <person name="Olsen J.V."/>
            <person name="Vermeulen M."/>
            <person name="Santamaria A."/>
            <person name="Kumar C."/>
            <person name="Miller M.L."/>
            <person name="Jensen L.J."/>
            <person name="Gnad F."/>
            <person name="Cox J."/>
            <person name="Jensen T.S."/>
            <person name="Nigg E.A."/>
            <person name="Brunak S."/>
            <person name="Mann M."/>
        </authorList>
    </citation>
    <scope>PHOSPHORYLATION [LARGE SCALE ANALYSIS] AT SER-114; SER-423; SER-694; SER-1328; SER-1336 AND SER-1342</scope>
    <scope>IDENTIFICATION BY MASS SPECTROMETRY [LARGE SCALE ANALYSIS]</scope>
    <source>
        <tissue>Cervix carcinoma</tissue>
    </source>
</reference>
<reference key="55">
    <citation type="journal article" date="2011" name="Biochem. Biophys. Res. Commun.">
        <title>Protein phosphatase 5 is necessary for ATR-mediated DNA repair.</title>
        <authorList>
            <person name="Kang Y."/>
            <person name="Cheong H.M."/>
            <person name="Lee J.H."/>
            <person name="Song P.I."/>
            <person name="Lee K.H."/>
            <person name="Kim S.Y."/>
            <person name="Jun J.Y."/>
            <person name="You H.J."/>
        </authorList>
    </citation>
    <scope>PHOSPHORYLATION AT SER-1524</scope>
    <scope>SUBCELLULAR LOCATION</scope>
</reference>
<reference key="56">
    <citation type="journal article" date="2011" name="Mol. Cancer Res.">
        <title>KIAA0101 interacts with BRCA1 and regulates centrosome number.</title>
        <authorList>
            <person name="Kais Z."/>
            <person name="Barsky S.H."/>
            <person name="Mathsyaraja H."/>
            <person name="Zha A."/>
            <person name="Ransburgh D.J."/>
            <person name="He G."/>
            <person name="Pilarski R.T."/>
            <person name="Shapiro C.L."/>
            <person name="Huang K."/>
            <person name="Parvin J.D."/>
        </authorList>
    </citation>
    <scope>INTERACTION WITH PCLAF</scope>
</reference>
<reference key="57">
    <citation type="journal article" date="2011" name="Sci. Signal.">
        <title>System-wide temporal characterization of the proteome and phosphoproteome of human embryonic stem cell differentiation.</title>
        <authorList>
            <person name="Rigbolt K.T."/>
            <person name="Prokhorova T.A."/>
            <person name="Akimov V."/>
            <person name="Henningsen J."/>
            <person name="Johansen P.T."/>
            <person name="Kratchmarova I."/>
            <person name="Kassem M."/>
            <person name="Mann M."/>
            <person name="Olsen J.V."/>
            <person name="Blagoev B."/>
        </authorList>
    </citation>
    <scope>PHOSPHORYLATION [LARGE SCALE ANALYSIS] AT SER-114; SER-1218; SER-1336 AND SER-1342</scope>
    <scope>IDENTIFICATION BY MASS SPECTROMETRY [LARGE SCALE ANALYSIS]</scope>
</reference>
<reference key="58">
    <citation type="journal article" date="2012" name="Proc. Natl. Acad. Sci. U.S.A.">
        <title>N-terminal acetylome analyses and functional insights of the N-terminal acetyltransferase NatB.</title>
        <authorList>
            <person name="Van Damme P."/>
            <person name="Lasa M."/>
            <person name="Polevoda B."/>
            <person name="Gazquez C."/>
            <person name="Elosegui-Artola A."/>
            <person name="Kim D.S."/>
            <person name="De Juan-Pardo E."/>
            <person name="Demeyer K."/>
            <person name="Hole K."/>
            <person name="Larrea E."/>
            <person name="Timmerman E."/>
            <person name="Prieto J."/>
            <person name="Arnesen T."/>
            <person name="Sherman F."/>
            <person name="Gevaert K."/>
            <person name="Aldabe R."/>
        </authorList>
    </citation>
    <scope>ACETYLATION [LARGE SCALE ANALYSIS] AT MET-1</scope>
    <scope>IDENTIFICATION BY MASS SPECTROMETRY [LARGE SCALE ANALYSIS]</scope>
</reference>
<reference key="59">
    <citation type="journal article" date="2013" name="J. Proteome Res.">
        <title>Toward a comprehensive characterization of a human cancer cell phosphoproteome.</title>
        <authorList>
            <person name="Zhou H."/>
            <person name="Di Palma S."/>
            <person name="Preisinger C."/>
            <person name="Peng M."/>
            <person name="Polat A.N."/>
            <person name="Heck A.J."/>
            <person name="Mohammed S."/>
        </authorList>
    </citation>
    <scope>PHOSPHORYLATION [LARGE SCALE ANALYSIS] AT SER-114; SER-434; SER-551; SER-694; SER-708; SER-1009; SER-1189; SER-1191 AND SER-1542</scope>
    <scope>IDENTIFICATION BY MASS SPECTROMETRY [LARGE SCALE ANALYSIS]</scope>
    <source>
        <tissue>Cervix carcinoma</tissue>
        <tissue>Erythroleukemia</tissue>
    </source>
</reference>
<reference key="60">
    <citation type="journal article" date="2014" name="Nat. Struct. Mol. Biol.">
        <title>Uncovering global SUMOylation signaling networks in a site-specific manner.</title>
        <authorList>
            <person name="Hendriks I.A."/>
            <person name="D'Souza R.C."/>
            <person name="Yang B."/>
            <person name="Verlaan-de Vries M."/>
            <person name="Mann M."/>
            <person name="Vertegaal A.C."/>
        </authorList>
    </citation>
    <scope>SUMOYLATION [LARGE SCALE ANALYSIS] AT LYS-339; LYS-459; LYS-583; LYS-654; LYS-734 AND LYS-739</scope>
    <scope>IDENTIFICATION BY MASS SPECTROMETRY [LARGE SCALE ANALYSIS]</scope>
</reference>
<reference key="61">
    <citation type="journal article" date="2015" name="Mol. Cell. Proteomics">
        <title>System-wide analysis of SUMOylation dynamics in response to replication stress reveals novel small ubiquitin-like modified target proteins and acceptor lysines relevant for genome stability.</title>
        <authorList>
            <person name="Xiao Z."/>
            <person name="Chang J.G."/>
            <person name="Hendriks I.A."/>
            <person name="Sigurdsson J.O."/>
            <person name="Olsen J.V."/>
            <person name="Vertegaal A.C."/>
        </authorList>
    </citation>
    <scope>SUMOYLATION [LARGE SCALE ANALYSIS] AT LYS-339; LYS-443 AND LYS-583</scope>
    <scope>IDENTIFICATION BY MASS SPECTROMETRY [LARGE SCALE ANALYSIS]</scope>
</reference>
<reference key="62">
    <citation type="journal article" date="2016" name="Nat. Cell Biol.">
        <title>EXD2 promotes homologous recombination by facilitating DNA end resection.</title>
        <authorList>
            <person name="Broderick R."/>
            <person name="Nieminuszczy J."/>
            <person name="Baddock H.T."/>
            <person name="Deshpande R.A."/>
            <person name="Gileadi O."/>
            <person name="Paull T.T."/>
            <person name="McHugh P.J."/>
            <person name="Niedzwiedz W."/>
        </authorList>
    </citation>
    <scope>INTERACTION WITH EXD2</scope>
</reference>
<reference key="63">
    <citation type="journal article" date="2017" name="Nat. Struct. Mol. Biol.">
        <title>Site-specific mapping of the human SUMO proteome reveals co-modification with phosphorylation.</title>
        <authorList>
            <person name="Hendriks I.A."/>
            <person name="Lyon D."/>
            <person name="Young C."/>
            <person name="Jensen L.J."/>
            <person name="Vertegaal A.C."/>
            <person name="Nielsen M.L."/>
        </authorList>
    </citation>
    <scope>SUMOYLATION [LARGE SCALE ANALYSIS] AT LYS-109; LYS-301; LYS-339; LYS-443; LYS-459; LYS-519; LYS-583; LYS-918; LYS-987 AND LYS-1079</scope>
    <scope>IDENTIFICATION BY MASS SPECTROMETRY [LARGE SCALE ANALYSIS]</scope>
</reference>
<reference key="64">
    <citation type="journal article" date="2017" name="Oncogene">
        <title>Compromised BRCA1-PALB2 interaction is associated with breast cancer risk.</title>
        <authorList>
            <person name="Foo T.K."/>
            <person name="Tischkowitz M."/>
            <person name="Simhadri S."/>
            <person name="Boshari T."/>
            <person name="Zayed N."/>
            <person name="Burke K.A."/>
            <person name="Berman S.H."/>
            <person name="Blecua P."/>
            <person name="Riaz N."/>
            <person name="Huo Y."/>
            <person name="Ding Y.C."/>
            <person name="Neuhausen S.L."/>
            <person name="Weigelt B."/>
            <person name="Reis-Filho J.S."/>
            <person name="Foulkes W.D."/>
            <person name="Xia B."/>
        </authorList>
    </citation>
    <scope>INTERACTION WITH PALB2</scope>
</reference>
<reference key="65">
    <citation type="journal article" date="2021" name="Cell. Death. Discov.">
        <title>ZGRF1 promotes end resection of DNA homologous recombination via forming complex with BRCA1/EXO1.</title>
        <authorList>
            <person name="Yan S."/>
            <person name="Song M."/>
            <person name="Ping J."/>
            <person name="Lai S.T."/>
            <person name="Cao X.Y."/>
            <person name="Bai C.J."/>
            <person name="Xie D.F."/>
            <person name="Guan H."/>
            <person name="Gao S.S."/>
            <person name="Zhou P.K."/>
        </authorList>
    </citation>
    <scope>INTERACTION WITH ZGRF1</scope>
</reference>
<reference key="66">
    <citation type="journal article" date="2022" name="Cell. Death. Discov.">
        <authorList>
            <person name="Yan S."/>
            <person name="Song M."/>
            <person name="Ping J."/>
            <person name="Lai S.T."/>
            <person name="Cao X.Y."/>
            <person name="Bai C.J."/>
            <person name="Xie D.F."/>
            <person name="Guan H."/>
            <person name="Gao S.S."/>
            <person name="Zhou P.K."/>
        </authorList>
    </citation>
    <scope>ERRATUM OF PUBMED:34552057</scope>
</reference>
<reference key="67">
    <citation type="journal article" date="2001" name="Nat. Struct. Biol.">
        <title>Structure of a BRCA1-BARD1 heterodimeric RING-RING complex.</title>
        <authorList>
            <person name="Brzovic P.S."/>
            <person name="Rajagopal P."/>
            <person name="Hoyt D.W."/>
            <person name="King M.C."/>
            <person name="Klevit R.E."/>
        </authorList>
    </citation>
    <scope>STRUCTURE BY NMR OF 1-110 IN COMPLEX WITH ZINC IONS AND BARD1</scope>
    <scope>SUBUNIT</scope>
</reference>
<reference key="68">
    <citation type="journal article" date="2001" name="Nat. Struct. Biol.">
        <title>Crystal structure of the BRCT repeat region from the breast cancer-associated protein BRCA1.</title>
        <authorList>
            <person name="Williams R.S."/>
            <person name="Green R."/>
            <person name="Glover J.N."/>
        </authorList>
    </citation>
    <scope>X-RAY CRYSTALLOGRAPHY (2.5 ANGSTROMS) OF 1646-1859</scope>
    <scope>PARTIAL PROTEIN SEQUENCE</scope>
    <scope>IDENTIFICATION BY MASS SPECTROMETRY</scope>
</reference>
<reference key="69">
    <citation type="journal article" date="2003" name="J. Biol. Chem.">
        <title>Structural consequences of a cancer-causing BRCA1-BRCT missense mutation.</title>
        <authorList>
            <person name="Williams R.S."/>
            <person name="Glover J.N."/>
        </authorList>
    </citation>
    <scope>X-RAY CRYSTALLOGRAPHY (2.8 ANGSTROMS) OF 1646-1859 OF VARIANT BC ARG-1775</scope>
    <scope>CHARACTERIZATION OF VARIANT BC ARG-1775</scope>
    <scope>CIRCULAR DICHROISM</scope>
</reference>
<reference key="70">
    <citation type="journal article" date="2004" name="Biochemistry">
        <title>Solution structure, backbone dynamics, and association behavior of the C-terminal BRCT domain from the breast cancer-associated protein BRCA1.</title>
        <authorList>
            <person name="Gaiser O.J."/>
            <person name="Ball L.J."/>
            <person name="Schmieder P."/>
            <person name="Leitner D."/>
            <person name="Strauss H."/>
            <person name="Wahl M."/>
            <person name="Kuhne R."/>
            <person name="Oschkinat H."/>
            <person name="Heinemann U."/>
        </authorList>
    </citation>
    <scope>STRUCTURE BY NMR OF 1755-1863</scope>
</reference>
<reference key="71">
    <citation type="journal article" date="2004" name="Nat. Struct. Mol. Biol.">
        <title>Structure and mechanism of BRCA1 BRCT domain recognition of phosphorylated BACH1 with implications for cancer.</title>
        <authorList>
            <person name="Clapperton J.A."/>
            <person name="Manke I.A."/>
            <person name="Lowery D.M."/>
            <person name="Ho T."/>
            <person name="Haire L.F."/>
            <person name="Yaffe M.B."/>
            <person name="Smerdon S.J."/>
        </authorList>
    </citation>
    <scope>X-RAY CRYSTALLOGRAPHY (1.85 ANGSTROMS) OF 1649-1859 IN COMPLEX WITH PHOSPHORYLATED BRIP1 PEPTIDE</scope>
    <scope>MUTAGENESIS OF SER-1655; LYS-1702 AND GLY-1738</scope>
    <scope>CHARACTERIZATION OF VARIANT OVARIAN CANCER ARG-1749</scope>
    <scope>CHARACTERIZATION OF VARIANT BC ARG-1775</scope>
    <scope>SUBCELLULAR LOCATION</scope>
    <scope>INTERACTION WITH PHOSPHORYLATED BRIP1</scope>
</reference>
<reference key="72">
    <citation type="journal article" date="2005" name="Biochemistry">
        <title>Structural basis for cell cycle checkpoint control by the BRCA1-CtIP complex.</title>
        <authorList>
            <person name="Varma A.K."/>
            <person name="Brown R.S."/>
            <person name="Birrane G."/>
            <person name="Ladias J.A."/>
        </authorList>
    </citation>
    <scope>X-RAY CRYSTALLOGRAPHY (2.5 ANGSTROMS) OF 1646-1859 IN COMPLEX WITH PHOSPHORYLATED RBBP8 PEPTIDE</scope>
    <scope>SUBUNIT</scope>
</reference>
<reference key="73">
    <citation type="journal article" date="2008" name="Biochemistry">
        <title>Structural evidence for direct interactions between the BRCT domains of human BRCA1 and a phospho-peptide from human ACC1.</title>
        <authorList>
            <person name="Shen Y."/>
            <person name="Tong L."/>
        </authorList>
    </citation>
    <scope>X-RAY CRYSTALLOGRAPHY (3.21 ANGSTROMS) OF 1646-1859 IN COMPLEX WITH PHOSPHORYLATED ACACA PEPTIDE</scope>
    <scope>SUBUNIT</scope>
</reference>
<reference key="74">
    <citation type="journal article" date="2008" name="Eur. J. Hum. Genet.">
        <title>Pathogenicity of the BRCA1 missense variant M1775K is determined by the disruption of the BRCT phosphopeptide-binding pocket: a multi-modal approach.</title>
        <authorList>
            <person name="Tischkowitz M."/>
            <person name="Hamel N."/>
            <person name="Carvalho M.A."/>
            <person name="Birrane G."/>
            <person name="Soni A."/>
            <person name="van Beers E.H."/>
            <person name="Joosse S.A."/>
            <person name="Wong N."/>
            <person name="Novak D."/>
            <person name="Quenneville L.A."/>
            <person name="Grist S.A."/>
            <person name="Nederlof P.M."/>
            <person name="Goldgar D.E."/>
            <person name="Tavtigian S.V."/>
            <person name="Monteiro A.N."/>
            <person name="Ladias J.A."/>
            <person name="Foulkes W.D."/>
        </authorList>
    </citation>
    <scope>X-RAY CRYSTALLOGRAPHY (3.6 ANGSTROMS) OF 1649-1859 OF VARIANT BC LYS-1775</scope>
    <scope>VARIANT BC LYS-1775</scope>
    <scope>CHARACTERIZATION OF VARIANT BC LYS-1775</scope>
</reference>
<reference key="75">
    <citation type="journal article" date="2010" name="Structure">
        <title>Comparison of the structures and peptide binding specificities of the BRCT domains of MDC1 and BRCA1.</title>
        <authorList>
            <person name="Campbell S.J."/>
            <person name="Edwards R.A."/>
            <person name="Glover J.N."/>
        </authorList>
    </citation>
    <scope>X-RAY CRYSTALLOGRAPHY (2.7 ANGSTROMS) OF 1646-1859 IN COMPLEX WITH PHOSPHORYLATED PEPTIDES</scope>
    <scope>DOMAIN</scope>
</reference>
<reference key="76">
    <citation type="journal article" date="2011" name="Biochemistry">
        <title>Impact of BRCA1 BRCT domain missense substitutions on phosphopeptide recognition.</title>
        <authorList>
            <person name="Coquelle N."/>
            <person name="Green R."/>
            <person name="Glover J.N."/>
        </authorList>
    </citation>
    <scope>X-RAY CRYSTALLOGRAPHY (2.50 ANGSTROMS) OF 1646-1859 IN COMPLEX WITH PHOSPHORYLATED BRIP1 PEPTIDE</scope>
    <scope>INTERACTION WITH BRIP1</scope>
    <scope>MUTAGENESIS OF GLY-1656; THR-1700; ARG-1835 AND GLU-1836</scope>
    <scope>CHARACTERIZATION OF VARIANTS BC GLN-1699 AND TRP-1699</scope>
</reference>
<reference key="77">
    <citation type="journal article" date="2013" name="Acta Crystallogr. F">
        <title>Preliminary crystallographic studies of BRCA1 BRCT-ABRAXAS complex.</title>
        <authorList>
            <person name="Badgujar D.C."/>
            <person name="Sawant U."/>
            <person name="Vikrant X."/>
            <person name="Yadav L."/>
            <person name="Hosur M.V."/>
            <person name="Varma A.K."/>
        </authorList>
    </citation>
    <scope>X-RAY CRYSTALLOGRAPHY (3.50 ANGSTROMS) OF 1649-1859 IN COMPLEX WITH ABRAXAS1</scope>
    <scope>INTERACTION WITH ABRAXAS1</scope>
</reference>
<reference key="78">
    <citation type="journal article" date="2016" name="Mol. Cell">
        <title>Structure of BRCA1-BRCT/Abraxas complex reveals phosphorylation-dependent BRCT dimerization at DNA damage sites.</title>
        <authorList>
            <person name="Wu Q."/>
            <person name="Paul A."/>
            <person name="Su D."/>
            <person name="Mehmood S."/>
            <person name="Foo T.K."/>
            <person name="Ochi T."/>
            <person name="Bunting E.L."/>
            <person name="Xia B."/>
            <person name="Robinson C.V."/>
            <person name="Wang B."/>
            <person name="Blundell T.L."/>
        </authorList>
    </citation>
    <scope>X-RAY CRYSTALLOGRAPHY (2.50 ANGSTROMS) OF 1646-1859 IN COMPLEX WITH ABRAXAS1</scope>
    <scope>INTERACTION WITH ABRAXAS1</scope>
    <scope>SUBUNIT</scope>
    <scope>SUBCELLULAR LOCATION</scope>
    <scope>MUTAGENESIS OF PHE-1662; MET-1663; TYR-1666; ARG-1670 AND LYS-1671</scope>
</reference>
<reference key="79">
    <citation type="journal article" date="1996" name="Hum. Mutat.">
        <title>Mutations and polymorphisms in the familial early-onset breast cancer (BRCA1) gene.</title>
        <authorList>
            <person name="Couch F.J."/>
            <person name="Weber B.L."/>
        </authorList>
    </citation>
    <scope>REVIEW ON VARIANTS</scope>
</reference>
<reference key="80">
    <citation type="journal article" date="1994" name="Science">
        <title>BRCA1 mutations in primary breast and ovarian carcinomas.</title>
        <authorList>
            <person name="Futreal P.A."/>
            <person name="Liu Q."/>
            <person name="Shattuck-Eidens D."/>
            <person name="Cochran C."/>
            <person name="Harshman K."/>
            <person name="Tavtigian S."/>
            <person name="Bennett L.M."/>
            <person name="Haugen-Strano A."/>
            <person name="Swensen J."/>
            <person name="Miki Y."/>
            <person name="Eddington K."/>
            <person name="McClure M."/>
            <person name="Frye C."/>
            <person name="Weaver-Felhaus J."/>
            <person name="Ding W."/>
            <person name="Gholami Z."/>
            <person name="Soederkvist P."/>
            <person name="Terry L."/>
            <person name="Jhanwar S."/>
            <person name="Berchuk A."/>
            <person name="Iglehart J.D."/>
            <person name="Marks J."/>
            <person name="Ballinger D.G."/>
            <person name="Barrett J.C."/>
            <person name="Skolnick M.H."/>
            <person name="Kamb A."/>
            <person name="Wiseman R."/>
        </authorList>
    </citation>
    <scope>VARIANT BC ARG-1775</scope>
    <scope>VARIANTS LEU-1637 AND GLU-1708</scope>
</reference>
<reference key="81">
    <citation type="journal article" date="1994" name="Nat. Genet.">
        <title>Mutations in the BRCA1 gene in families with early-onset breast and ovarian cancer.</title>
        <authorList>
            <person name="Castilla L.H."/>
            <person name="Couch F.J."/>
            <person name="Erdos M.R."/>
            <person name="Hoskins K.F."/>
            <person name="Calzone K."/>
            <person name="Garber J.E."/>
            <person name="Boyd J."/>
            <person name="Lubin M.B."/>
            <person name="Deshano M.L."/>
            <person name="Brody L.C."/>
            <person name="Collins F.S."/>
            <person name="Weber B.L."/>
        </authorList>
    </citation>
    <scope>VARIANT BC GLY-64</scope>
    <scope>VARIANTS ALA-772; ASN-1040 AND GLY-1443</scope>
</reference>
<reference key="82">
    <citation type="journal article" date="1994" name="Nat. Genet.">
        <title>Confirmation of BRCA1 by analysis of germline mutations linked to breast and ovarian cancer in ten families.</title>
        <authorList>
            <person name="Friedman L.S."/>
            <person name="Ostermeyer E.A."/>
            <person name="Szabo C.I."/>
            <person name="Dowd P."/>
            <person name="Lynch E.D."/>
            <person name="Rowell S.E."/>
            <person name="King M.-C."/>
        </authorList>
    </citation>
    <scope>VARIANT BC GLY-61</scope>
    <scope>VARIANTS ARG-356; GLY-1038; ASN-1040; ARG-1183 AND GLY-1613</scope>
</reference>
<reference key="83">
    <citation type="journal article" date="1996" name="Am. J. Hum. Genet.">
        <title>A high incidence of BRCA1 mutations in 20 breast-ovarian cancer families.</title>
        <authorList>
            <person name="Serova O."/>
            <person name="Montagna M."/>
            <person name="Torchard D."/>
            <person name="Narod S.A."/>
            <person name="Tonin P."/>
            <person name="Sylla B."/>
            <person name="Lynch H.T."/>
            <person name="Feunteun J."/>
            <person name="Lenoir G.M."/>
        </authorList>
    </citation>
    <scope>VARIANT BC GLY-61</scope>
</reference>
<reference key="84">
    <citation type="journal article" date="1996" name="Genet. Epidemiol.">
        <title>BRCA1 R841W: a strong candidate for a common mutation with moderate phenotype.</title>
        <authorList>
            <person name="Barker D.F."/>
            <person name="Almeida E.F.A."/>
            <person name="Casey G."/>
            <person name="Fain P.R."/>
            <person name="Liao S.-Y."/>
            <person name="Masunaka I."/>
            <person name="Noble B."/>
            <person name="Kurosaki T."/>
            <person name="Anton-Culver H."/>
        </authorList>
    </citation>
    <scope>VARIANT BROVCA1 TRP-841</scope>
</reference>
<reference key="85">
    <citation type="journal article" date="1996" name="Hum. Mol. Genet.">
        <title>Comparison of BRCA1 polymorphisms, rare sequence variants and/or missense mutations in unaffected and breast/ovarian cancer populations.</title>
        <authorList>
            <person name="Durocher F."/>
            <person name="Shattuck-Eidens D."/>
            <person name="McClure M."/>
            <person name="Labrie F."/>
            <person name="Skolnick M.H."/>
            <person name="Goldgar D.E."/>
            <person name="Simard J."/>
        </authorList>
    </citation>
    <scope>VARIANTS BC AND BROVCA1</scope>
</reference>
<reference key="86">
    <citation type="journal article" date="1996" name="Hum. Mutat.">
        <title>Mutations in the BRCA1 gene in Japanese breast cancer patients.</title>
        <authorList>
            <person name="Katagiri T."/>
            <person name="Emi M."/>
            <person name="Ito I."/>
            <person name="Kobayashi K."/>
            <person name="Yoshimoto M."/>
            <person name="Iwase T."/>
            <person name="Kasumi F."/>
            <person name="Miki Y."/>
            <person name="Skolnick M.H."/>
            <person name="Nakamura Y."/>
        </authorList>
    </citation>
    <scope>VARIANTS BC MET-271 AND SER-1150</scope>
</reference>
<reference key="87">
    <citation type="journal article" date="1998" name="Hum. Genet.">
        <title>A high proportion of mutations in the BRCA1 gene in German breast/ovarian cancer families with clustering of mutations in the 3' third of the gene.</title>
        <authorList>
            <person name="Dong J."/>
            <person name="Chang-Claude J."/>
            <person name="Wu Y."/>
            <person name="Schumacher V."/>
            <person name="Debatin I."/>
            <person name="Tonin P."/>
            <person name="Royer-Pokora B."/>
        </authorList>
    </citation>
    <scope>VARIANT BC GLY-61</scope>
    <scope>VARIANTS ARG-239; TRP-841 AND ILE-1512</scope>
</reference>
<reference key="88">
    <citation type="journal article" date="1998" name="Hum. Mutat.">
        <title>Constant denaturant gel electrophoresis (CDGE) in BRCA1 mutation screening.</title>
        <authorList>
            <person name="Andersen T.I."/>
            <person name="Eiken H.G."/>
            <person name="Couch F."/>
            <person name="Kaada G."/>
            <person name="Skrede M."/>
            <person name="Johnsen H."/>
            <person name="Aloysius T.A."/>
            <person name="Tveit K.M."/>
            <person name="Tranebjaerg L."/>
            <person name="Doerum A."/>
            <person name="Moeller P."/>
            <person name="Weber B.L."/>
            <person name="Boerresen-Dale A.-L."/>
        </authorList>
    </citation>
    <scope>VARIANT BC GLY-64</scope>
    <scope>VARIANTS ALA-772; GLU-820; ASN-1040; GLY-1443; ILE-1512; LEU-1637 AND ILE-1652</scope>
</reference>
<reference key="89">
    <citation type="journal article" date="1998" name="J. Hum. Genet.">
        <title>High proportion of missense mutations of the BRCA1 and BRCA2 genes in Japanese breast cancer families.</title>
        <authorList>
            <person name="Katagiri T."/>
            <person name="Kasumi F."/>
            <person name="Yoshimoto M."/>
            <person name="Nomizu T."/>
            <person name="Asaishi K."/>
            <person name="Abe R."/>
            <person name="Tsuchiya A."/>
            <person name="Sugano M."/>
            <person name="Takai S."/>
            <person name="Yoneda M."/>
            <person name="Fukutomi T."/>
            <person name="Nanba K."/>
            <person name="Makita M."/>
            <person name="Okazaki H."/>
            <person name="Hirata K."/>
            <person name="Okazaki M."/>
            <person name="Furutsuma Y."/>
            <person name="Morishita Y."/>
            <person name="Iino Y."/>
            <person name="Karino T."/>
            <person name="Ayabe H."/>
            <person name="Hara S."/>
            <person name="Kajiwara T."/>
            <person name="Houga S."/>
            <person name="Shimizu T."/>
            <person name="Toda M."/>
            <person name="Yamazaki Y."/>
            <person name="Uchida T."/>
            <person name="Kunitomo K."/>
            <person name="Sonoo H."/>
            <person name="Kurebayashi J."/>
            <person name="Shimotsuma K."/>
            <person name="Nakamura Y."/>
            <person name="Miki Y."/>
        </authorList>
    </citation>
    <scope>VARIANTS BC SER-22; LEU-461; ASP-465; VAL-552; SER-892; ASP-960; ILE-1025 AND ALA-1047</scope>
</reference>
<reference key="90">
    <citation type="journal article" date="1999" name="Am. J. Hum. Genet.">
        <title>The contribution of germline BRCA1 and BRCA2 mutations to familial ovarian cancer: no evidence for other ovarian cancer-susceptibility genes.</title>
        <authorList>
            <person name="Gayther S.A."/>
            <person name="Russell P."/>
            <person name="Harrington P."/>
            <person name="Antoniou A.C."/>
            <person name="Easton D.F."/>
            <person name="Ponder B.A.J."/>
        </authorList>
    </citation>
    <scope>VARIANT OVARIAN CANCER ARG-1749</scope>
</reference>
<reference key="91">
    <citation type="journal article" date="1999" name="Hum. Genet.">
        <title>Molecular characterization of germline mutations in the BRCA1 and BRCA2 genes from breast cancer families in Taiwan.</title>
        <authorList>
            <person name="Li S.S.-L."/>
            <person name="Tseng H.-M."/>
            <person name="Yang T.-P."/>
            <person name="Liu C.-H."/>
            <person name="Teng S.-J."/>
            <person name="Huang H.-W."/>
            <person name="Chen L.-M."/>
            <person name="Kao H.-W."/>
            <person name="Chen J.H."/>
            <person name="Tseng J.-N."/>
            <person name="Chen A."/>
            <person name="Hou M.-F."/>
            <person name="Huang T.-J."/>
            <person name="Chang H.-T."/>
            <person name="Mok K.-T."/>
            <person name="Tsai J.-H."/>
        </authorList>
    </citation>
    <scope>VARIANT BC SER-346</scope>
    <scope>VARIANTS LEU-871; GLY-1038; ARG-1183 AND GLY-1613</scope>
</reference>
<reference key="92">
    <citation type="journal article" date="1999" name="Hum. Mol. Genet.">
        <title>Germline BRCA1 alterations in a population-based series of ovarian cancer cases.</title>
        <authorList>
            <person name="Janezic S.A."/>
            <person name="Ziogas A."/>
            <person name="Krumroy L.M."/>
            <person name="Krasner M."/>
            <person name="Plummer S.J."/>
            <person name="Cohen P."/>
            <person name="Gildea M."/>
            <person name="Barker D."/>
            <person name="Haile R."/>
            <person name="Casey G."/>
            <person name="Anton-Culver H."/>
        </authorList>
    </citation>
    <scope>VARIANT OVARIAN CANCER LYS-227; PRO-1641; ASN-1692; SER-1776 AND SER-1812</scope>
</reference>
<reference key="93">
    <citation type="journal article" date="2002" name="Genet. Test.">
        <title>Characterization of common BRCA1 and BRCA2 variants.</title>
        <authorList>
            <person name="Deffenbaugh A.M."/>
            <person name="Frank T.S."/>
            <person name="Hoffman M."/>
            <person name="Cannon-Albright L."/>
            <person name="Neuhausen S.L."/>
        </authorList>
    </citation>
    <scope>VARIANTS GLY-1347; ILE-1512 AND ILE-1652</scope>
</reference>
<reference key="94">
    <citation type="journal article" date="2002" name="Hum. Mutat.">
        <title>BRCA1 and BRCA2 sequence variants in Chinese breast cancer families.</title>
        <authorList>
            <person name="Zhi X."/>
            <person name="Szabo C."/>
            <person name="Chopin S."/>
            <person name="Suter N."/>
            <person name="Wang Q.-S."/>
            <person name="Ostrander E.A."/>
            <person name="Sinilnikova O.M."/>
            <person name="Lenoir G.M."/>
            <person name="Goldgar D."/>
            <person name="Shi Y.-R."/>
        </authorList>
    </citation>
    <scope>VARIANTS ILE-656; LEU-871 AND GLY-1613</scope>
</reference>
<reference key="95">
    <citation type="journal article" date="2002" name="Hum. Mutat.">
        <title>BRCA1 and BRCA2 mutation analysis of early-onset and familial breast cancer cases in Mexico.</title>
        <authorList>
            <person name="Ruiz-Flores P."/>
            <person name="Sinilnikova O.M."/>
            <person name="Badzioch M."/>
            <person name="Calderon-Garciduenas A.L."/>
            <person name="Chopin S."/>
            <person name="Fabrice O."/>
            <person name="Gonzalez-Guerrero J.F."/>
            <person name="Szabo C."/>
            <person name="Lenoir G."/>
            <person name="Goldgar D.E."/>
            <person name="Barrera-Saldana H.A."/>
        </authorList>
    </citation>
    <scope>VARIANT BC TYR-749</scope>
</reference>
<reference key="96">
    <citation type="journal article" date="2003" name="Hum. Mutat.">
        <title>Twenty-three novel BRCA1 and BRCA2 sequence alterations in breast and/or ovarian cancer families in Southern Germany.</title>
        <authorList>
            <person name="Meyer P."/>
            <person name="Voigtlaender T."/>
            <person name="Bartram C.R."/>
            <person name="Klaes R."/>
        </authorList>
    </citation>
    <scope>VARIANTS BC GLY-61; LYS-71; GLN-866; TYR-888; ILE-1139; GLY-1210 AND PRO-1297</scope>
    <scope>VARIANTS BROVCA1 TYR-835 AND PRO-1786</scope>
</reference>
<reference key="97">
    <citation type="journal article" date="2004" name="Br. J. Cancer">
        <title>BRCA1 and BRCA2 germline mutation spectrum and frequencies in Belgian breast/ovarian cancer families.</title>
        <authorList>
            <person name="Claes K."/>
            <person name="Poppe B."/>
            <person name="Coene I."/>
            <person name="De Paepe A."/>
            <person name="Messiaen L."/>
        </authorList>
    </citation>
    <scope>VARIANTS ASN-693; ASN-1040; ALA-1060 AND MET-1665</scope>
</reference>
<reference key="98">
    <citation type="journal article" date="2004" name="Eur. J. Cancer">
        <title>One in 10 ovarian cancer patients carry germ line BRCA1 or BRCA2 mutations: results of a prospective study in Southern Sweden.</title>
        <authorList>
            <person name="Malander S."/>
            <person name="Ridderheim M."/>
            <person name="Masbaeck A."/>
            <person name="Loman N."/>
            <person name="Kristoffersson U."/>
            <person name="Olsson H."/>
            <person name="Nilbert M."/>
            <person name="Borg A."/>
        </authorList>
    </citation>
    <scope>VARIANTS OC GLY-61; THR-1411; ARG-1697 AND TRP-1699</scope>
</reference>
<reference key="99">
    <citation type="journal article" date="2004" name="Hum. Mutat.">
        <title>Novel germline mutations in the BRCA1 and BRCA2 genes in Indian breast and breast-ovarian cancer families.</title>
        <authorList>
            <person name="Valarmathi M.T."/>
            <person name="Sawhney M."/>
            <person name="Deo S.S.V."/>
            <person name="Shukla N.K."/>
            <person name="Das S.N."/>
        </authorList>
    </citation>
    <scope>VARIANTS BC/BROVCA1 LYS-10; LYS-23; ILE-1187; HIS-1200 AND TYR-1217</scope>
    <scope>VARIANTS BC ILE-1204 AND ASN-1207</scope>
    <scope>VARIANTS BROVCA1 LEU-1226 AND GLY-1243</scope>
    <scope>VARIANT ARG-1183</scope>
</reference>
<reference key="100">
    <citation type="journal article" date="2004" name="Hum. Mutat.">
        <title>BRCA1 and BRCA2 germline mutations in Korean patients with sporadic breast cancer.</title>
        <authorList>
            <person name="Seo J.H."/>
            <person name="Cho D.-Y."/>
            <person name="Ahn S.-H."/>
            <person name="Yoon K.-S."/>
            <person name="Kang C.-S."/>
            <person name="Cho H.M."/>
            <person name="Lee H.S."/>
            <person name="Choe J.J."/>
            <person name="Choi C.W."/>
            <person name="Kim B.S."/>
            <person name="Shin S.W."/>
            <person name="Kim Y.H."/>
            <person name="Kim J.S."/>
            <person name="Son G.-S."/>
            <person name="Lee J.-B."/>
            <person name="Koo B.H."/>
        </authorList>
    </citation>
    <scope>VARIANTS HIS-856; LEU-871; GLY-1038; ARG-1183; THR-1628; GLN-1690 AND GLY-1713</scope>
</reference>
<reference key="101">
    <citation type="journal article" date="2006" name="Science">
        <title>The consensus coding sequences of human breast and colorectal cancers.</title>
        <authorList>
            <person name="Sjoeblom T."/>
            <person name="Jones S."/>
            <person name="Wood L.D."/>
            <person name="Parsons D.W."/>
            <person name="Lin J."/>
            <person name="Barber T.D."/>
            <person name="Mandelker D."/>
            <person name="Leary R.J."/>
            <person name="Ptak J."/>
            <person name="Silliman N."/>
            <person name="Szabo S."/>
            <person name="Buckhaults P."/>
            <person name="Farrell C."/>
            <person name="Meeh P."/>
            <person name="Markowitz S.D."/>
            <person name="Willis J."/>
            <person name="Dawson D."/>
            <person name="Willson J.K.V."/>
            <person name="Gazdar A.F."/>
            <person name="Hartigan J."/>
            <person name="Wu L."/>
            <person name="Liu C."/>
            <person name="Parmigiani G."/>
            <person name="Park B.H."/>
            <person name="Bachman K.E."/>
            <person name="Papadopoulos N."/>
            <person name="Vogelstein B."/>
            <person name="Kinzler K.W."/>
            <person name="Velculescu V.E."/>
        </authorList>
    </citation>
    <scope>VARIANTS [LARGE SCALE ANALYSIS] PHE-30; PHE-758 AND CYS-778</scope>
</reference>
<reference key="102">
    <citation type="journal article" date="2007" name="Am. J. Hum. Genet.">
        <title>A systematic genetic assessment of 1,433 sequence variants of unknown clinical significance in the BRCA1 and BRCA2 breast cancer-predisposition genes.</title>
        <authorList>
            <person name="Easton D.F."/>
            <person name="Deffenbaugh A.M."/>
            <person name="Pruss D."/>
            <person name="Frye C."/>
            <person name="Wenstrup R.J."/>
            <person name="Allen-Brady K."/>
            <person name="Tavtigian S.V."/>
            <person name="Monteiro A.N.A."/>
            <person name="Iversen E.S."/>
            <person name="Couch F.J."/>
            <person name="Goldgar D.E."/>
        </authorList>
    </citation>
    <scope>VARIANTS THR-18; MET-1495; ALA-1685; ARG-1689; TRP-1699; GLU-1706; GLU-1708; ARG-1715; ARG-1738; PRO-1764; SER-1766 AND VAL-1788</scope>
    <scope>VARIANTS BROVCA1 GLY-1623 AND ILE-1685</scope>
</reference>
<reference key="103">
    <citation type="journal article" date="2010" name="Hum. Mutat.">
        <title>Detection of splicing aberrations caused by BRCA1 and BRCA2 sequence variants encoding missense substitutions: implications for prediction of pathogenicity.</title>
        <authorList>
            <person name="Walker L.C."/>
            <person name="Whiley P.J."/>
            <person name="Couch F.J."/>
            <person name="Farrugia D.J."/>
            <person name="Healey S."/>
            <person name="Eccles D.M."/>
            <person name="Lin F."/>
            <person name="Butler S.A."/>
            <person name="Goff S.A."/>
            <person name="Thompson B.A."/>
            <person name="Lakhani S.R."/>
            <person name="Da Silva L.M."/>
            <person name="Tavtigian S.V."/>
            <person name="Goldgar D.E."/>
            <person name="Brown M.A."/>
            <person name="Spurdle A.B."/>
        </authorList>
    </citation>
    <scope>CHARACTERIZATION OF VARIANT ILE-1685</scope>
    <scope>CHARACTERIZATION OF VARIANT BROVCA1 GLY-1623</scope>
</reference>
<reference key="104">
    <citation type="journal article" date="2013" name="Cancer Discov.">
        <title>Biallelic deleterious BRCA1 mutations in a woman with early-onset ovarian cancer.</title>
        <authorList>
            <person name="Domchek S.M."/>
            <person name="Tang J."/>
            <person name="Stopfer J."/>
            <person name="Lilli D.R."/>
            <person name="Hamel N."/>
            <person name="Tischkowitz M."/>
            <person name="Monteiro A.N."/>
            <person name="Messick T.E."/>
            <person name="Powers J."/>
            <person name="Yonker A."/>
            <person name="Couch F.J."/>
            <person name="Goldgar D.E."/>
            <person name="Davidson H.R."/>
            <person name="Nathanson K.L."/>
            <person name="Foulkes W.D."/>
            <person name="Greenberg R.A."/>
        </authorList>
    </citation>
    <scope>VARIANT FANCS ALA-1736</scope>
    <scope>CHARACTERIZATION OF VARIANT FANCS ALA-1736</scope>
    <scope>SUBCELLULAR LOCATION</scope>
    <scope>INTERACTION WITH UIMC1</scope>
</reference>
<reference key="105">
    <citation type="journal article" date="2013" name="Cancer Discov.">
        <title>A high-throughput functional complementation assay for classification of BRCA1 missense variants.</title>
        <authorList>
            <person name="Bouwman P."/>
            <person name="van der Gulden H."/>
            <person name="van der Heijden I."/>
            <person name="Drost R."/>
            <person name="Klijn C.N."/>
            <person name="Prasetyanti P."/>
            <person name="Pieterse M."/>
            <person name="Wientjens E."/>
            <person name="Seibler J."/>
            <person name="Hogervorst F.B."/>
            <person name="Jonkers J."/>
        </authorList>
    </citation>
    <scope>CHARACTERIZATION OF VARIANTS BC PHE-4; THR-18; GLN-45; GLY-61; GLY-64; TYR-67; LYS-132; HIS-142; PHE-147; PRO-165; TRP-170; TYR-186; ILE-191; MET-231; VAL-245; VAL-246; LEU-271; PHE-668; ASN-695; LEU-798; TYR-810; LYS-826; GLN-841; HIS-856; ASN-1101; ASN-1140; GLY-1140; LYS-1214; LYS-1236; SER-1267; VAL-1282; SER-1297 DEL; ARG-1301; LYS-1346; ILE-1378; VAL-1400; PRO-1407; THR-1411; GLY-1443; GLY-1448; CYS-1486; MET-1534; PRO-1589; THR-1628; PRO-1651; PHE-1651; PHE-1655; ARG-1686; GLN-1686; VAL-1688 DEL; ILE-1691; TRP-1699; GLN-1699; GLU-1706; ALA-1706; GLU-1708; CYS-1718; ALA-1720; LYS-1735; ALA-1736; GLY-1739; VAL-1739; GLN-1746; THR-1753; PRO-1764; SER-1767; VAL-1770; CYS-1782; THR-1789; ASP-1794; ASP-1804; ARG-1812; ARG-1837 AND LEU-1862</scope>
    <scope>VARIANTS CYS-105; CYS-866; ALA-1060; LYS-1250 AND ILE-1652</scope>
</reference>
<reference key="106">
    <citation type="journal article" date="2015" name="Cancer Discov.">
        <title>Biallelic mutations in BRCA1 cause a new Fanconi anemia subtype.</title>
        <authorList>
            <consortium name="University of Washington Centre for Mendelian Genomics"/>
            <consortium name="FORGE Canada Consortium"/>
            <person name="Sawyer S.L."/>
            <person name="Tian L."/>
            <person name="Kaehkoenen M."/>
            <person name="Schwartzentruber J."/>
            <person name="Kircher M."/>
            <person name="Majewski J."/>
            <person name="Dyment D.A."/>
            <person name="Innes A.M."/>
            <person name="Boycott K.M."/>
            <person name="Moreau L.A."/>
            <person name="Moilanen J.S."/>
            <person name="Greenberg R.A."/>
        </authorList>
    </citation>
    <scope>VARIANT FANCS TRP-1699</scope>
    <scope>SUBCELLULAR LOCATION</scope>
</reference>
<reference key="107">
    <citation type="journal article" date="2017" name="Breast">
        <title>Suggestion of BRCA1 c.5339T&gt;C (p.L1780P) variant confer from 'unknown significance' to 'Likely pathogenic' based on clinical evidence in Korea.</title>
        <authorList>
            <person name="Ryu J.M."/>
            <person name="Kang G."/>
            <person name="Nam S.J."/>
            <person name="Kim S.W."/>
            <person name="Yu J."/>
            <person name="Lee S.K."/>
            <person name="Bae S.Y."/>
            <person name="Park S."/>
            <person name="Paik H.J."/>
            <person name="Kim J.W."/>
            <person name="Park S.S."/>
            <person name="Lee J.E."/>
            <person name="Kim S.W."/>
        </authorList>
    </citation>
    <scope>VARIANT BC PRO-1780</scope>
    <scope>VARIANT BROVCA1 PRO-1780</scope>
    <scope>VARIANT OC PRO-1780</scope>
</reference>
<reference key="108">
    <citation type="journal article" date="2018" name="Eur. J. Med. Genet.">
        <title>Homozygous loss of function BRCA1 variant causing a Fanconi-anemia-like phenotype, a clinical report and review of previous patients.</title>
        <authorList>
            <person name="Freire B.L."/>
            <person name="Homma T.K."/>
            <person name="Funari M.F.A."/>
            <person name="Lerario A.M."/>
            <person name="Leal A.M."/>
            <person name="Velloso E.D.R.P."/>
            <person name="Malaquias A.C."/>
            <person name="Jorge A.A.L."/>
        </authorList>
    </citation>
    <scope>VARIANT FANCS 903-CYS--TYR-1863 DEL</scope>
</reference>
<gene>
    <name type="primary">BRCA1</name>
    <name type="synonym">RNF53</name>
</gene>
<protein>
    <recommendedName>
        <fullName>Breast cancer type 1 susceptibility protein</fullName>
        <ecNumber evidence="8 26 27 42 48 58">2.3.2.27</ecNumber>
    </recommendedName>
    <alternativeName>
        <fullName>RING finger protein 53</fullName>
    </alternativeName>
    <alternativeName>
        <fullName evidence="95">RING-type E3 ubiquitin transferase BRCA1</fullName>
    </alternativeName>
</protein>